<proteinExistence type="evidence at protein level"/>
<evidence type="ECO:0000250" key="1">
    <source>
        <dbReference type="UniProtKB" id="Q8R0I0"/>
    </source>
</evidence>
<evidence type="ECO:0000255" key="2"/>
<evidence type="ECO:0000255" key="3">
    <source>
        <dbReference type="PROSITE-ProRule" id="PRU01354"/>
    </source>
</evidence>
<evidence type="ECO:0000255" key="4">
    <source>
        <dbReference type="PROSITE-ProRule" id="PRU01355"/>
    </source>
</evidence>
<evidence type="ECO:0000256" key="5">
    <source>
        <dbReference type="SAM" id="MobiDB-lite"/>
    </source>
</evidence>
<evidence type="ECO:0000269" key="6">
    <source>
    </source>
</evidence>
<evidence type="ECO:0000269" key="7">
    <source>
    </source>
</evidence>
<evidence type="ECO:0000269" key="8">
    <source>
    </source>
</evidence>
<evidence type="ECO:0000269" key="9">
    <source>
    </source>
</evidence>
<evidence type="ECO:0000269" key="10">
    <source>
    </source>
</evidence>
<evidence type="ECO:0000269" key="11">
    <source>
    </source>
</evidence>
<evidence type="ECO:0000269" key="12">
    <source>
    </source>
</evidence>
<evidence type="ECO:0000269" key="13">
    <source>
    </source>
</evidence>
<evidence type="ECO:0000269" key="14">
    <source>
    </source>
</evidence>
<evidence type="ECO:0000269" key="15">
    <source>
    </source>
</evidence>
<evidence type="ECO:0000269" key="16">
    <source>
    </source>
</evidence>
<evidence type="ECO:0000269" key="17">
    <source>
    </source>
</evidence>
<evidence type="ECO:0000269" key="18">
    <source>
    </source>
</evidence>
<evidence type="ECO:0000269" key="19">
    <source>
    </source>
</evidence>
<evidence type="ECO:0000269" key="20">
    <source>
    </source>
</evidence>
<evidence type="ECO:0000269" key="21">
    <source>
    </source>
</evidence>
<evidence type="ECO:0000269" key="22">
    <source>
    </source>
</evidence>
<evidence type="ECO:0000269" key="23">
    <source>
    </source>
</evidence>
<evidence type="ECO:0000269" key="24">
    <source>
    </source>
</evidence>
<evidence type="ECO:0000269" key="25">
    <source>
    </source>
</evidence>
<evidence type="ECO:0000269" key="26">
    <source>
    </source>
</evidence>
<evidence type="ECO:0000269" key="27">
    <source>
    </source>
</evidence>
<evidence type="ECO:0000269" key="28">
    <source>
    </source>
</evidence>
<evidence type="ECO:0000269" key="29">
    <source>
    </source>
</evidence>
<evidence type="ECO:0000269" key="30">
    <source>
    </source>
</evidence>
<evidence type="ECO:0000269" key="31">
    <source>
    </source>
</evidence>
<evidence type="ECO:0000269" key="32">
    <source>
    </source>
</evidence>
<evidence type="ECO:0000269" key="33">
    <source>
    </source>
</evidence>
<evidence type="ECO:0000269" key="34">
    <source>
    </source>
</evidence>
<evidence type="ECO:0000269" key="35">
    <source>
    </source>
</evidence>
<evidence type="ECO:0000269" key="36">
    <source>
    </source>
</evidence>
<evidence type="ECO:0000269" key="37">
    <source>
    </source>
</evidence>
<evidence type="ECO:0000269" key="38">
    <source>
    </source>
</evidence>
<evidence type="ECO:0000269" key="39">
    <source>
    </source>
</evidence>
<evidence type="ECO:0000269" key="40">
    <source>
    </source>
</evidence>
<evidence type="ECO:0000269" key="41">
    <source>
    </source>
</evidence>
<evidence type="ECO:0000269" key="42">
    <source>
    </source>
</evidence>
<evidence type="ECO:0000269" key="43">
    <source>
    </source>
</evidence>
<evidence type="ECO:0000269" key="44">
    <source>
    </source>
</evidence>
<evidence type="ECO:0000269" key="45">
    <source>
    </source>
</evidence>
<evidence type="ECO:0000269" key="46">
    <source>
    </source>
</evidence>
<evidence type="ECO:0000269" key="47">
    <source>
    </source>
</evidence>
<evidence type="ECO:0000269" key="48">
    <source>
    </source>
</evidence>
<evidence type="ECO:0000269" key="49">
    <source>
    </source>
</evidence>
<evidence type="ECO:0000269" key="50">
    <source>
    </source>
</evidence>
<evidence type="ECO:0000269" key="51">
    <source>
    </source>
</evidence>
<evidence type="ECO:0000269" key="52">
    <source>
    </source>
</evidence>
<evidence type="ECO:0000269" key="53">
    <source>
    </source>
</evidence>
<evidence type="ECO:0000269" key="54">
    <source>
    </source>
</evidence>
<evidence type="ECO:0000269" key="55">
    <source>
    </source>
</evidence>
<evidence type="ECO:0000269" key="56">
    <source>
    </source>
</evidence>
<evidence type="ECO:0000269" key="57">
    <source>
    </source>
</evidence>
<evidence type="ECO:0000269" key="58">
    <source>
    </source>
</evidence>
<evidence type="ECO:0000269" key="59">
    <source>
    </source>
</evidence>
<evidence type="ECO:0000269" key="60">
    <source>
    </source>
</evidence>
<evidence type="ECO:0000269" key="61">
    <source>
    </source>
</evidence>
<evidence type="ECO:0000269" key="62">
    <source>
    </source>
</evidence>
<evidence type="ECO:0000269" key="63">
    <source>
    </source>
</evidence>
<evidence type="ECO:0000269" key="64">
    <source>
    </source>
</evidence>
<evidence type="ECO:0000269" key="65">
    <source ref="10"/>
</evidence>
<evidence type="ECO:0000303" key="66">
    <source>
    </source>
</evidence>
<evidence type="ECO:0000303" key="67">
    <source>
    </source>
</evidence>
<evidence type="ECO:0000303" key="68">
    <source>
    </source>
</evidence>
<evidence type="ECO:0000303" key="69">
    <source>
    </source>
</evidence>
<evidence type="ECO:0000303" key="70">
    <source>
    </source>
</evidence>
<evidence type="ECO:0000303" key="71">
    <source ref="6"/>
</evidence>
<evidence type="ECO:0000305" key="72"/>
<evidence type="ECO:0000305" key="73">
    <source>
    </source>
</evidence>
<evidence type="ECO:0000305" key="74">
    <source>
    </source>
</evidence>
<evidence type="ECO:0000305" key="75">
    <source>
    </source>
</evidence>
<evidence type="ECO:0000305" key="76">
    <source>
    </source>
</evidence>
<evidence type="ECO:0000305" key="77">
    <source>
    </source>
</evidence>
<evidence type="ECO:0000305" key="78">
    <source>
    </source>
</evidence>
<evidence type="ECO:0000305" key="79">
    <source>
    </source>
</evidence>
<evidence type="ECO:0000305" key="80">
    <source>
    </source>
</evidence>
<evidence type="ECO:0000305" key="81">
    <source>
    </source>
</evidence>
<evidence type="ECO:0000312" key="82">
    <source>
        <dbReference type="EMBL" id="QLP88822.1"/>
    </source>
</evidence>
<evidence type="ECO:0000312" key="83">
    <source>
        <dbReference type="HGNC" id="HGNC:13557"/>
    </source>
</evidence>
<evidence type="ECO:0007744" key="84">
    <source>
        <dbReference type="PDB" id="1R42"/>
    </source>
</evidence>
<evidence type="ECO:0007744" key="85">
    <source>
        <dbReference type="PDB" id="1R4L"/>
    </source>
</evidence>
<evidence type="ECO:0007744" key="86">
    <source>
        <dbReference type="PDB" id="2AJF"/>
    </source>
</evidence>
<evidence type="ECO:0007744" key="87">
    <source>
        <dbReference type="PDB" id="3KBH"/>
    </source>
</evidence>
<evidence type="ECO:0007744" key="88">
    <source>
        <dbReference type="PDB" id="6ACG"/>
    </source>
</evidence>
<evidence type="ECO:0007744" key="89">
    <source>
        <dbReference type="PDB" id="6ACJ"/>
    </source>
</evidence>
<evidence type="ECO:0007744" key="90">
    <source>
        <dbReference type="PDB" id="6ACK"/>
    </source>
</evidence>
<evidence type="ECO:0007744" key="91">
    <source>
        <dbReference type="PDB" id="6CS2"/>
    </source>
</evidence>
<evidence type="ECO:0007744" key="92">
    <source>
        <dbReference type="PDB" id="6M0J"/>
    </source>
</evidence>
<evidence type="ECO:0007744" key="93">
    <source>
        <dbReference type="PDB" id="6M17"/>
    </source>
</evidence>
<evidence type="ECO:0007744" key="94">
    <source>
        <dbReference type="PDB" id="6M18"/>
    </source>
</evidence>
<evidence type="ECO:0007744" key="95">
    <source>
        <dbReference type="PDB" id="6M1D"/>
    </source>
</evidence>
<evidence type="ECO:0007744" key="96">
    <source>
        <dbReference type="PDB" id="6VW1"/>
    </source>
</evidence>
<evidence type="ECO:0007829" key="97">
    <source>
        <dbReference type="PDB" id="1R42"/>
    </source>
</evidence>
<evidence type="ECO:0007829" key="98">
    <source>
        <dbReference type="PDB" id="3D0G"/>
    </source>
</evidence>
<evidence type="ECO:0007829" key="99">
    <source>
        <dbReference type="PDB" id="6M17"/>
    </source>
</evidence>
<evidence type="ECO:0007829" key="100">
    <source>
        <dbReference type="PDB" id="6M18"/>
    </source>
</evidence>
<evidence type="ECO:0007829" key="101">
    <source>
        <dbReference type="PDB" id="7V8A"/>
    </source>
</evidence>
<evidence type="ECO:0007829" key="102">
    <source>
        <dbReference type="PDB" id="7WPA"/>
    </source>
</evidence>
<evidence type="ECO:0007829" key="103">
    <source>
        <dbReference type="PDB" id="7WPC"/>
    </source>
</evidence>
<evidence type="ECO:0007829" key="104">
    <source>
        <dbReference type="PDB" id="7YR2"/>
    </source>
</evidence>
<evidence type="ECO:0007829" key="105">
    <source>
        <dbReference type="PDB" id="8B9P"/>
    </source>
</evidence>
<evidence type="ECO:0007829" key="106">
    <source>
        <dbReference type="PDB" id="8BFW"/>
    </source>
</evidence>
<evidence type="ECO:0007829" key="107">
    <source>
        <dbReference type="PDB" id="8BYJ"/>
    </source>
</evidence>
<evidence type="ECO:0007829" key="108">
    <source>
        <dbReference type="PDB" id="8JJE"/>
    </source>
</evidence>
<evidence type="ECO:0007829" key="109">
    <source>
        <dbReference type="PDB" id="8WP8"/>
    </source>
</evidence>
<evidence type="ECO:0007829" key="110">
    <source>
        <dbReference type="PDB" id="8XN3"/>
    </source>
</evidence>
<evidence type="ECO:0007829" key="111">
    <source>
        <dbReference type="PDB" id="8XSF"/>
    </source>
</evidence>
<reference key="1">
    <citation type="journal article" date="2000" name="Circ. Res.">
        <title>A novel angiotensin-converting enzyme-related carboxypeptidase (ACE2) converts angiotensin I to angiotensin 1-9.</title>
        <authorList>
            <person name="Donoghue M."/>
            <person name="Hsieh F."/>
            <person name="Baronas E."/>
            <person name="Godbout K."/>
            <person name="Gosselin M."/>
            <person name="Stagliano N."/>
            <person name="Donovan M."/>
            <person name="Woolf B."/>
            <person name="Robison K."/>
            <person name="Jeyaseelan R."/>
            <person name="Breitbart R.E."/>
            <person name="Acton S."/>
        </authorList>
    </citation>
    <scope>NUCLEOTIDE SEQUENCE [MRNA]</scope>
    <scope>TISSUE SPECIFICITY</scope>
    <scope>FUNCTION</scope>
    <scope>ACTIVITY REGULATION</scope>
    <scope>CATALYTIC ACTIVITY</scope>
    <scope>SUBSTRATE SPECIFICITY</scope>
    <source>
        <tissue>Heart</tissue>
    </source>
</reference>
<reference key="2">
    <citation type="journal article" date="2000" name="J. Biol. Chem.">
        <title>A human homolog of angiotensin-converting enzyme. Cloning and functional expression as a captopril-insensitive carboxypeptidase.</title>
        <authorList>
            <person name="Tipnis S.R."/>
            <person name="Hooper N.M."/>
            <person name="Hyde R."/>
            <person name="Karran E."/>
            <person name="Christie G."/>
            <person name="Turner A.J."/>
        </authorList>
    </citation>
    <scope>NUCLEOTIDE SEQUENCE [MRNA]</scope>
    <scope>TISSUE SPECIFICITY</scope>
    <scope>GLYCOSYLATION</scope>
    <scope>FUNCTION</scope>
    <scope>ACTIVITY REGULATION</scope>
    <scope>CATALYTIC ACTIVITY</scope>
    <source>
        <tissue>Lymphoma</tissue>
    </source>
</reference>
<reference key="3">
    <citation type="journal article" date="2004" name="Endocrinology">
        <title>The novel angiotensin-converting enzyme (ACE) homolog, ACE2, is selectively expressed by adult Leydig cells of the testis.</title>
        <authorList>
            <person name="Douglas G.C."/>
            <person name="O'Bryan M.K."/>
            <person name="Hedger M.P."/>
            <person name="Lee D.K.L."/>
            <person name="Yarski M.A."/>
            <person name="Smith A.I."/>
            <person name="Lew R.A."/>
        </authorList>
    </citation>
    <scope>NUCLEOTIDE SEQUENCE [MRNA]</scope>
    <scope>ACTIVITY REGULATION</scope>
    <scope>SUBCELLULAR LOCATION</scope>
    <scope>TISSUE SPECIFICITY</scope>
    <source>
        <tissue>Testis</tissue>
    </source>
</reference>
<reference key="4">
    <citation type="journal article" date="2005" name="Am. J. Med. Genet. A">
        <title>Identification of an alternative 5'-untranslated exon and new polymorphisms of angiotensin-converting enzyme 2 gene: lack of association with SARS in the Vietnamese population.</title>
        <authorList>
            <person name="Itoyama S."/>
            <person name="Keicho N."/>
            <person name="Hijikata M."/>
            <person name="Quy T."/>
            <person name="Phi N.C."/>
            <person name="Long H.T."/>
            <person name="Ha L.D."/>
            <person name="Ban V.V."/>
            <person name="Matsushita I."/>
            <person name="Yanai H."/>
            <person name="Kirikae F."/>
            <person name="Kirikae T."/>
            <person name="Kuratsuji T."/>
            <person name="Sasazuki T."/>
        </authorList>
    </citation>
    <scope>NUCLEOTIDE SEQUENCE [MRNA]</scope>
    <scope>VARIANT SER-638</scope>
    <source>
        <tissue>Lung</tissue>
        <tissue>Testis</tissue>
    </source>
</reference>
<reference key="5">
    <citation type="submission" date="2000-07" db="EMBL/GenBank/DDBJ databases">
        <title>Cloning, expression analysis and chromosomal localization of a novel ACE like enzyme.</title>
        <authorList>
            <person name="Suzuki Y."/>
            <person name="Watanabe M."/>
            <person name="Sugano S."/>
        </authorList>
    </citation>
    <scope>NUCLEOTIDE SEQUENCE [MRNA]</scope>
</reference>
<reference key="6">
    <citation type="patent" date="1999-11-13" number="CA2248987">
        <title>MPROT15 polypeptide and MPROT15 polynucleotide.</title>
        <authorList>
            <person name="Southan C."/>
            <person name="Burgess N."/>
        </authorList>
    </citation>
    <scope>NUCLEOTIDE SEQUENCE [MRNA]</scope>
</reference>
<reference key="7">
    <citation type="submission" date="2009-06" db="EMBL/GenBank/DDBJ databases">
        <title>Comparative susceptibility to SARS-CoV mediated by ACE2 protein of 15 different species.</title>
        <authorList>
            <person name="Li K.K.B."/>
            <person name="Yip C.W."/>
            <person name="Hon C.C."/>
            <person name="Lam C.Y."/>
            <person name="Leung F.C.C."/>
        </authorList>
    </citation>
    <scope>NUCLEOTIDE SEQUENCE [MRNA]</scope>
</reference>
<reference evidence="82" key="8">
    <citation type="journal article" date="2020" name="Nat. Genet.">
        <title>Interferons and viruses induce a novel truncated ACE2 isoform and not the full-length SARS-CoV-2 receptor.</title>
        <authorList>
            <person name="Onabajo O.O."/>
            <person name="Banday A.R."/>
            <person name="Stanifer M.L."/>
            <person name="Yan W."/>
            <person name="Obajemu A."/>
            <person name="Santer D.M."/>
            <person name="Florez-Vargas O."/>
            <person name="Piontkivska H."/>
            <person name="Vargas J.M."/>
            <person name="Ring T.J."/>
            <person name="Kee C."/>
            <person name="Doldan P."/>
            <person name="Tyrrell D.L."/>
            <person name="Mendoza J.L."/>
            <person name="Boulant S."/>
            <person name="Prokunina-Olsson L."/>
        </authorList>
    </citation>
    <scope>NUCLEOTIDE SEQUENCE [MRNA] (ISOFORM 2)</scope>
    <scope>FUNCTION (ISOFORM 2)</scope>
    <scope>INDUCTION BY IFN (ISOFORM 2)</scope>
    <scope>ALTERNATIVE SPLICING</scope>
</reference>
<reference key="9">
    <citation type="journal article" date="2003" name="Genome Res.">
        <title>The secreted protein discovery initiative (SPDI), a large-scale effort to identify novel human secreted and transmembrane proteins: a bioinformatics assessment.</title>
        <authorList>
            <person name="Clark H.F."/>
            <person name="Gurney A.L."/>
            <person name="Abaya E."/>
            <person name="Baker K."/>
            <person name="Baldwin D.T."/>
            <person name="Brush J."/>
            <person name="Chen J."/>
            <person name="Chow B."/>
            <person name="Chui C."/>
            <person name="Crowley C."/>
            <person name="Currell B."/>
            <person name="Deuel B."/>
            <person name="Dowd P."/>
            <person name="Eaton D."/>
            <person name="Foster J.S."/>
            <person name="Grimaldi C."/>
            <person name="Gu Q."/>
            <person name="Hass P.E."/>
            <person name="Heldens S."/>
            <person name="Huang A."/>
            <person name="Kim H.S."/>
            <person name="Klimowski L."/>
            <person name="Jin Y."/>
            <person name="Johnson S."/>
            <person name="Lee J."/>
            <person name="Lewis L."/>
            <person name="Liao D."/>
            <person name="Mark M.R."/>
            <person name="Robbie E."/>
            <person name="Sanchez C."/>
            <person name="Schoenfeld J."/>
            <person name="Seshagiri S."/>
            <person name="Simmons L."/>
            <person name="Singh J."/>
            <person name="Smith V."/>
            <person name="Stinson J."/>
            <person name="Vagts A."/>
            <person name="Vandlen R.L."/>
            <person name="Watanabe C."/>
            <person name="Wieand D."/>
            <person name="Woods K."/>
            <person name="Xie M.-H."/>
            <person name="Yansura D.G."/>
            <person name="Yi S."/>
            <person name="Yu G."/>
            <person name="Yuan J."/>
            <person name="Zhang M."/>
            <person name="Zhang Z."/>
            <person name="Goddard A.D."/>
            <person name="Wood W.I."/>
            <person name="Godowski P.J."/>
            <person name="Gray A.M."/>
        </authorList>
    </citation>
    <scope>NUCLEOTIDE SEQUENCE [LARGE SCALE MRNA]</scope>
</reference>
<reference key="10">
    <citation type="submission" date="2003-01" db="EMBL/GenBank/DDBJ databases">
        <authorList>
            <consortium name="SeattleSNPs variation discovery resource"/>
        </authorList>
    </citation>
    <scope>NUCLEOTIDE SEQUENCE [GENOMIC DNA]</scope>
    <scope>VARIANT ARG-26</scope>
</reference>
<reference key="11">
    <citation type="submission" date="2005-07" db="EMBL/GenBank/DDBJ databases">
        <authorList>
            <person name="Mural R.J."/>
            <person name="Istrail S."/>
            <person name="Sutton G."/>
            <person name="Florea L."/>
            <person name="Halpern A.L."/>
            <person name="Mobarry C.M."/>
            <person name="Lippert R."/>
            <person name="Walenz B."/>
            <person name="Shatkay H."/>
            <person name="Dew I."/>
            <person name="Miller J.R."/>
            <person name="Flanigan M.J."/>
            <person name="Edwards N.J."/>
            <person name="Bolanos R."/>
            <person name="Fasulo D."/>
            <person name="Halldorsson B.V."/>
            <person name="Hannenhalli S."/>
            <person name="Turner R."/>
            <person name="Yooseph S."/>
            <person name="Lu F."/>
            <person name="Nusskern D.R."/>
            <person name="Shue B.C."/>
            <person name="Zheng X.H."/>
            <person name="Zhong F."/>
            <person name="Delcher A.L."/>
            <person name="Huson D.H."/>
            <person name="Kravitz S.A."/>
            <person name="Mouchard L."/>
            <person name="Reinert K."/>
            <person name="Remington K.A."/>
            <person name="Clark A.G."/>
            <person name="Waterman M.S."/>
            <person name="Eichler E.E."/>
            <person name="Adams M.D."/>
            <person name="Hunkapiller M.W."/>
            <person name="Myers E.W."/>
            <person name="Venter J.C."/>
        </authorList>
    </citation>
    <scope>NUCLEOTIDE SEQUENCE [LARGE SCALE GENOMIC DNA]</scope>
</reference>
<reference key="12">
    <citation type="journal article" date="2004" name="Genome Res.">
        <title>The status, quality, and expansion of the NIH full-length cDNA project: the Mammalian Gene Collection (MGC).</title>
        <authorList>
            <consortium name="The MGC Project Team"/>
        </authorList>
    </citation>
    <scope>NUCLEOTIDE SEQUENCE [LARGE SCALE MRNA]</scope>
    <source>
        <tissue>Brain</tissue>
        <tissue>Testis</tissue>
    </source>
</reference>
<reference key="13">
    <citation type="journal article" date="2007" name="BMC Genomics">
        <title>The full-ORF clone resource of the German cDNA consortium.</title>
        <authorList>
            <person name="Bechtel S."/>
            <person name="Rosenfelder H."/>
            <person name="Duda A."/>
            <person name="Schmidt C.P."/>
            <person name="Ernst U."/>
            <person name="Wellenreuther R."/>
            <person name="Mehrle A."/>
            <person name="Schuster C."/>
            <person name="Bahr A."/>
            <person name="Bloecker H."/>
            <person name="Heubner D."/>
            <person name="Hoerlein A."/>
            <person name="Michel G."/>
            <person name="Wedler H."/>
            <person name="Koehrer K."/>
            <person name="Ottenwaelder B."/>
            <person name="Poustka A."/>
            <person name="Wiemann S."/>
            <person name="Schupp I."/>
        </authorList>
    </citation>
    <scope>NUCLEOTIDE SEQUENCE [LARGE SCALE MRNA] OF 2-805</scope>
    <source>
        <tissue>Testis</tissue>
    </source>
</reference>
<reference key="14">
    <citation type="journal article" date="2004" name="Biochim. Biophys. Acta">
        <title>Interaction of ACE2 and integrin beta1 in failing human heart.</title>
        <authorList>
            <person name="Lin Q."/>
            <person name="Keller R.S."/>
            <person name="Weaver B."/>
            <person name="Zisman L.S."/>
        </authorList>
    </citation>
    <scope>PROTEIN SEQUENCE OF 679-689</scope>
    <scope>IDENTIFICATION BY MASS SPECTROMETRY</scope>
    <scope>INTERACTION WITH ITGB1</scope>
</reference>
<reference key="15">
    <citation type="journal article" date="2002" name="FEBS Lett.">
        <title>Quantitative mRNA expression profiling of ACE 2, a novel homologue of angiotensin converting enzyme.</title>
        <authorList>
            <person name="Harmer D."/>
            <person name="Gilbert M."/>
            <person name="Borman R."/>
            <person name="Clark K.L."/>
        </authorList>
    </citation>
    <scope>TISSUE SPECIFICITY</scope>
</reference>
<reference key="16">
    <citation type="journal article" date="2002" name="J. Am. Chem. Soc.">
        <title>Substrate-based design of the first class of angiotensin-converting enzyme-related carboxypeptidase (ACE2) inhibitors.</title>
        <authorList>
            <person name="Dales N.A."/>
            <person name="Gould A.E."/>
            <person name="Brown J.A."/>
            <person name="Calderwood E.F."/>
            <person name="Guan B."/>
            <person name="Minor C.A."/>
            <person name="Gavin J.M."/>
            <person name="Hales P."/>
            <person name="Kaushik V.K."/>
            <person name="Stewart M."/>
            <person name="Tummino P.J."/>
            <person name="Vickers C.S."/>
            <person name="Ocain T.D."/>
            <person name="Patane M.A."/>
        </authorList>
    </citation>
    <scope>ACTIVITY REGULATION</scope>
</reference>
<reference key="17">
    <citation type="journal article" date="2002" name="J. Biol. Chem.">
        <title>Hydrolysis of biological peptides by human angiotensin-converting enzyme-related carboxypeptidase.</title>
        <authorList>
            <person name="Vickers C."/>
            <person name="Hales P."/>
            <person name="Kaushik V."/>
            <person name="Dick L."/>
            <person name="Gavin J."/>
            <person name="Tang J."/>
            <person name="Godbout K."/>
            <person name="Parsons T."/>
            <person name="Baronas E."/>
            <person name="Hsieh F."/>
            <person name="Acton S."/>
            <person name="Patane M.A."/>
            <person name="Nichols A."/>
            <person name="Tummino P."/>
        </authorList>
    </citation>
    <scope>FUNCTION</scope>
    <scope>CATALYTIC ACTIVITY</scope>
    <scope>BIOPHYSICOCHEMICAL PROPERTIES</scope>
    <scope>SUBSTRATE SPECIFICITY</scope>
    <scope>ACTIVITY REGULATION</scope>
    <scope>COFACTOR</scope>
</reference>
<reference key="18">
    <citation type="journal article" date="2003" name="Circulation">
        <title>Increased angiotensin-(1-7)-forming activity in failing human heart ventricles: evidence for upregulation of the angiotensin-converting enzyme Homologue ACE2.</title>
        <authorList>
            <person name="Zisman L.S."/>
            <person name="Keller R.S."/>
            <person name="Weaver B."/>
            <person name="Lin Q."/>
            <person name="Speth R."/>
            <person name="Bristow M.R."/>
            <person name="Canver C.C."/>
        </authorList>
    </citation>
    <scope>FUNCTION</scope>
    <scope>CATALYTIC ACTIVITY</scope>
    <scope>INDUCTION</scope>
</reference>
<reference key="19">
    <citation type="journal article" date="2003" name="Nature">
        <title>Angiotensin-converting enzyme 2 is a functional receptor for the SARS coronavirus.</title>
        <authorList>
            <person name="Li W."/>
            <person name="Moore M.J."/>
            <person name="Vasilieva N."/>
            <person name="Sui J."/>
            <person name="Wong S.-K."/>
            <person name="Berne M.A."/>
            <person name="Somasundaran M."/>
            <person name="Sullivan J.L."/>
            <person name="Luzuriaga K."/>
            <person name="Greenough T.C."/>
            <person name="Choe H."/>
            <person name="Farzan M."/>
        </authorList>
    </citation>
    <scope>FUNCTION (MICROBIAL INFECTION)</scope>
    <scope>INTERACTION WITH SARS-COV SPIKE GLYCOPROTEIN (MICROBIAL INFECTION)</scope>
    <scope>GLYCOSYLATION</scope>
    <scope>IDENTIFICATION BY MASS SPECTROMETRY</scope>
</reference>
<reference key="20">
    <citation type="journal article" date="2004" name="BMC Med.">
        <title>ACE2 gene expression is up-regulated in the human failing heart.</title>
        <authorList>
            <person name="Goulter A.B."/>
            <person name="Goddard M.J."/>
            <person name="Allen J.C."/>
            <person name="Clark K.L."/>
        </authorList>
    </citation>
    <scope>INDUCTION</scope>
</reference>
<reference key="21">
    <citation type="journal article" date="2004" name="J. Pathol.">
        <title>Tissue distribution of ACE2 protein, the functional receptor for SARS coronavirus. A first step in understanding SARS pathogenesis.</title>
        <authorList>
            <person name="Hamming I."/>
            <person name="Timens W."/>
            <person name="Bulthuis M.L.C."/>
            <person name="Lely A.T."/>
            <person name="Navis G.J."/>
            <person name="van Goor H."/>
        </authorList>
    </citation>
    <scope>TISSUE SPECIFICITY</scope>
</reference>
<reference key="22">
    <citation type="journal article" date="2004" name="J. Virol.">
        <title>Efficient replication of severe acute respiratory syndrome coronavirus in mouse cells is limited by murine angiotensin-converting enzyme 2.</title>
        <authorList>
            <person name="Li W."/>
            <person name="Greenough T.C."/>
            <person name="Moore M.J."/>
            <person name="Vasilieva N."/>
            <person name="Somasundaran M."/>
            <person name="Sullivan J.L."/>
            <person name="Farzan M."/>
            <person name="Choe H."/>
        </authorList>
    </citation>
    <scope>FUNCTION (MICROBIAL INFECTION)</scope>
    <scope>INTERACTION WITH SARS-COV SPIKE GLYCOPROTEIN (MICROBIAL INFECTION)</scope>
</reference>
<reference key="23">
    <citation type="journal article" date="2004" name="Mol. Cell. Proteomics">
        <title>A proteomic analysis of human bile.</title>
        <authorList>
            <person name="Kristiansen T.Z."/>
            <person name="Bunkenborg J."/>
            <person name="Gronborg M."/>
            <person name="Molina H."/>
            <person name="Thuluvath P.J."/>
            <person name="Argani P."/>
            <person name="Goggins M.G."/>
            <person name="Maitra A."/>
            <person name="Pandey A."/>
        </authorList>
    </citation>
    <scope>GLYCOSYLATION [LARGE SCALE ANALYSIS] AT ASN-90</scope>
    <source>
        <tissue>Bile</tissue>
    </source>
</reference>
<reference key="24">
    <citation type="journal article" date="2005" name="Eur. Heart J.">
        <title>Myocardial infarction increases ACE2 expression in rat and humans.</title>
        <authorList>
            <person name="Burrell L.M."/>
            <person name="Risvanis J."/>
            <person name="Kubota E."/>
            <person name="Dean R.G."/>
            <person name="MacDonald P.S."/>
            <person name="Lu S."/>
            <person name="Tikellis C."/>
            <person name="Grant S.L."/>
            <person name="Lew R.A."/>
            <person name="Smith A.I."/>
            <person name="Cooper M.E."/>
            <person name="Johnston C.I."/>
        </authorList>
    </citation>
    <scope>TISSUE SPECIFICITY</scope>
    <scope>INDUCTION</scope>
</reference>
<reference key="25">
    <citation type="journal article" date="2005" name="EMBO J.">
        <title>Receptor and viral determinants of SARS-coronavirus adaptation to human ACE2.</title>
        <authorList>
            <person name="Li W."/>
            <person name="Zhang C."/>
            <person name="Sui J."/>
            <person name="Kuhn J.H."/>
            <person name="Moore M.J."/>
            <person name="Luo S."/>
            <person name="Wong S.-K."/>
            <person name="Huang I.-C."/>
            <person name="Xu K."/>
            <person name="Vasilieva N."/>
            <person name="Murakami A."/>
            <person name="He Y."/>
            <person name="Marasco W.A."/>
            <person name="Guan Y."/>
            <person name="Choe H."/>
            <person name="Farzan M."/>
        </authorList>
    </citation>
    <scope>FUNCTION (MICROBIAL INFECTION)</scope>
    <scope>INTERACTION WITH SARS-COV SPIKE GLYCOPROTEIN (MICROBIAL INFECTION)</scope>
    <scope>MUTAGENESIS</scope>
</reference>
<reference key="26">
    <citation type="journal article" date="2005" name="J. Biol. Chem.">
        <title>Tumor necrosis factor-alpha convertase (ADAM17) mediates regulated ectodomain shedding of the severe-acute respiratory syndrome-coronavirus (SARS-CoV) receptor, angiotensin-converting enzyme-2 (ACE2).</title>
        <authorList>
            <person name="Lambert D.W."/>
            <person name="Yarski M."/>
            <person name="Warner F.J."/>
            <person name="Thornhill P."/>
            <person name="Parkin E.T."/>
            <person name="Smith A.I."/>
            <person name="Hooper N.M."/>
            <person name="Turner A.J."/>
        </authorList>
    </citation>
    <scope>PROTEOLYTIC CLEAVAGE</scope>
    <scope>SUBCELLULAR LOCATION</scope>
</reference>
<reference key="27">
    <citation type="journal article" date="2005" name="Proc. Natl. Acad. Sci. U.S.A.">
        <title>Human coronavirus NL63 employs the severe acute respiratory syndrome coronavirus receptor for cellular entry.</title>
        <authorList>
            <person name="Hofmann H."/>
            <person name="Pyrc K."/>
            <person name="van der Hoek L."/>
            <person name="Geier M."/>
            <person name="Berkhout B."/>
            <person name="Poehlmann S."/>
        </authorList>
    </citation>
    <scope>FUNCTION (MICROBIAL INFECTION)</scope>
    <scope>INTERACTION WITH HCOV-NL63 SPIKE GLYCOPROTEIN (MICROBIAL INFECTION)</scope>
</reference>
<reference key="28">
    <citation type="journal article" date="2005" name="FEBS J.">
        <title>Identification of critical active-site residues in angiotensin-converting enzyme-2 (ACE2) by site-directed mutagenesis.</title>
        <authorList>
            <person name="Guy J.L."/>
            <person name="Jackson R.M."/>
            <person name="Jensen H.A."/>
            <person name="Hooper N.M."/>
            <person name="Turner A.J."/>
        </authorList>
    </citation>
    <scope>FUNCTION</scope>
    <scope>ACTIVE SITE</scope>
    <scope>MUTAGENESIS OF ARG-273; HIS-345 AND HIS-505</scope>
</reference>
<reference key="29">
    <citation type="journal article" date="2008" name="FEBS J.">
        <title>Residues affecting the chloride regulation and substrate selectivity of the angiotensin-converting enzymes (ACE and ACE2) identified by site-directed mutagenesis.</title>
        <authorList>
            <person name="Rushworth C.A."/>
            <person name="Guy J.L."/>
            <person name="Turner A.J."/>
        </authorList>
    </citation>
    <scope>FUNCTION</scope>
    <scope>CATALYTIC ACTIVITY</scope>
    <scope>BIOPHYSICOCHEMICAL PROPERTIES</scope>
    <scope>ACTIVITY REGULATION</scope>
    <scope>MUTAGENESIS OF ARG-169; TRP-271; LYS-481 AND ARG-514</scope>
</reference>
<reference key="30">
    <citation type="journal article" date="2008" name="FASEB J.">
        <title>A protein complex in the brush-border membrane explains a Hartnup disorder allele.</title>
        <authorList>
            <person name="Kowalczuk S."/>
            <person name="Broeer A."/>
            <person name="Tietze N."/>
            <person name="Vanslambrouck J.M."/>
            <person name="Rasko J.E."/>
            <person name="Broeer S."/>
        </authorList>
    </citation>
    <scope>FUNCTION</scope>
    <scope>SUBCELLULAR LOCATION</scope>
    <scope>TISSUE SPECIFICITY</scope>
</reference>
<reference key="31">
    <citation type="journal article" date="2009" name="J. Proteome Res.">
        <title>Glycoproteomics analysis of human liver tissue by combination of multiple enzyme digestion and hydrazide chemistry.</title>
        <authorList>
            <person name="Chen R."/>
            <person name="Jiang X."/>
            <person name="Sun D."/>
            <person name="Han G."/>
            <person name="Wang F."/>
            <person name="Ye M."/>
            <person name="Wang L."/>
            <person name="Zou H."/>
        </authorList>
    </citation>
    <scope>GLYCOSYLATION [LARGE SCALE ANALYSIS] AT ASN-546</scope>
    <source>
        <tissue>Liver</tissue>
    </source>
</reference>
<reference key="32">
    <citation type="journal article" date="2009" name="Gastroenterology">
        <title>Tissue-specific amino acid transporter partners ACE2 and collectrin differentially interact with hartnup mutations.</title>
        <authorList>
            <person name="Camargo S.M."/>
            <person name="Singer D."/>
            <person name="Makrides V."/>
            <person name="Huggel K."/>
            <person name="Pos K.M."/>
            <person name="Wagner C.A."/>
            <person name="Kuba K."/>
            <person name="Danilczyk U."/>
            <person name="Skovby F."/>
            <person name="Kleta R."/>
            <person name="Penninger J.M."/>
            <person name="Verrey F."/>
        </authorList>
    </citation>
    <scope>FUNCTION</scope>
    <scope>MUTAGENESIS OF ARG-273</scope>
</reference>
<reference key="33">
    <citation type="journal article" date="2011" name="Biochemistry">
        <title>Angiotensin-converting enzyme 2 ectodomain shedding cleavage-site identification: determinants and constraints.</title>
        <authorList>
            <person name="Lai Z.W."/>
            <person name="Hanchapola I."/>
            <person name="Steer D.L."/>
            <person name="Smith A.I."/>
        </authorList>
    </citation>
    <scope>PROTEOLYTIC CLEAVAGE</scope>
</reference>
<reference key="34">
    <citation type="journal article" date="2011" name="J. Virol.">
        <title>A transmembrane serine protease is linked to the severe acute respiratory syndrome coronavirus receptor and activates virus entry.</title>
        <authorList>
            <person name="Shulla A."/>
            <person name="Heald-Sargent T."/>
            <person name="Subramanya G."/>
            <person name="Zhao J."/>
            <person name="Perlman S."/>
            <person name="Gallagher T."/>
        </authorList>
    </citation>
    <scope>SUBCELLULAR LOCATION</scope>
    <scope>PROTEOLYTIC CLEAVAGE</scope>
    <scope>INTERACTION WITH TMPRSS2</scope>
</reference>
<reference key="35">
    <citation type="journal article" date="2014" name="J. Virol.">
        <title>TMPRSS2 and ADAM17 cleave ACE2 differentially and only proteolysis by TMPRSS2 augments entry driven by the severe acute respiratory syndrome coronavirus spike protein.</title>
        <authorList>
            <person name="Heurich A."/>
            <person name="Hofmann-Winkler H."/>
            <person name="Gierer S."/>
            <person name="Liepold T."/>
            <person name="Jahn O."/>
            <person name="Poehlmann S."/>
        </authorList>
    </citation>
    <scope>FUNCTION (MICROBIAL INFECTION)</scope>
    <scope>SUBCELLULAR LOCATION</scope>
    <scope>PROTEOLYTIC CLEAVAGE</scope>
</reference>
<reference key="36">
    <citation type="journal article" date="2016" name="Hypertension">
        <title>Angiotensin-Converting Enzyme 2 Metabolizes and Partially Inactivates Pyr-Apelin-13 and Apelin-17: Physiological Effects in the Cardiovascular System.</title>
        <authorList>
            <person name="Wang W."/>
            <person name="McKinnie S.M."/>
            <person name="Farhan M."/>
            <person name="Paul M."/>
            <person name="McDonald T."/>
            <person name="McLean B."/>
            <person name="Llorens-Cortes C."/>
            <person name="Hazra S."/>
            <person name="Murray A.G."/>
            <person name="Vederas J.C."/>
            <person name="Oudit G.Y."/>
        </authorList>
    </citation>
    <scope>FUNCTION</scope>
    <scope>CATALYTIC ACTIVITY</scope>
    <scope>BIOPHYSICOCHEMICAL PROPERTIES</scope>
    <scope>3D-STRUCTURE MODELING</scope>
    <scope>ACTIVE SITE</scope>
</reference>
<reference key="37">
    <citation type="journal article" date="2017" name="Front. Neurosci.">
        <title>[Pyr1]Apelin-13(1-12) Is a Biologically Active ACE2 Metabolite of the Endogenous Cardiovascular Peptide [Pyr1]Apelin-13.</title>
        <authorList>
            <person name="Yang P."/>
            <person name="Kuc R.E."/>
            <person name="Brame A.L."/>
            <person name="Dyson A."/>
            <person name="Singer M."/>
            <person name="Glen R.C."/>
            <person name="Cheriyan J."/>
            <person name="Wilkinson I.B."/>
            <person name="Davenport A.P."/>
            <person name="Maguire J.J."/>
        </authorList>
    </citation>
    <scope>FUNCTION</scope>
    <scope>CATALYTIC ACTIVITY</scope>
</reference>
<reference key="38">
    <citation type="journal article" date="2020" name="Cell">
        <title>SARS-CoV-2 cell entry depends on ACE2 and TMPRSS2 and is blocked by a clinically proven protease inhibitor.</title>
        <authorList>
            <person name="Hoffmann M."/>
            <person name="Kleine-Weber H."/>
            <person name="Schroeder S."/>
            <person name="Krueger N."/>
            <person name="Herrler T."/>
            <person name="Erichsen S."/>
            <person name="Schiergens T.S."/>
            <person name="Herrler G."/>
            <person name="Wu N.H."/>
            <person name="Nitsche A."/>
            <person name="Mueller M.A."/>
            <person name="Drosten C."/>
            <person name="Poehlmann S."/>
        </authorList>
    </citation>
    <scope>FUNCTION (MICROBIAL INFECTION)</scope>
</reference>
<reference key="39">
    <citation type="journal article" date="2020" name="Science">
        <title>Cryo-EM structure of the 2019-nCoV spike in the prefusion conformation.</title>
        <authorList>
            <person name="Wrapp D."/>
            <person name="Wang N."/>
            <person name="Corbett K.S."/>
            <person name="Goldsmith J.A."/>
            <person name="Hsieh C.L."/>
            <person name="Abiona O."/>
            <person name="Graham B.S."/>
            <person name="McLellan J.S."/>
        </authorList>
    </citation>
    <scope>INTERACTION WITH SARS-COV-2 SPIKE GLYCOPROTEIN (MICROBIAL INFECTION)</scope>
</reference>
<reference key="40">
    <citation type="journal article" date="2020" name="Cell">
        <title>SARS-CoV-2 Receptor ACE2 Is an Interferon-Stimulated Gene in Human Airway Epithelial Cells and Is Detected in Specific Cell Subsets across Tissues.</title>
        <authorList>
            <consortium name="HCA Lung Biological Network. Electronic address: lung-network@humancellatlas.org"/>
            <consortium name="HCA Lung Biological Network"/>
            <person name="Ziegler C.G.K."/>
            <person name="Allon S.J."/>
            <person name="Nyquist S.K."/>
            <person name="Mbano I.M."/>
            <person name="Miao V.N."/>
            <person name="Tzouanas C.N."/>
            <person name="Cao Y."/>
            <person name="Yousif A.S."/>
            <person name="Bals J."/>
            <person name="Hauser B.M."/>
            <person name="Feldman J."/>
            <person name="Muus C."/>
            <person name="Wadsworth M.H. II"/>
            <person name="Kazer S.W."/>
            <person name="Hughes T.K."/>
            <person name="Doran B."/>
            <person name="Gatter G.J."/>
            <person name="Vukovic M."/>
            <person name="Taliaferro F."/>
            <person name="Mead B.E."/>
            <person name="Guo Z."/>
            <person name="Wang J.P."/>
            <person name="Gras D."/>
            <person name="Plaisant M."/>
            <person name="Ansari M."/>
            <person name="Angelidis I."/>
            <person name="Adler H."/>
            <person name="Sucre J.M.S."/>
            <person name="Taylor C.J."/>
            <person name="Lin B."/>
            <person name="Waghray A."/>
            <person name="Mitsialis V."/>
            <person name="Dwyer D.F."/>
            <person name="Buchheit K.M."/>
            <person name="Boyce J.A."/>
            <person name="Barrett N.A."/>
            <person name="Laidlaw T.M."/>
            <person name="Carroll S.L."/>
            <person name="Colonna L."/>
            <person name="Tkachev V."/>
            <person name="Peterson C.W."/>
            <person name="Yu A."/>
            <person name="Zheng H.B."/>
            <person name="Gideon H.P."/>
            <person name="Winchell C.G."/>
            <person name="Lin P.L."/>
            <person name="Bingle C.D."/>
            <person name="Snapper S.B."/>
            <person name="Kropski J.A."/>
            <person name="Theis F.J."/>
            <person name="Schiller H.B."/>
            <person name="Zaragosi L.E."/>
            <person name="Barbry P."/>
            <person name="Leslie A."/>
            <person name="Kiem H.P."/>
            <person name="Flynn J.L."/>
            <person name="Fortune S.M."/>
            <person name="Berger B."/>
            <person name="Finberg R.W."/>
            <person name="Kean L.S."/>
            <person name="Garber M."/>
            <person name="Schmidt A.G."/>
            <person name="Lingwood D."/>
            <person name="Shalek A.K."/>
            <person name="Ordovas-Montanes J."/>
        </authorList>
    </citation>
    <scope>TISSUE SPECIFICITY</scope>
    <scope>INDUCTION BY ISR</scope>
</reference>
<reference key="41">
    <citation type="journal article" date="2020" name="Dev. Cell">
        <title>Cigarette smoke exposure and inflammatory signaling increase the expression of the SARS-CoV-2 receptor ACE2 in the respiratory tract.</title>
        <authorList>
            <person name="Smith J.C."/>
            <person name="Sausville E.L."/>
            <person name="Girish V."/>
            <person name="Yuan M.L."/>
            <person name="Vasudevan A."/>
            <person name="John K.M."/>
            <person name="Sheltzer J.M."/>
        </authorList>
    </citation>
    <scope>TISSUE SPECIFICITY</scope>
    <scope>INDUCTION BY CIGARETTE SMOKE</scope>
</reference>
<reference key="42">
    <citation type="journal article" date="2020" name="Front. Med.">
        <title>Single-cell RNA-seq data analysis on the receptor ACE2 expression reveals the potential risk of different human organs vulnerable to 2019-nCoV infection.</title>
        <authorList>
            <person name="Zou X."/>
            <person name="Chen K."/>
            <person name="Zou J."/>
            <person name="Han P."/>
            <person name="Hao J."/>
            <person name="Han Z."/>
        </authorList>
    </citation>
    <scope>TISSUE SPECIFICITY</scope>
</reference>
<reference key="43">
    <citation type="journal article" date="2021" name="JACC Basic Transl. Sci.">
        <title>The Integrin Binding Peptide, ATN-161, as a Novel Therapy for SARS-CoV-2 Infection.</title>
        <authorList>
            <person name="Beddingfield B.J."/>
            <person name="Iwanaga N."/>
            <person name="Chapagain P.P."/>
            <person name="Zheng W."/>
            <person name="Roy C.J."/>
            <person name="Hu T.Y."/>
            <person name="Kolls J.K."/>
            <person name="Bix G.J."/>
        </authorList>
    </citation>
    <scope>INTERACTION WITH ITGA5:ITGB1</scope>
    <scope>INTERACTION WITH SARS-COV-2 SPIKE GLYCOPROTEIN (MICROBIAL INFECTION)</scope>
</reference>
<reference key="44">
    <citation type="journal article" date="2020" name="J. Allergy Clin. Immunol.">
        <title>Association of respiratory allergy, asthma, and expression of the SARS-CoV-2 receptor ACE2.</title>
        <authorList>
            <person name="Jackson D.J."/>
            <person name="Busse W.W."/>
            <person name="Bacharier L.B."/>
            <person name="Kattan M."/>
            <person name="O'Connor G.T."/>
            <person name="Wood R.A."/>
            <person name="Visness C.M."/>
            <person name="Durham S.R."/>
            <person name="Larson D."/>
            <person name="Esnault S."/>
            <person name="Ober C."/>
            <person name="Gergen P.J."/>
            <person name="Becker P."/>
            <person name="Togias A."/>
            <person name="Gern J.E."/>
            <person name="Altman M.C."/>
        </authorList>
    </citation>
    <scope>INDUCTION BY ALLERGEN AND IL13</scope>
    <scope>TISSUE SPECIFICITY</scope>
    <scope>SUBCELLULAR LOCATION</scope>
    <scope>PROTEOLYTIC CLEAVAGE</scope>
</reference>
<reference key="45">
    <citation type="journal article" date="2020" name="Mol. Syst. Biol.">
        <title>The protein expression profile of ACE2 in human tissues.</title>
        <authorList>
            <person name="Hikmet F."/>
            <person name="Mear L."/>
            <person name="Edvinsson A."/>
            <person name="Micke P."/>
            <person name="Uhlen M."/>
            <person name="Lindskog C."/>
        </authorList>
    </citation>
    <scope>TISSUE SPECIFICITY</scope>
</reference>
<reference key="46">
    <citation type="journal article" date="2020" name="Nat. Commun.">
        <title>Characterization of spike glycoprotein of SARS-CoV-2 on virus entry and its immune cross-reactivity with SARS-CoV.</title>
        <authorList>
            <person name="Ou X."/>
            <person name="Liu Y."/>
            <person name="Lei X."/>
            <person name="Li P."/>
            <person name="Mi D."/>
            <person name="Ren L."/>
            <person name="Guo L."/>
            <person name="Guo R."/>
            <person name="Chen T."/>
            <person name="Hu J."/>
            <person name="Xiang Z."/>
            <person name="Mu Z."/>
            <person name="Chen X."/>
            <person name="Chen J."/>
            <person name="Hu K."/>
            <person name="Jin Q."/>
            <person name="Wang J."/>
            <person name="Qian Z."/>
        </authorList>
    </citation>
    <scope>FUNCTION (MICROBIAL INFECTION)</scope>
</reference>
<reference key="47">
    <citation type="journal article" date="2020" name="Nat. Med.">
        <title>SARS-CoV-2 entry factors are highly expressed in nasal epithelial cells together with innate immune genes.</title>
        <authorList>
            <consortium name="HCA Lung Biological Network"/>
            <person name="Sungnak W."/>
            <person name="Huang N."/>
            <person name="Becavin C."/>
            <person name="Berg M."/>
            <person name="Queen R."/>
            <person name="Litvinukova M."/>
            <person name="Talavera-Lopez C."/>
            <person name="Maatz H."/>
            <person name="Reichart D."/>
            <person name="Sampaziotis F."/>
            <person name="Worlock K.B."/>
            <person name="Yoshida M."/>
            <person name="Barnes J.L."/>
        </authorList>
    </citation>
    <scope>TISSUE SPECIFICITY</scope>
</reference>
<reference key="48">
    <citation type="journal article" date="2020" name="Science">
        <title>SARS-CoV-2 productively infects human gut enterocytes.</title>
        <authorList>
            <person name="Lamers M.M."/>
            <person name="Beumer J."/>
            <person name="van der Vaart J."/>
            <person name="Knoops K."/>
            <person name="Puschhof J."/>
            <person name="Breugem T.I."/>
            <person name="Ravelli R.B.G."/>
            <person name="Paul van Schayck J."/>
            <person name="Mykytyn A.Z."/>
            <person name="Duimel H.Q."/>
            <person name="van Donselaar E."/>
            <person name="Riesebosch S."/>
            <person name="Kuijpers H.J.H."/>
            <person name="Schippers D."/>
            <person name="van de Wetering W.J."/>
            <person name="de Graaf M."/>
            <person name="Koopmans M."/>
            <person name="Cuppen E."/>
            <person name="Peters P.J."/>
            <person name="Haagmans B.L."/>
            <person name="Clevers H."/>
        </authorList>
    </citation>
    <scope>TISSUE SPECIFICITY</scope>
</reference>
<reference key="49">
    <citation type="journal article" date="2020" name="Mol. Med. Report.">
        <title>Neuropilin-1 as a new potential SARS-CoV-2 infection mediator implicated in the neurologic features and central nervous system involvement of COVID-19.</title>
        <authorList>
            <person name="Davies J."/>
            <person name="Randeva H.S."/>
            <person name="Chatha K."/>
            <person name="Hall M."/>
            <person name="Spandidos D.A."/>
            <person name="Karteris E."/>
            <person name="Kyrou I."/>
        </authorList>
    </citation>
    <scope>FUNCTION (MICROBIAL INFECTION)</scope>
</reference>
<reference key="50">
    <citation type="journal article" date="2020" name="Science">
        <title>Engineering human ACE2 to optimize binding to the spike protein of SARS coronavirus 2.</title>
        <authorList>
            <person name="Chan K.K."/>
            <person name="Dorosky D."/>
            <person name="Sharma P."/>
            <person name="Abbasi S.A."/>
            <person name="Dye J.M."/>
            <person name="Kranz D.M."/>
            <person name="Herbert A.S."/>
            <person name="Procko E."/>
        </authorList>
    </citation>
    <scope>INTERACTION WITH SARS-COV-2 SPIKE GLYCOPROTEIN (MICROBIAL INFECTION)</scope>
    <scope>MUTAGENESIS OF SER-19; GLN-24; ALA-25; THR-27; LEU-29; LYS-31; ASN-33; HIS-34; LEU-39; PHE-40; TYR-41; GLN-42; TRP-69; PHE-72; GLU-75; GLN-76; LEU-79; GLN-89; ASN-90; LEU-91; THR-92; THR-324; GLN-325; ASN-330; LEU-351; ALA-386; PRO-389; ARG-393 AND ARG-518</scope>
    <scope>BIOTECHNOLOGY</scope>
</reference>
<reference key="51">
    <citation type="journal article" date="2020" name="Science">
        <title>Neuropilin-1 is a host factor for SARS-CoV-2 infection.</title>
        <authorList>
            <person name="Daly J.L."/>
            <person name="Simonetti B."/>
            <person name="Klein K."/>
            <person name="Chen K.E."/>
            <person name="Williamson M.K."/>
            <person name="Anton-Plagaro C."/>
            <person name="Shoemark D.K."/>
            <person name="Simon-Gracia L."/>
            <person name="Bauer M."/>
            <person name="Hollandi R."/>
            <person name="Greber U.F."/>
            <person name="Horvath P."/>
            <person name="Sessions R.B."/>
            <person name="Helenius A."/>
            <person name="Hiscox J.A."/>
            <person name="Teesalu T."/>
            <person name="Matthews D.A."/>
            <person name="Davidson A.D."/>
            <person name="Collins B.M."/>
            <person name="Cullen P.J."/>
            <person name="Yamauchi Y."/>
        </authorList>
    </citation>
    <scope>FUNCTION (MICROBIAL INFECTION)</scope>
</reference>
<reference key="52">
    <citation type="journal article" date="2020" name="Sci. Immunol.">
        <title>TMPRSS2 and TMPRSS4 promote SARS-CoV-2 infection of human small intestinal enterocytes.</title>
        <authorList>
            <person name="Zang R."/>
            <person name="Gomez Castro M.F."/>
            <person name="McCune B.T."/>
            <person name="Zeng Q."/>
            <person name="Rothlauf P.W."/>
            <person name="Sonnek N.M."/>
            <person name="Liu Z."/>
            <person name="Brulois K.F."/>
            <person name="Wang X."/>
            <person name="Greenberg H.B."/>
            <person name="Diamond M.S."/>
            <person name="Ciorba M.A."/>
            <person name="Whelan S.P.J."/>
            <person name="Ding S."/>
        </authorList>
    </citation>
    <scope>TISSUE SPECIFICITY</scope>
</reference>
<reference key="53">
    <citation type="journal article" date="2021" name="Cell">
        <title>Soluble ACE2-mediated cell entry of SARS-CoV-2 via interaction with proteins related to the renin-angiotensin system.</title>
        <authorList>
            <person name="Yeung M.L."/>
            <person name="Teng J.L.L."/>
            <person name="Jia L."/>
            <person name="Zhang C."/>
            <person name="Huang C."/>
            <person name="Cai J.P."/>
            <person name="Zhou R."/>
            <person name="Chan K.H."/>
            <person name="Zhao H."/>
            <person name="Zhu L."/>
            <person name="Siu K.L."/>
            <person name="Fung S.Y."/>
            <person name="Yung S."/>
            <person name="Chan T.M."/>
            <person name="To K.K."/>
            <person name="Chan J.F."/>
            <person name="Cai Z."/>
            <person name="Lau S.K.P."/>
            <person name="Chen Z."/>
            <person name="Jin D.Y."/>
            <person name="Woo P.C.Y."/>
            <person name="Yuen K.Y."/>
        </authorList>
    </citation>
    <scope>FUNCTION (MICROBIAL FUNCTION)</scope>
    <scope>INTERACTION WITH SARS-COV-2 SPIKE GLYCOPROTEIN (MICROBIAL FUNCTION)</scope>
    <scope>SUBCELLULAR LOCATION</scope>
</reference>
<reference key="54">
    <citation type="journal article" date="2021" name="IScience">
        <title>ACE2 interaction with cytoplasmic PDZ protein enhances SARS-CoV-2 invasion.</title>
        <authorList>
            <person name="Zhang Q."/>
            <person name="Gefter J."/>
            <person name="Sneddon W.B."/>
            <person name="Mamonova T."/>
            <person name="Friedman P.A."/>
        </authorList>
    </citation>
    <scope>INTERACTION WITH NHERF1</scope>
    <scope>MUTAGENESIS OF 802-GLN--PHE-805</scope>
</reference>
<reference key="55">
    <citation type="journal article" date="2021" name="Sci. Rep.">
        <title>No evidence for basigin/CD147 as a direct SARS-CoV-2 spike binding receptor.</title>
        <authorList>
            <person name="Shilts J."/>
            <person name="Crozier T.W.M."/>
            <person name="Greenwood E.J.D."/>
            <person name="Lehner P.J."/>
            <person name="Wright G.J."/>
        </authorList>
    </citation>
    <scope>FUNCTION (MICROBIAL FUNCTION)</scope>
    <scope>INTERACTION WITH SARS-COV-2 SPIKE GLYCOPROTEIN (MICROBIAL FUNCTION)</scope>
</reference>
<reference key="56">
    <citation type="journal article" date="2021" name="Nat. Genet.">
        <title>A novel ACE2 isoform is expressed in human respiratory epithelia and is upregulated in response to interferons and RNA respiratory virus infection.</title>
        <authorList>
            <person name="Blume C."/>
            <person name="Jackson C.L."/>
            <person name="Spalluto C.M."/>
            <person name="Legebeke J."/>
            <person name="Nazlamova L."/>
            <person name="Conforti F."/>
            <person name="Perotin J.M."/>
            <person name="Frank M."/>
            <person name="Butler J."/>
            <person name="Crispin M."/>
            <person name="Coles J."/>
            <person name="Thompson J."/>
            <person name="Ridley R.A."/>
            <person name="Dean L.S.N."/>
            <person name="Loxham M."/>
            <person name="Reikine S."/>
            <person name="Azim A."/>
            <person name="Tariq K."/>
            <person name="Johnston D.A."/>
            <person name="Skipp P.J."/>
            <person name="Djukanovic R."/>
            <person name="Baralle D."/>
            <person name="McCormick C.J."/>
            <person name="Davies D.E."/>
            <person name="Lucas J.S."/>
            <person name="Wheway G."/>
            <person name="Mennella V."/>
        </authorList>
    </citation>
    <scope>FUNCTION (ISOFORM 2) (MICROBIAL FUNCTION)</scope>
    <scope>INDUCTION BY IFN (ISOFORM 2)</scope>
    <scope>ALTERNATIVE SPLICING</scope>
    <scope>TISSUE SPECIFICITY</scope>
    <scope>SUBCELLULAR LOCATION</scope>
</reference>
<reference key="57">
    <citation type="journal article" date="2021" name="Sci. Signal.">
        <title>Short linear motif candidates in the cell entry system used by SARS-CoV-2 and their potential therapeutic implications.</title>
        <authorList>
            <person name="Meszaros B."/>
            <person name="Samano-Sanchez H."/>
            <person name="Alvarado-Valverde J."/>
            <person name="Calyseva J."/>
            <person name="Martinez-Perez E."/>
            <person name="Alves R."/>
            <person name="Shields D.C."/>
            <person name="Kumar M."/>
            <person name="Rippmann F."/>
            <person name="Chemes L.B."/>
            <person name="Gibson T.J."/>
        </authorList>
    </citation>
    <scope>DOMAIN</scope>
    <scope>PHOSPHORYLATION AT TYR-781 AND SER-783</scope>
</reference>
<reference key="58">
    <citation type="journal article" date="2021" name="Sci. Signal.">
        <title>Cytoplasmic short linear motifs in ACE2 and integrin beta3 link SARS-CoV-2 host cell receptors to mediators of endocytosis and autophagy.</title>
        <authorList>
            <person name="Kliche J."/>
            <person name="Kuss H."/>
            <person name="Ali M."/>
            <person name="Ivarsson Y."/>
        </authorList>
    </citation>
    <scope>DOMAIN</scope>
    <scope>PHOSPHORYLATION AT TYR-781 AND SER-783</scope>
    <scope>INTERACTION WITH AP2M1</scope>
</reference>
<reference key="59">
    <citation type="journal article" date="2022" name="PLoS Biol.">
        <title>LRRC15 inhibits SARS-CoV-2 cellular entry in trans.</title>
        <authorList>
            <person name="Song J."/>
            <person name="Chow R.D."/>
            <person name="Pena-Hernandez M.A."/>
            <person name="Zhang L."/>
            <person name="Loeb S.A."/>
            <person name="So E.Y."/>
            <person name="Liang O.D."/>
            <person name="Ren P."/>
            <person name="Chen S."/>
            <person name="Wilen C.B."/>
            <person name="Lee S."/>
        </authorList>
    </citation>
    <scope>INTERACTION WITH SARS-COV-2 SPIKE GLYCOPROTEIN (MICROBIAL INFECTION)</scope>
</reference>
<reference key="60">
    <citation type="journal article" date="2023" name="EMBO Rep.">
        <title>Vitamin C promotes ACE2 degradation and protects against SARS-CoV-2 infection.</title>
        <authorList>
            <person name="Zuo Y."/>
            <person name="Zheng Z."/>
            <person name="Huang Y."/>
            <person name="He J."/>
            <person name="Zang L."/>
            <person name="Ren T."/>
            <person name="Cao X."/>
            <person name="Miao Y."/>
            <person name="Yuan Y."/>
            <person name="Liu Y."/>
            <person name="Ma F."/>
            <person name="Dai J."/>
            <person name="Tian S."/>
            <person name="Ding Q."/>
            <person name="Zheng H."/>
        </authorList>
    </citation>
    <scope>UBIQUITINATION AT LYS-788</scope>
    <scope>DEUBIQUITINATION BY USP50</scope>
    <scope>MUTAGENESIS OF LYS-788</scope>
</reference>
<reference key="61">
    <citation type="journal article" date="2023" name="PLoS Biol.">
        <title>LRRC15 mediates an accessory interaction with the SARS-CoV-2 spike protein.</title>
        <authorList>
            <person name="Shilts J."/>
            <person name="Crozier T.W.M."/>
            <person name="Teixeira-Silva A."/>
            <person name="Gabaev I."/>
            <person name="Gerber P.P."/>
            <person name="Greenwood E.J.D."/>
            <person name="Watson S.J."/>
            <person name="Ortmann B.M."/>
            <person name="Gawden-Bone C.M."/>
            <person name="Pauzaite T."/>
            <person name="Hoffmann M."/>
            <person name="Nathan J.A."/>
            <person name="Poehlmann S."/>
            <person name="Matheson N.J."/>
            <person name="Lehner P.J."/>
            <person name="Wright G.J."/>
        </authorList>
    </citation>
    <scope>INTERACTION WITH SARS-COV-2 SPIKE GLYCOPROTEIN (MICROBIAL INFECTION)</scope>
</reference>
<reference key="62">
    <citation type="journal article" date="2023" name="PLoS Biol.">
        <title>Fibroblast-expressed LRRC15 is a receptor for SARS-CoV-2 spike and controls antiviral and antifibrotic transcriptional programs.</title>
        <authorList>
            <person name="Loo L."/>
            <person name="Waller M.A."/>
            <person name="Moreno C.L."/>
            <person name="Cole A.J."/>
            <person name="Stella A.O."/>
            <person name="Pop O.T."/>
            <person name="Jochum A.K."/>
            <person name="Ali O.H."/>
            <person name="Denes C.E."/>
            <person name="Hamoudi Z."/>
            <person name="Chung F."/>
            <person name="Aggarwal A."/>
            <person name="Low J.K.K."/>
            <person name="Patel K."/>
            <person name="Siddiquee R."/>
            <person name="Kang T."/>
            <person name="Mathivanan S."/>
            <person name="Mackay J.P."/>
            <person name="Jochum W."/>
            <person name="Flatz L."/>
            <person name="Hesselson D."/>
            <person name="Turville S."/>
            <person name="Neely G.G."/>
        </authorList>
    </citation>
    <scope>INTERACTION WITH SARS-COV-2 SPIKE GLYCOPROTEIN (MICROBIAL INFECTION)</scope>
</reference>
<reference evidence="84 85" key="63">
    <citation type="journal article" date="2004" name="J. Biol. Chem.">
        <title>ACE2 X-ray structures reveal a large hinge-bending motion important for inhibitor binding and catalysis.</title>
        <authorList>
            <person name="Towler P."/>
            <person name="Staker B."/>
            <person name="Prasad S.G."/>
            <person name="Menon S."/>
            <person name="Tang J."/>
            <person name="Parsons T."/>
            <person name="Ryan D."/>
            <person name="Fisher M."/>
            <person name="Williams D."/>
            <person name="Dales N.A."/>
            <person name="Patane M.A."/>
            <person name="Pantoliano M.W."/>
        </authorList>
    </citation>
    <scope>X-RAY CRYSTALLOGRAPHY (2.2 ANGSTROMS) OF 1-615 IN COMPLEXES WITH ZINC; CHLORIDE AND MLN-4760 INHIBITOR</scope>
    <scope>DOMAIN</scope>
    <scope>REACTION MECHANISM</scope>
    <scope>ACTIVE SITE</scope>
    <scope>DISULFIDE BONDS</scope>
    <scope>GLYCOSYLATION AT ASN-53; ASN-90; ASN-103; ASN-322; ASN-432 AND ASN-546</scope>
</reference>
<reference evidence="86" key="64">
    <citation type="journal article" date="2005" name="Science">
        <title>Structure of SARS coronavirus spike receptor-binding domain complexed with receptor.</title>
        <authorList>
            <person name="Li F."/>
            <person name="Li W."/>
            <person name="Farzan M."/>
            <person name="Harrison S.C."/>
        </authorList>
    </citation>
    <scope>X-RAY CRYSTALLOGRAPHY (2.90 ANGSTROMS) OF 19-615 IN COMPLEX WITH ZINC</scope>
    <scope>GLYCOSYLATION AT ASN-53; ASN-90; ASN-322 AND ASN-546</scope>
</reference>
<reference evidence="87" key="65">
    <citation type="journal article" date="2009" name="Proc. Natl. Acad. Sci. U.S.A.">
        <title>Crystal structure of NL63 respiratory coronavirus receptor-binding domain complexed with its human receptor.</title>
        <authorList>
            <person name="Wu K."/>
            <person name="Li W."/>
            <person name="Peng G."/>
            <person name="Li F."/>
        </authorList>
    </citation>
    <scope>X-RAY CRYSTALLOGRAPHY (3.31 ANGSTROMS) OF 19-615</scope>
    <scope>GLYCOSYLATION AT ASN-90 AND ASN-546 IN COMPLEX WITH HUMAN CORONAVIRUS NL63 SPIKE PROTEIN</scope>
    <scope>INTERACTION WITH HUMAN CORONAVIRUS NL63 SPIKE PROTEIN (MICROBIAL INFECTION)</scope>
    <scope>FUNCTION (MICROBIAL INFECTION)</scope>
</reference>
<reference evidence="88 89 90" key="66">
    <citation type="journal article" date="2018" name="PLoS Pathog.">
        <title>Cryo-EM structure of the SARS coronavirus spike glycoprotein in complex with its host cell receptor ACE2.</title>
        <authorList>
            <person name="Song W."/>
            <person name="Gui M."/>
            <person name="Wang X."/>
            <person name="Xiang Y."/>
        </authorList>
    </citation>
    <scope>STRUCTURE BY ELECTRON MICROSCOPY (4.20 ANGSTROMS) OF 19-615</scope>
</reference>
<reference evidence="91" key="67">
    <citation type="journal article" date="2018" name="Sci. Rep.">
        <title>Stabilized coronavirus spikes are resistant to conformational changes induced by receptor recognition or proteolysis.</title>
        <authorList>
            <person name="Kirchdoerfer R.N."/>
            <person name="Wang N."/>
            <person name="Pallesen J."/>
            <person name="Wrapp D."/>
            <person name="Turner H.L."/>
            <person name="Cottrell C.A."/>
            <person name="Corbett K.S."/>
            <person name="Graham B.S."/>
            <person name="McLellan J.S."/>
            <person name="Ward A.B."/>
        </authorList>
    </citation>
    <scope>STRUCTURE BY ELECTRON MICROSCOPY (4.40 ANGSTROMS) OF 19-615</scope>
</reference>
<reference evidence="92" key="68">
    <citation type="journal article" date="2020" name="Nature">
        <title>Structure of the SARS-CoV-2 spike receptor-binding domain bound to the ACE2 receptor.</title>
        <authorList>
            <person name="Lan J."/>
            <person name="Ge J."/>
            <person name="Yu J."/>
            <person name="Shan S."/>
            <person name="Zhou H."/>
            <person name="Fan S."/>
            <person name="Zhang Q."/>
            <person name="Shi X."/>
            <person name="Wang Q."/>
            <person name="Zhang L."/>
            <person name="Wang X."/>
        </authorList>
    </citation>
    <scope>X-RAY CRYSTALLOGRAPHY (2.45 ANGSTROMS) OF 19-615 IN COMPLEX WITH SARS-COV-2 SPIKE GLYCOPROTEIN</scope>
</reference>
<reference evidence="96" key="69">
    <citation type="journal article" date="2020" name="Nature">
        <title>Structural basis of receptor recognition by SARS-CoV-2.</title>
        <authorList>
            <person name="Shang J."/>
            <person name="Ye G."/>
            <person name="Shi K."/>
            <person name="Wan Y."/>
            <person name="Luo C."/>
            <person name="Aihara H."/>
            <person name="Geng Q."/>
            <person name="Auerbach A."/>
            <person name="Li F."/>
        </authorList>
    </citation>
    <scope>X-RAY CRYSTALLOGRAPHY (2.68 ANGSTROMS) OF 19-615 AND IN COMPLEX WITH SARS-COV-2 SPIKE GLYCOPROTEIN</scope>
    <scope>INTERACTION WITH SARS-COV-2 SPIKE GLYCOPROTEIN (MICROBIAL INFECTION)</scope>
    <scope>INTERACTION WITH SARS-COV SPIKE GLYCOPROTEIN (MICROBIAL INFECTION)</scope>
    <scope>FUNCTION (MICROBIAL INFECTION)</scope>
</reference>
<reference evidence="93 94 95" key="70">
    <citation type="journal article" date="2020" name="Science">
        <title>Structural basis for the recognition of the SARS-CoV-2 by full-length human ACE2.</title>
        <authorList>
            <person name="Yan R."/>
            <person name="Zhang Y."/>
            <person name="Li Y."/>
            <person name="Xia L."/>
            <person name="Guo Y."/>
            <person name="Zhou Q."/>
        </authorList>
    </citation>
    <scope>STRUCTURE BY ELECTRON MICROSCOPY (2.90 ANGSTROMS) OF 18-805</scope>
    <scope>INTERACTION WITH SARS-COV-2 SPIKE GLYCOPROTEIN (MICROBIAL INFECTION)</scope>
    <scope>INTERACTION WITH SLC6A19</scope>
    <scope>SUBUNIT</scope>
    <scope>PROTEOLYTIC CLEAVAGE</scope>
</reference>
<reference key="71">
    <citation type="journal article" date="2020" name="Front. Genet.">
        <title>Analysis of the Spectrum of ACE2 Variation Suggests a Possible Influence of Rare and Common Variants on Susceptibility to COVID-19 and Severity of Outcome.</title>
        <authorList>
            <person name="Shikov A.E."/>
            <person name="Barbitoff Y.A."/>
            <person name="Glotov A.S."/>
            <person name="Danilova M.M."/>
            <person name="Tonyan Z.N."/>
            <person name="Nasykhova Y.A."/>
            <person name="Mikhailova A.A."/>
            <person name="Bespalova O.N."/>
            <person name="Kalinin R.S."/>
            <person name="Mirzorustamova A.M."/>
            <person name="Kogan I.Y."/>
            <person name="Baranov V.S."/>
            <person name="Chernov A.N."/>
            <person name="Pavlovich D.M."/>
            <person name="Azarenko S.V."/>
            <person name="Fedyakov M.A."/>
            <person name="Tsay V.V."/>
            <person name="Eismont Y.A."/>
            <person name="Romanova O.V."/>
            <person name="Hobotnikov D.N."/>
            <person name="Vologzhanin D.A."/>
            <person name="Mosenko S.V."/>
            <person name="Ponomareva T.A."/>
            <person name="Talts Y.A."/>
            <person name="Anisenkova A.U."/>
            <person name="Lisovets D.G."/>
            <person name="Sarana A.M."/>
            <person name="Urazov S.P."/>
            <person name="Scherbak S.G."/>
            <person name="Glotov O.S."/>
        </authorList>
    </citation>
    <scope>VARIANT ASP-720</scope>
</reference>
<reference key="72">
    <citation type="journal article" date="2020" name="Mol. Genet. Genomic Med.">
        <title>Genetic variability of human angiotensin-converting enzyme 2 (hACE2) among various ethnic populations.</title>
        <authorList>
            <person name="Li Q."/>
            <person name="Cao Z."/>
            <person name="Rahman P."/>
        </authorList>
    </citation>
    <scope>VARIANTS ARG-26; VAL-468; SER-638 AND ASP-720</scope>
</reference>
<dbReference type="EC" id="3.4.17.23" evidence="6 8 27"/>
<dbReference type="EC" id="3.4.17.-" evidence="6 7 8 27 34 35 52"/>
<dbReference type="EMBL" id="AF291820">
    <property type="protein sequence ID" value="AAF99721.1"/>
    <property type="molecule type" value="mRNA"/>
</dbReference>
<dbReference type="EMBL" id="AF241254">
    <property type="protein sequence ID" value="AAF78220.1"/>
    <property type="molecule type" value="mRNA"/>
</dbReference>
<dbReference type="EMBL" id="AY623811">
    <property type="protein sequence ID" value="AAT45083.1"/>
    <property type="molecule type" value="mRNA"/>
</dbReference>
<dbReference type="EMBL" id="AB193259">
    <property type="protein sequence ID" value="BAD99266.1"/>
    <property type="molecule type" value="mRNA"/>
</dbReference>
<dbReference type="EMBL" id="AB193260">
    <property type="protein sequence ID" value="BAD99267.1"/>
    <property type="molecule type" value="mRNA"/>
</dbReference>
<dbReference type="EMBL" id="AB046569">
    <property type="protein sequence ID" value="BAB40370.1"/>
    <property type="molecule type" value="mRNA"/>
</dbReference>
<dbReference type="EMBL" id="E39033">
    <property type="status" value="NOT_ANNOTATED_CDS"/>
    <property type="molecule type" value="mRNA"/>
</dbReference>
<dbReference type="EMBL" id="GQ262784">
    <property type="protein sequence ID" value="ACT66268.1"/>
    <property type="molecule type" value="mRNA"/>
</dbReference>
<dbReference type="EMBL" id="MT505392">
    <property type="protein sequence ID" value="QLP88822.1"/>
    <property type="molecule type" value="mRNA"/>
</dbReference>
<dbReference type="EMBL" id="AY358714">
    <property type="protein sequence ID" value="AAQ89076.1"/>
    <property type="status" value="ALT_SEQ"/>
    <property type="molecule type" value="mRNA"/>
</dbReference>
<dbReference type="EMBL" id="AY217547">
    <property type="protein sequence ID" value="AAO25651.1"/>
    <property type="molecule type" value="Genomic_DNA"/>
</dbReference>
<dbReference type="EMBL" id="CH471074">
    <property type="protein sequence ID" value="EAW98892.1"/>
    <property type="molecule type" value="Genomic_DNA"/>
</dbReference>
<dbReference type="EMBL" id="BC039902">
    <property type="protein sequence ID" value="AAH39902.1"/>
    <property type="molecule type" value="mRNA"/>
</dbReference>
<dbReference type="EMBL" id="BC048094">
    <property type="protein sequence ID" value="AAH48094.2"/>
    <property type="molecule type" value="mRNA"/>
</dbReference>
<dbReference type="EMBL" id="AL110224">
    <property type="protein sequence ID" value="CAB53682.1"/>
    <property type="molecule type" value="mRNA"/>
</dbReference>
<dbReference type="CCDS" id="CCDS14169.1">
    <molecule id="Q9BYF1-1"/>
</dbReference>
<dbReference type="CCDS" id="CCDS94556.1">
    <molecule id="Q9BYF1-3"/>
</dbReference>
<dbReference type="PIR" id="T14762">
    <property type="entry name" value="T14762"/>
</dbReference>
<dbReference type="RefSeq" id="NP_001358344.1">
    <molecule id="Q9BYF1-1"/>
    <property type="nucleotide sequence ID" value="NM_001371415.1"/>
</dbReference>
<dbReference type="RefSeq" id="NP_001375381.1">
    <molecule id="Q9BYF1-3"/>
    <property type="nucleotide sequence ID" value="NM_001388452.1"/>
</dbReference>
<dbReference type="RefSeq" id="NP_068576.1">
    <molecule id="Q9BYF1-1"/>
    <property type="nucleotide sequence ID" value="NM_021804.3"/>
</dbReference>
<dbReference type="PDB" id="1R42">
    <property type="method" value="X-ray"/>
    <property type="resolution" value="2.20 A"/>
    <property type="chains" value="A=1-615"/>
</dbReference>
<dbReference type="PDB" id="1R4L">
    <property type="method" value="X-ray"/>
    <property type="resolution" value="3.00 A"/>
    <property type="chains" value="A=1-615"/>
</dbReference>
<dbReference type="PDB" id="2AJF">
    <property type="method" value="X-ray"/>
    <property type="resolution" value="2.90 A"/>
    <property type="chains" value="A/B=19-615"/>
</dbReference>
<dbReference type="PDB" id="3D0G">
    <property type="method" value="X-ray"/>
    <property type="resolution" value="2.80 A"/>
    <property type="chains" value="A/B=56-615"/>
</dbReference>
<dbReference type="PDB" id="3D0H">
    <property type="method" value="X-ray"/>
    <property type="resolution" value="3.10 A"/>
    <property type="chains" value="A/B=56-615"/>
</dbReference>
<dbReference type="PDB" id="3D0I">
    <property type="method" value="X-ray"/>
    <property type="resolution" value="2.90 A"/>
    <property type="chains" value="A/B=56-615"/>
</dbReference>
<dbReference type="PDB" id="3KBH">
    <property type="method" value="X-ray"/>
    <property type="resolution" value="3.31 A"/>
    <property type="chains" value="A/B/C/D=19-615"/>
</dbReference>
<dbReference type="PDB" id="3SCI">
    <property type="method" value="X-ray"/>
    <property type="resolution" value="2.90 A"/>
    <property type="chains" value="A/B=19-615"/>
</dbReference>
<dbReference type="PDB" id="3SCJ">
    <property type="method" value="X-ray"/>
    <property type="resolution" value="3.00 A"/>
    <property type="chains" value="A/B=19-615"/>
</dbReference>
<dbReference type="PDB" id="3SCK">
    <property type="method" value="X-ray"/>
    <property type="resolution" value="3.00 A"/>
    <property type="chains" value="A/B=83-615"/>
</dbReference>
<dbReference type="PDB" id="3SCL">
    <property type="method" value="X-ray"/>
    <property type="resolution" value="3.00 A"/>
    <property type="chains" value="A/B=83-615"/>
</dbReference>
<dbReference type="PDB" id="6ACG">
    <property type="method" value="EM"/>
    <property type="resolution" value="5.40 A"/>
    <property type="chains" value="D=19-615"/>
</dbReference>
<dbReference type="PDB" id="6ACJ">
    <property type="method" value="EM"/>
    <property type="resolution" value="4.20 A"/>
    <property type="chains" value="D=19-615"/>
</dbReference>
<dbReference type="PDB" id="6ACK">
    <property type="method" value="EM"/>
    <property type="resolution" value="4.50 A"/>
    <property type="chains" value="D=19-615"/>
</dbReference>
<dbReference type="PDB" id="6CS2">
    <property type="method" value="EM"/>
    <property type="resolution" value="4.40 A"/>
    <property type="chains" value="D=19-615"/>
</dbReference>
<dbReference type="PDB" id="6LZG">
    <property type="method" value="X-ray"/>
    <property type="resolution" value="2.50 A"/>
    <property type="chains" value="A=19-614"/>
</dbReference>
<dbReference type="PDB" id="6M0J">
    <property type="method" value="X-ray"/>
    <property type="resolution" value="2.45 A"/>
    <property type="chains" value="A=19-615"/>
</dbReference>
<dbReference type="PDB" id="6M17">
    <property type="method" value="EM"/>
    <property type="resolution" value="2.90 A"/>
    <property type="chains" value="B/D=18-805"/>
</dbReference>
<dbReference type="PDB" id="6M18">
    <property type="method" value="EM"/>
    <property type="resolution" value="2.90 A"/>
    <property type="chains" value="B/D=18-805"/>
</dbReference>
<dbReference type="PDB" id="6M1D">
    <property type="method" value="EM"/>
    <property type="resolution" value="4.50 A"/>
    <property type="chains" value="B/D=18-805"/>
</dbReference>
<dbReference type="PDB" id="6VW1">
    <property type="method" value="X-ray"/>
    <property type="resolution" value="2.68 A"/>
    <property type="chains" value="A/B=19-615"/>
</dbReference>
<dbReference type="PDB" id="7A91">
    <property type="method" value="EM"/>
    <property type="resolution" value="3.60 A"/>
    <property type="chains" value="D=19-613"/>
</dbReference>
<dbReference type="PDB" id="7A92">
    <property type="method" value="EM"/>
    <property type="resolution" value="4.20 A"/>
    <property type="chains" value="D=19-613"/>
</dbReference>
<dbReference type="PDB" id="7A94">
    <property type="method" value="EM"/>
    <property type="resolution" value="3.90 A"/>
    <property type="chains" value="D=19-615"/>
</dbReference>
<dbReference type="PDB" id="7A95">
    <property type="method" value="EM"/>
    <property type="resolution" value="4.30 A"/>
    <property type="chains" value="D=19-615"/>
</dbReference>
<dbReference type="PDB" id="7A96">
    <property type="method" value="EM"/>
    <property type="resolution" value="4.80 A"/>
    <property type="chains" value="D=19-615"/>
</dbReference>
<dbReference type="PDB" id="7A97">
    <property type="method" value="EM"/>
    <property type="resolution" value="4.40 A"/>
    <property type="chains" value="D/E=19-615"/>
</dbReference>
<dbReference type="PDB" id="7A98">
    <property type="method" value="EM"/>
    <property type="resolution" value="5.40 A"/>
    <property type="chains" value="D/E/F=19-615"/>
</dbReference>
<dbReference type="PDB" id="7BH9">
    <property type="method" value="EM"/>
    <property type="resolution" value="2.90 A"/>
    <property type="chains" value="A=19-615"/>
</dbReference>
<dbReference type="PDB" id="7CT5">
    <property type="method" value="EM"/>
    <property type="resolution" value="4.00 A"/>
    <property type="chains" value="D/E/F=18-805"/>
</dbReference>
<dbReference type="PDB" id="7DDO">
    <property type="method" value="EM"/>
    <property type="resolution" value="3.40 A"/>
    <property type="chains" value="A=19-615"/>
</dbReference>
<dbReference type="PDB" id="7DDP">
    <property type="method" value="EM"/>
    <property type="resolution" value="3.40 A"/>
    <property type="chains" value="A=19-615"/>
</dbReference>
<dbReference type="PDB" id="7DF4">
    <property type="method" value="EM"/>
    <property type="resolution" value="3.80 A"/>
    <property type="chains" value="A=17-615"/>
</dbReference>
<dbReference type="PDB" id="7DMU">
    <property type="method" value="X-ray"/>
    <property type="resolution" value="3.20 A"/>
    <property type="chains" value="A/C=18-615"/>
</dbReference>
<dbReference type="PDB" id="7DQA">
    <property type="method" value="EM"/>
    <property type="resolution" value="2.80 A"/>
    <property type="chains" value="A=1-805"/>
</dbReference>
<dbReference type="PDB" id="7DRV">
    <property type="method" value="X-ray"/>
    <property type="resolution" value="3.09 A"/>
    <property type="chains" value="A/B=19-614"/>
</dbReference>
<dbReference type="PDB" id="7DWX">
    <property type="method" value="EM"/>
    <property type="resolution" value="8.30 A"/>
    <property type="chains" value="B/D=2-805"/>
</dbReference>
<dbReference type="PDB" id="7DX4">
    <property type="method" value="EM"/>
    <property type="resolution" value="3.60 A"/>
    <property type="chains" value="A=19-615"/>
</dbReference>
<dbReference type="PDB" id="7DX5">
    <property type="method" value="EM"/>
    <property type="resolution" value="3.30 A"/>
    <property type="chains" value="D=2-805"/>
</dbReference>
<dbReference type="PDB" id="7DX6">
    <property type="method" value="EM"/>
    <property type="resolution" value="3.00 A"/>
    <property type="chains" value="D=2-805"/>
</dbReference>
<dbReference type="PDB" id="7DX7">
    <property type="method" value="EM"/>
    <property type="resolution" value="3.40 A"/>
    <property type="chains" value="D=2-805"/>
</dbReference>
<dbReference type="PDB" id="7DX8">
    <property type="method" value="EM"/>
    <property type="resolution" value="2.90 A"/>
    <property type="chains" value="D/E=2-805"/>
</dbReference>
<dbReference type="PDB" id="7DX9">
    <property type="method" value="EM"/>
    <property type="resolution" value="3.60 A"/>
    <property type="chains" value="D/E=2-805"/>
</dbReference>
<dbReference type="PDB" id="7E7E">
    <property type="method" value="X-ray"/>
    <property type="resolution" value="3.80 A"/>
    <property type="chains" value="A/B=18-615"/>
</dbReference>
<dbReference type="PDB" id="7EDJ">
    <property type="method" value="EM"/>
    <property type="resolution" value="3.30 A"/>
    <property type="chains" value="I/J/K=1-617"/>
</dbReference>
<dbReference type="PDB" id="7EFP">
    <property type="method" value="X-ray"/>
    <property type="resolution" value="2.70 A"/>
    <property type="chains" value="A=19-615"/>
</dbReference>
<dbReference type="PDB" id="7EFR">
    <property type="method" value="X-ray"/>
    <property type="resolution" value="2.49 A"/>
    <property type="chains" value="A=19-615"/>
</dbReference>
<dbReference type="PDB" id="7EKC">
    <property type="method" value="X-ray"/>
    <property type="resolution" value="2.80 A"/>
    <property type="chains" value="A=19-615"/>
</dbReference>
<dbReference type="PDB" id="7EKE">
    <property type="method" value="X-ray"/>
    <property type="resolution" value="2.70 A"/>
    <property type="chains" value="A=19-615"/>
</dbReference>
<dbReference type="PDB" id="7EKF">
    <property type="method" value="X-ray"/>
    <property type="resolution" value="2.85 A"/>
    <property type="chains" value="A=19-615"/>
</dbReference>
<dbReference type="PDB" id="7EKG">
    <property type="method" value="X-ray"/>
    <property type="resolution" value="2.63 A"/>
    <property type="chains" value="A=19-615"/>
</dbReference>
<dbReference type="PDB" id="7EKH">
    <property type="method" value="X-ray"/>
    <property type="resolution" value="2.40 A"/>
    <property type="chains" value="A=19-615"/>
</dbReference>
<dbReference type="PDB" id="7FDG">
    <property type="method" value="EM"/>
    <property type="resolution" value="3.69 A"/>
    <property type="chains" value="A=1-615"/>
</dbReference>
<dbReference type="PDB" id="7FDH">
    <property type="method" value="EM"/>
    <property type="resolution" value="3.72 A"/>
    <property type="chains" value="A=1-615"/>
</dbReference>
<dbReference type="PDB" id="7FDI">
    <property type="method" value="EM"/>
    <property type="resolution" value="3.12 A"/>
    <property type="chains" value="A=1-615"/>
</dbReference>
<dbReference type="PDB" id="7FEM">
    <property type="method" value="EM"/>
    <property type="resolution" value="4.10 A"/>
    <property type="chains" value="D=18-740"/>
</dbReference>
<dbReference type="PDB" id="7JVO">
    <property type="method" value="X-ray"/>
    <property type="resolution" value="2.20 A"/>
    <property type="chains" value="B=766-779"/>
</dbReference>
<dbReference type="PDB" id="7KJ2">
    <property type="method" value="EM"/>
    <property type="resolution" value="3.60 A"/>
    <property type="chains" value="D=11-615"/>
</dbReference>
<dbReference type="PDB" id="7KJ3">
    <property type="method" value="EM"/>
    <property type="resolution" value="3.70 A"/>
    <property type="chains" value="D/E=11-615"/>
</dbReference>
<dbReference type="PDB" id="7KJ4">
    <property type="method" value="EM"/>
    <property type="resolution" value="3.40 A"/>
    <property type="chains" value="D/E/F=11-615"/>
</dbReference>
<dbReference type="PDB" id="7KMB">
    <property type="method" value="EM"/>
    <property type="resolution" value="3.39 A"/>
    <property type="chains" value="F=19-615"/>
</dbReference>
<dbReference type="PDB" id="7KMS">
    <property type="method" value="EM"/>
    <property type="resolution" value="3.64 A"/>
    <property type="chains" value="D/E/F=19-615"/>
</dbReference>
<dbReference type="PDB" id="7KMZ">
    <property type="method" value="EM"/>
    <property type="resolution" value="3.62 A"/>
    <property type="chains" value="D/E=19-615"/>
</dbReference>
<dbReference type="PDB" id="7KNB">
    <property type="method" value="EM"/>
    <property type="resolution" value="3.93 A"/>
    <property type="chains" value="D=19-615"/>
</dbReference>
<dbReference type="PDB" id="7KNE">
    <property type="method" value="EM"/>
    <property type="resolution" value="3.85 A"/>
    <property type="chains" value="D=19-615"/>
</dbReference>
<dbReference type="PDB" id="7KNH">
    <property type="method" value="EM"/>
    <property type="resolution" value="3.74 A"/>
    <property type="chains" value="D/E=19-615"/>
</dbReference>
<dbReference type="PDB" id="7KNI">
    <property type="method" value="EM"/>
    <property type="resolution" value="3.91 A"/>
    <property type="chains" value="D/E/F=19-615"/>
</dbReference>
<dbReference type="PDB" id="7L0N">
    <property type="method" value="X-ray"/>
    <property type="resolution" value="2.78 A"/>
    <property type="chains" value="E/F=19-615"/>
</dbReference>
<dbReference type="PDB" id="7L7F">
    <property type="method" value="EM"/>
    <property type="resolution" value="3.24 A"/>
    <property type="chains" value="B/D=1-805"/>
</dbReference>
<dbReference type="PDB" id="7LO4">
    <property type="method" value="X-ray"/>
    <property type="resolution" value="2.46 A"/>
    <property type="chains" value="A=19-614"/>
</dbReference>
<dbReference type="PDB" id="7MJM">
    <property type="method" value="EM"/>
    <property type="resolution" value="2.83 A"/>
    <property type="chains" value="D/E=18-615"/>
</dbReference>
<dbReference type="PDB" id="7MJN">
    <property type="method" value="EM"/>
    <property type="resolution" value="3.29 A"/>
    <property type="chains" value="E=18-615"/>
</dbReference>
<dbReference type="PDB" id="7NXC">
    <property type="method" value="X-ray"/>
    <property type="resolution" value="3.14 A"/>
    <property type="chains" value="A=19-615"/>
</dbReference>
<dbReference type="PDB" id="7P19">
    <property type="method" value="X-ray"/>
    <property type="resolution" value="3.24 A"/>
    <property type="chains" value="A/B=19-615"/>
</dbReference>
<dbReference type="PDB" id="7P55">
    <property type="method" value="NMR"/>
    <property type="chains" value="A=21-42"/>
</dbReference>
<dbReference type="PDB" id="7P8I">
    <property type="method" value="X-ray"/>
    <property type="resolution" value="4.50 A"/>
    <property type="chains" value="A/C=19-615"/>
</dbReference>
<dbReference type="PDB" id="7P8J">
    <property type="method" value="X-ray"/>
    <property type="resolution" value="6.58 A"/>
    <property type="chains" value="A/C=19-615"/>
</dbReference>
<dbReference type="PDB" id="7PKI">
    <property type="method" value="X-ray"/>
    <property type="resolution" value="2.94 A"/>
    <property type="chains" value="A=19-614"/>
</dbReference>
<dbReference type="PDB" id="7R0Z">
    <property type="method" value="EM"/>
    <property type="resolution" value="3.50 A"/>
    <property type="chains" value="D=19-613"/>
</dbReference>
<dbReference type="PDB" id="7R10">
    <property type="method" value="EM"/>
    <property type="resolution" value="4.00 A"/>
    <property type="chains" value="D=19-613"/>
</dbReference>
<dbReference type="PDB" id="7R11">
    <property type="method" value="EM"/>
    <property type="resolution" value="3.50 A"/>
    <property type="chains" value="D=19-613"/>
</dbReference>
<dbReference type="PDB" id="7R12">
    <property type="method" value="EM"/>
    <property type="resolution" value="3.30 A"/>
    <property type="chains" value="D=19-613"/>
</dbReference>
<dbReference type="PDB" id="7R1A">
    <property type="method" value="EM"/>
    <property type="resolution" value="3.90 A"/>
    <property type="chains" value="D/E/F=19-613"/>
</dbReference>
<dbReference type="PDB" id="7RPV">
    <property type="method" value="X-ray"/>
    <property type="resolution" value="3.54 A"/>
    <property type="chains" value="A/B/C/D=19-615"/>
</dbReference>
<dbReference type="PDB" id="7SN0">
    <property type="method" value="X-ray"/>
    <property type="resolution" value="3.08 A"/>
    <property type="chains" value="A/B=1-615"/>
</dbReference>
<dbReference type="PDB" id="7SXX">
    <property type="method" value="EM"/>
    <property type="resolution" value="2.66 A"/>
    <property type="chains" value="E=18-615"/>
</dbReference>
<dbReference type="PDB" id="7SXY">
    <property type="method" value="EM"/>
    <property type="resolution" value="2.79 A"/>
    <property type="chains" value="E=18-615"/>
</dbReference>
<dbReference type="PDB" id="7SXZ">
    <property type="method" value="EM"/>
    <property type="resolution" value="2.61 A"/>
    <property type="chains" value="E=18-615"/>
</dbReference>
<dbReference type="PDB" id="7SY0">
    <property type="method" value="EM"/>
    <property type="resolution" value="3.00 A"/>
    <property type="chains" value="E=18-615"/>
</dbReference>
<dbReference type="PDB" id="7SY1">
    <property type="method" value="EM"/>
    <property type="resolution" value="2.83 A"/>
    <property type="chains" value="E=18-615"/>
</dbReference>
<dbReference type="PDB" id="7SY2">
    <property type="method" value="EM"/>
    <property type="resolution" value="3.11 A"/>
    <property type="chains" value="E=18-615"/>
</dbReference>
<dbReference type="PDB" id="7SY3">
    <property type="method" value="EM"/>
    <property type="resolution" value="2.95 A"/>
    <property type="chains" value="E=18-615"/>
</dbReference>
<dbReference type="PDB" id="7SY4">
    <property type="method" value="EM"/>
    <property type="resolution" value="3.35 A"/>
    <property type="chains" value="E=18-615"/>
</dbReference>
<dbReference type="PDB" id="7SY5">
    <property type="method" value="EM"/>
    <property type="resolution" value="2.59 A"/>
    <property type="chains" value="D/E/F=18-615"/>
</dbReference>
<dbReference type="PDB" id="7SY6">
    <property type="method" value="EM"/>
    <property type="resolution" value="2.81 A"/>
    <property type="chains" value="E=18-615"/>
</dbReference>
<dbReference type="PDB" id="7SY7">
    <property type="method" value="EM"/>
    <property type="resolution" value="2.81 A"/>
    <property type="chains" value="E=18-615"/>
</dbReference>
<dbReference type="PDB" id="7SY8">
    <property type="method" value="EM"/>
    <property type="resolution" value="3.14 A"/>
    <property type="chains" value="E=18-615"/>
</dbReference>
<dbReference type="PDB" id="7T9K">
    <property type="method" value="EM"/>
    <property type="resolution" value="2.45 A"/>
    <property type="chains" value="D/E=18-615"/>
</dbReference>
<dbReference type="PDB" id="7T9L">
    <property type="method" value="EM"/>
    <property type="resolution" value="2.66 A"/>
    <property type="chains" value="D=18-615"/>
</dbReference>
<dbReference type="PDB" id="7TEW">
    <property type="method" value="EM"/>
    <property type="resolution" value="3.52 A"/>
    <property type="chains" value="E=18-615"/>
</dbReference>
<dbReference type="PDB" id="7TEX">
    <property type="method" value="EM"/>
    <property type="resolution" value="3.27 A"/>
    <property type="chains" value="E=18-615"/>
</dbReference>
<dbReference type="PDB" id="7TEZ">
    <property type="method" value="EM"/>
    <property type="resolution" value="3.27 A"/>
    <property type="chains" value="E=18-615"/>
</dbReference>
<dbReference type="PDB" id="7TF0">
    <property type="method" value="EM"/>
    <property type="resolution" value="3.02 A"/>
    <property type="chains" value="E=18-615"/>
</dbReference>
<dbReference type="PDB" id="7TN0">
    <property type="method" value="X-ray"/>
    <property type="resolution" value="2.85 A"/>
    <property type="chains" value="E/F=19-615"/>
</dbReference>
<dbReference type="PDB" id="7U0N">
    <property type="method" value="X-ray"/>
    <property type="resolution" value="2.61 A"/>
    <property type="chains" value="A/B=19-615"/>
</dbReference>
<dbReference type="PDB" id="7UFK">
    <property type="method" value="X-ray"/>
    <property type="resolution" value="2.38 A"/>
    <property type="chains" value="A/B=19-615"/>
</dbReference>
<dbReference type="PDB" id="7UFL">
    <property type="method" value="X-ray"/>
    <property type="resolution" value="2.84 A"/>
    <property type="chains" value="A/B=19-615"/>
</dbReference>
<dbReference type="PDB" id="7V61">
    <property type="method" value="EM"/>
    <property type="resolution" value="3.20 A"/>
    <property type="chains" value="B/D=2-805"/>
</dbReference>
<dbReference type="PDB" id="7V7Z">
    <property type="method" value="EM"/>
    <property type="resolution" value="3.10 A"/>
    <property type="chains" value="D/E/F=1-617"/>
</dbReference>
<dbReference type="PDB" id="7V80">
    <property type="method" value="EM"/>
    <property type="resolution" value="3.90 A"/>
    <property type="chains" value="F=1-617"/>
</dbReference>
<dbReference type="PDB" id="7V81">
    <property type="method" value="EM"/>
    <property type="resolution" value="3.20 A"/>
    <property type="chains" value="D/E=1-617"/>
</dbReference>
<dbReference type="PDB" id="7V82">
    <property type="method" value="EM"/>
    <property type="resolution" value="2.80 A"/>
    <property type="chains" value="D/E/F=1-617"/>
</dbReference>
<dbReference type="PDB" id="7V83">
    <property type="method" value="EM"/>
    <property type="resolution" value="2.80 A"/>
    <property type="chains" value="D/E/F=1-617"/>
</dbReference>
<dbReference type="PDB" id="7V84">
    <property type="method" value="EM"/>
    <property type="resolution" value="3.00 A"/>
    <property type="chains" value="F=1-617"/>
</dbReference>
<dbReference type="PDB" id="7V85">
    <property type="method" value="EM"/>
    <property type="resolution" value="3.30 A"/>
    <property type="chains" value="F/H=1-617"/>
</dbReference>
<dbReference type="PDB" id="7V86">
    <property type="method" value="EM"/>
    <property type="resolution" value="2.80 A"/>
    <property type="chains" value="F/G/H=1-617"/>
</dbReference>
<dbReference type="PDB" id="7V87">
    <property type="method" value="EM"/>
    <property type="resolution" value="3.30 A"/>
    <property type="chains" value="F=1-617"/>
</dbReference>
<dbReference type="PDB" id="7V88">
    <property type="method" value="EM"/>
    <property type="resolution" value="3.30 A"/>
    <property type="chains" value="F/G=1-617"/>
</dbReference>
<dbReference type="PDB" id="7V89">
    <property type="method" value="EM"/>
    <property type="resolution" value="2.80 A"/>
    <property type="chains" value="F/G/H=1-617"/>
</dbReference>
<dbReference type="PDB" id="7V8A">
    <property type="method" value="EM"/>
    <property type="resolution" value="2.70 A"/>
    <property type="chains" value="F/G/H=1-617"/>
</dbReference>
<dbReference type="PDB" id="7V8B">
    <property type="method" value="EM"/>
    <property type="resolution" value="3.20 A"/>
    <property type="chains" value="F=1-617"/>
</dbReference>
<dbReference type="PDB" id="7VIB">
    <property type="method" value="X-ray"/>
    <property type="resolution" value="3.20 A"/>
    <property type="chains" value="A/C=19-615"/>
</dbReference>
<dbReference type="PDB" id="7VX4">
    <property type="method" value="EM"/>
    <property type="resolution" value="3.90 A"/>
    <property type="chains" value="A=17-615"/>
</dbReference>
<dbReference type="PDB" id="7VX5">
    <property type="method" value="EM"/>
    <property type="resolution" value="3.80 A"/>
    <property type="chains" value="A=17-615"/>
</dbReference>
<dbReference type="PDB" id="7VX9">
    <property type="method" value="EM"/>
    <property type="resolution" value="4.00 A"/>
    <property type="chains" value="C=19-615"/>
</dbReference>
<dbReference type="PDB" id="7VXA">
    <property type="method" value="EM"/>
    <property type="resolution" value="3.90 A"/>
    <property type="chains" value="C=17-615"/>
</dbReference>
<dbReference type="PDB" id="7VXB">
    <property type="method" value="EM"/>
    <property type="resolution" value="3.90 A"/>
    <property type="chains" value="C=17-615"/>
</dbReference>
<dbReference type="PDB" id="7VXC">
    <property type="method" value="EM"/>
    <property type="resolution" value="3.90 A"/>
    <property type="chains" value="C=17-615"/>
</dbReference>
<dbReference type="PDB" id="7VXD">
    <property type="method" value="EM"/>
    <property type="resolution" value="4.00 A"/>
    <property type="chains" value="C=17-615"/>
</dbReference>
<dbReference type="PDB" id="7VXF">
    <property type="method" value="EM"/>
    <property type="resolution" value="3.60 A"/>
    <property type="chains" value="C=17-615"/>
</dbReference>
<dbReference type="PDB" id="7VXK">
    <property type="method" value="EM"/>
    <property type="resolution" value="3.70 A"/>
    <property type="chains" value="C=17-615"/>
</dbReference>
<dbReference type="PDB" id="7VXM">
    <property type="method" value="EM"/>
    <property type="resolution" value="3.60 A"/>
    <property type="chains" value="C=17-615"/>
</dbReference>
<dbReference type="PDB" id="7W98">
    <property type="method" value="EM"/>
    <property type="resolution" value="3.60 A"/>
    <property type="chains" value="D=17-615"/>
</dbReference>
<dbReference type="PDB" id="7W99">
    <property type="method" value="EM"/>
    <property type="resolution" value="3.40 A"/>
    <property type="chains" value="B=17-615"/>
</dbReference>
<dbReference type="PDB" id="7W9B">
    <property type="method" value="EM"/>
    <property type="resolution" value="3.40 A"/>
    <property type="chains" value="A=17-615"/>
</dbReference>
<dbReference type="PDB" id="7W9C">
    <property type="method" value="EM"/>
    <property type="resolution" value="3.20 A"/>
    <property type="chains" value="A=17-615"/>
</dbReference>
<dbReference type="PDB" id="7W9I">
    <property type="method" value="EM"/>
    <property type="resolution" value="3.40 A"/>
    <property type="chains" value="A=17-615"/>
</dbReference>
<dbReference type="PDB" id="7WBL">
    <property type="method" value="EM"/>
    <property type="resolution" value="3.40 A"/>
    <property type="chains" value="A=19-614"/>
</dbReference>
<dbReference type="PDB" id="7WBP">
    <property type="method" value="X-ray"/>
    <property type="resolution" value="3.00 A"/>
    <property type="chains" value="A=19-614"/>
</dbReference>
<dbReference type="PDB" id="7WBQ">
    <property type="method" value="X-ray"/>
    <property type="resolution" value="3.34 A"/>
    <property type="chains" value="A/C=19-614"/>
</dbReference>
<dbReference type="PDB" id="7WGB">
    <property type="method" value="EM"/>
    <property type="resolution" value="3.50 A"/>
    <property type="chains" value="D/F=19-612"/>
</dbReference>
<dbReference type="PDB" id="7WGC">
    <property type="method" value="EM"/>
    <property type="resolution" value="3.60 A"/>
    <property type="chains" value="A=19-612"/>
</dbReference>
<dbReference type="PDB" id="7WHH">
    <property type="method" value="X-ray"/>
    <property type="resolution" value="2.60 A"/>
    <property type="chains" value="A=19-615"/>
</dbReference>
<dbReference type="PDB" id="7WK4">
    <property type="method" value="EM"/>
    <property type="resolution" value="3.69 A"/>
    <property type="chains" value="A=17-615"/>
</dbReference>
<dbReference type="PDB" id="7WK5">
    <property type="method" value="EM"/>
    <property type="resolution" value="3.66 A"/>
    <property type="chains" value="A=17-615"/>
</dbReference>
<dbReference type="PDB" id="7WK6">
    <property type="method" value="EM"/>
    <property type="resolution" value="3.67 A"/>
    <property type="chains" value="A=17-615"/>
</dbReference>
<dbReference type="PDB" id="7WNM">
    <property type="method" value="X-ray"/>
    <property type="resolution" value="2.70 A"/>
    <property type="chains" value="B=1-740"/>
</dbReference>
<dbReference type="PDB" id="7WPA">
    <property type="method" value="EM"/>
    <property type="resolution" value="2.77 A"/>
    <property type="chains" value="D=1-805"/>
</dbReference>
<dbReference type="PDB" id="7WPB">
    <property type="method" value="EM"/>
    <property type="resolution" value="2.79 A"/>
    <property type="chains" value="D=1-805"/>
</dbReference>
<dbReference type="PDB" id="7WPC">
    <property type="method" value="EM"/>
    <property type="resolution" value="2.57 A"/>
    <property type="chains" value="D=1-805"/>
</dbReference>
<dbReference type="PDB" id="7WS8">
    <property type="method" value="EM"/>
    <property type="resolution" value="3.00 A"/>
    <property type="chains" value="D/E=19-613"/>
</dbReference>
<dbReference type="PDB" id="7WS9">
    <property type="method" value="EM"/>
    <property type="resolution" value="2.90 A"/>
    <property type="chains" value="D=19-613"/>
</dbReference>
<dbReference type="PDB" id="7WSA">
    <property type="method" value="EM"/>
    <property type="resolution" value="3.00 A"/>
    <property type="chains" value="D=19-613"/>
</dbReference>
<dbReference type="PDB" id="7WVP">
    <property type="method" value="EM"/>
    <property type="resolution" value="3.70 A"/>
    <property type="chains" value="A=17-615"/>
</dbReference>
<dbReference type="PDB" id="7WVQ">
    <property type="method" value="EM"/>
    <property type="resolution" value="4.04 A"/>
    <property type="chains" value="A=17-615"/>
</dbReference>
<dbReference type="PDB" id="7XAZ">
    <property type="method" value="X-ray"/>
    <property type="resolution" value="3.00 A"/>
    <property type="chains" value="A/C=19-614"/>
</dbReference>
<dbReference type="PDB" id="7XB0">
    <property type="method" value="X-ray"/>
    <property type="resolution" value="2.90 A"/>
    <property type="chains" value="A=19-614"/>
</dbReference>
<dbReference type="PDB" id="7XB1">
    <property type="method" value="X-ray"/>
    <property type="resolution" value="2.70 A"/>
    <property type="chains" value="A=19-614"/>
</dbReference>
<dbReference type="PDB" id="7XBF">
    <property type="method" value="X-ray"/>
    <property type="resolution" value="3.51 A"/>
    <property type="chains" value="A/C=18-615"/>
</dbReference>
<dbReference type="PDB" id="7XBG">
    <property type="method" value="X-ray"/>
    <property type="resolution" value="3.37 A"/>
    <property type="chains" value="A/C=18-615"/>
</dbReference>
<dbReference type="PDB" id="7XBH">
    <property type="method" value="X-ray"/>
    <property type="resolution" value="3.02 A"/>
    <property type="chains" value="A=18-619"/>
</dbReference>
<dbReference type="PDB" id="7XCH">
    <property type="method" value="EM"/>
    <property type="resolution" value="3.40 A"/>
    <property type="chains" value="D/E=19-614"/>
</dbReference>
<dbReference type="PDB" id="7XCI">
    <property type="method" value="EM"/>
    <property type="resolution" value="3.20 A"/>
    <property type="chains" value="A=19-614"/>
</dbReference>
<dbReference type="PDB" id="7XCP">
    <property type="method" value="EM"/>
    <property type="resolution" value="3.05 A"/>
    <property type="chains" value="A=19-614"/>
</dbReference>
<dbReference type="PDB" id="7XID">
    <property type="method" value="EM"/>
    <property type="resolution" value="3.30 A"/>
    <property type="chains" value="D/E=2-805"/>
</dbReference>
<dbReference type="PDB" id="7XO7">
    <property type="method" value="EM"/>
    <property type="resolution" value="3.38 A"/>
    <property type="chains" value="E/F=1-805"/>
</dbReference>
<dbReference type="PDB" id="7XO8">
    <property type="method" value="EM"/>
    <property type="resolution" value="3.48 A"/>
    <property type="chains" value="D/E/F=1-805"/>
</dbReference>
<dbReference type="PDB" id="7XO9">
    <property type="method" value="EM"/>
    <property type="resolution" value="3.00 A"/>
    <property type="chains" value="D=1-805"/>
</dbReference>
<dbReference type="PDB" id="7XWA">
    <property type="method" value="X-ray"/>
    <property type="resolution" value="3.36 A"/>
    <property type="chains" value="A/C=19-617"/>
</dbReference>
<dbReference type="PDB" id="7Y1Y">
    <property type="method" value="EM"/>
    <property type="resolution" value="3.30 A"/>
    <property type="chains" value="D/F/H=19-615"/>
</dbReference>
<dbReference type="PDB" id="7Y1Z">
    <property type="method" value="EM"/>
    <property type="resolution" value="3.40 A"/>
    <property type="chains" value="D/F/H=19-615"/>
</dbReference>
<dbReference type="PDB" id="7Y20">
    <property type="method" value="EM"/>
    <property type="resolution" value="3.80 A"/>
    <property type="chains" value="D/F=19-615"/>
</dbReference>
<dbReference type="PDB" id="7Y21">
    <property type="method" value="EM"/>
    <property type="resolution" value="2.80 A"/>
    <property type="chains" value="D/F/H=19-615"/>
</dbReference>
<dbReference type="PDB" id="7Y75">
    <property type="method" value="EM"/>
    <property type="resolution" value="3.10 A"/>
    <property type="chains" value="A/C=2-805"/>
</dbReference>
<dbReference type="PDB" id="7Y76">
    <property type="method" value="EM"/>
    <property type="resolution" value="3.20 A"/>
    <property type="chains" value="A/C=2-805"/>
</dbReference>
<dbReference type="PDB" id="7Y9Z">
    <property type="method" value="EM"/>
    <property type="resolution" value="2.85 A"/>
    <property type="chains" value="D=19-614"/>
</dbReference>
<dbReference type="PDB" id="7YA0">
    <property type="method" value="EM"/>
    <property type="resolution" value="3.10 A"/>
    <property type="chains" value="D/E/F=19-614"/>
</dbReference>
<dbReference type="PDB" id="7YA1">
    <property type="method" value="EM"/>
    <property type="resolution" value="3.11 A"/>
    <property type="chains" value="A=19-614"/>
</dbReference>
<dbReference type="PDB" id="7YDI">
    <property type="method" value="EM"/>
    <property type="resolution" value="3.98 A"/>
    <property type="chains" value="A=19-615"/>
</dbReference>
<dbReference type="PDB" id="7YEG">
    <property type="method" value="EM"/>
    <property type="resolution" value="3.73 A"/>
    <property type="chains" value="E/J/M=19-615"/>
</dbReference>
<dbReference type="PDB" id="7YHW">
    <property type="method" value="EM"/>
    <property type="resolution" value="3.09 A"/>
    <property type="chains" value="A=19-614"/>
</dbReference>
<dbReference type="PDB" id="7YJ3">
    <property type="method" value="EM"/>
    <property type="resolution" value="3.14 A"/>
    <property type="chains" value="A=19-614"/>
</dbReference>
<dbReference type="PDB" id="7YR2">
    <property type="method" value="EM"/>
    <property type="resolution" value="3.30 A"/>
    <property type="chains" value="A=19-615"/>
</dbReference>
<dbReference type="PDB" id="7YR3">
    <property type="method" value="EM"/>
    <property type="resolution" value="3.52 A"/>
    <property type="chains" value="D/G=19-615"/>
</dbReference>
<dbReference type="PDB" id="7YR4">
    <property type="method" value="EM"/>
    <property type="resolution" value="4.12 A"/>
    <property type="chains" value="A=19-615"/>
</dbReference>
<dbReference type="PDB" id="7ZDQ">
    <property type="method" value="EM"/>
    <property type="resolution" value="3.20 A"/>
    <property type="chains" value="A=19-615"/>
</dbReference>
<dbReference type="PDB" id="7ZF7">
    <property type="method" value="X-ray"/>
    <property type="resolution" value="3.46 A"/>
    <property type="chains" value="A=19-615"/>
</dbReference>
<dbReference type="PDB" id="8AQS">
    <property type="method" value="EM"/>
    <property type="resolution" value="2.92 A"/>
    <property type="chains" value="B=19-620"/>
</dbReference>
<dbReference type="PDB" id="8ASY">
    <property type="method" value="X-ray"/>
    <property type="resolution" value="2.85 A"/>
    <property type="chains" value="A=19-615"/>
</dbReference>
<dbReference type="PDB" id="8B9P">
    <property type="method" value="X-ray"/>
    <property type="resolution" value="2.11 A"/>
    <property type="chains" value="A/B=19-615"/>
</dbReference>
<dbReference type="PDB" id="8BFW">
    <property type="method" value="X-ray"/>
    <property type="resolution" value="2.33 A"/>
    <property type="chains" value="A/C=19-615"/>
</dbReference>
<dbReference type="PDB" id="8BN1">
    <property type="method" value="X-ray"/>
    <property type="resolution" value="2.61 A"/>
    <property type="chains" value="A/B=19-615"/>
</dbReference>
<dbReference type="PDB" id="8BYJ">
    <property type="method" value="X-ray"/>
    <property type="resolution" value="2.07 A"/>
    <property type="chains" value="A/B=19-615"/>
</dbReference>
<dbReference type="PDB" id="8DF5">
    <property type="method" value="X-ray"/>
    <property type="resolution" value="2.70 A"/>
    <property type="chains" value="E/F=1-805"/>
</dbReference>
<dbReference type="PDB" id="8DLJ">
    <property type="method" value="EM"/>
    <property type="resolution" value="2.91 A"/>
    <property type="chains" value="E=18-615"/>
</dbReference>
<dbReference type="PDB" id="8DLK">
    <property type="method" value="EM"/>
    <property type="resolution" value="3.04 A"/>
    <property type="chains" value="E=18-615"/>
</dbReference>
<dbReference type="PDB" id="8DLM">
    <property type="method" value="EM"/>
    <property type="resolution" value="2.89 A"/>
    <property type="chains" value="E=18-615"/>
</dbReference>
<dbReference type="PDB" id="8DLN">
    <property type="method" value="EM"/>
    <property type="resolution" value="3.04 A"/>
    <property type="chains" value="E=18-615"/>
</dbReference>
<dbReference type="PDB" id="8DLP">
    <property type="method" value="EM"/>
    <property type="resolution" value="2.64 A"/>
    <property type="chains" value="D/E/F=18-615"/>
</dbReference>
<dbReference type="PDB" id="8DLQ">
    <property type="method" value="EM"/>
    <property type="resolution" value="2.77 A"/>
    <property type="chains" value="E=18-615"/>
</dbReference>
<dbReference type="PDB" id="8DLU">
    <property type="method" value="EM"/>
    <property type="resolution" value="3.14 A"/>
    <property type="chains" value="D/E=18-615"/>
</dbReference>
<dbReference type="PDB" id="8DLV">
    <property type="method" value="EM"/>
    <property type="resolution" value="3.11 A"/>
    <property type="chains" value="E=18-615"/>
</dbReference>
<dbReference type="PDB" id="8DM5">
    <property type="method" value="EM"/>
    <property type="resolution" value="2.51 A"/>
    <property type="chains" value="D/E=18-615"/>
</dbReference>
<dbReference type="PDB" id="8DM6">
    <property type="method" value="EM"/>
    <property type="resolution" value="2.77 A"/>
    <property type="chains" value="D=18-615"/>
</dbReference>
<dbReference type="PDB" id="8DV1">
    <property type="method" value="EM"/>
    <property type="resolution" value="3.40 A"/>
    <property type="chains" value="D=18-740"/>
</dbReference>
<dbReference type="PDB" id="8DV2">
    <property type="method" value="EM"/>
    <property type="resolution" value="3.50 A"/>
    <property type="chains" value="D=18-740"/>
</dbReference>
<dbReference type="PDB" id="8E7M">
    <property type="method" value="EM"/>
    <property type="resolution" value="3.30 A"/>
    <property type="chains" value="A=1-615"/>
</dbReference>
<dbReference type="PDB" id="8FXB">
    <property type="method" value="EM"/>
    <property type="resolution" value="3.10 A"/>
    <property type="chains" value="A=19-615"/>
</dbReference>
<dbReference type="PDB" id="8FXC">
    <property type="method" value="EM"/>
    <property type="resolution" value="3.20 A"/>
    <property type="chains" value="A=19-615"/>
</dbReference>
<dbReference type="PDB" id="8H06">
    <property type="method" value="EM"/>
    <property type="resolution" value="2.66 A"/>
    <property type="chains" value="A=19-614"/>
</dbReference>
<dbReference type="PDB" id="8H5C">
    <property type="method" value="X-ray"/>
    <property type="resolution" value="2.90 A"/>
    <property type="chains" value="A=19-614"/>
</dbReference>
<dbReference type="PDB" id="8HRK">
    <property type="method" value="EM"/>
    <property type="resolution" value="3.30 A"/>
    <property type="chains" value="A=19-615"/>
</dbReference>
<dbReference type="PDB" id="8HRL">
    <property type="method" value="EM"/>
    <property type="resolution" value="2.80 A"/>
    <property type="chains" value="A=19-615"/>
</dbReference>
<dbReference type="PDB" id="8HRN">
    <property type="method" value="EM"/>
    <property type="resolution" value="3.90 A"/>
    <property type="chains" value="A=17-615"/>
</dbReference>
<dbReference type="PDB" id="8HRU">
    <property type="method" value="EM"/>
    <property type="resolution" value="3.90 A"/>
    <property type="chains" value="A=17-615"/>
</dbReference>
<dbReference type="PDB" id="8I91">
    <property type="method" value="EM"/>
    <property type="resolution" value="3.30 A"/>
    <property type="chains" value="A/C=2-805"/>
</dbReference>
<dbReference type="PDB" id="8I92">
    <property type="method" value="EM"/>
    <property type="resolution" value="3.20 A"/>
    <property type="chains" value="A/C=2-805"/>
</dbReference>
<dbReference type="PDB" id="8I93">
    <property type="method" value="EM"/>
    <property type="resolution" value="3.10 A"/>
    <property type="chains" value="A/C=20-768"/>
</dbReference>
<dbReference type="PDB" id="8I9B">
    <property type="method" value="EM"/>
    <property type="resolution" value="3.50 A"/>
    <property type="chains" value="D/E/F=19-615"/>
</dbReference>
<dbReference type="PDB" id="8I9C">
    <property type="method" value="EM"/>
    <property type="resolution" value="3.85 A"/>
    <property type="chains" value="D/E/F=19-615"/>
</dbReference>
<dbReference type="PDB" id="8I9D">
    <property type="method" value="EM"/>
    <property type="resolution" value="3.95 A"/>
    <property type="chains" value="D/E/F=19-615"/>
</dbReference>
<dbReference type="PDB" id="8I9E">
    <property type="method" value="EM"/>
    <property type="resolution" value="3.20 A"/>
    <property type="chains" value="A=19-615"/>
</dbReference>
<dbReference type="PDB" id="8I9F">
    <property type="method" value="EM"/>
    <property type="resolution" value="2.90 A"/>
    <property type="chains" value="A=19-615"/>
</dbReference>
<dbReference type="PDB" id="8I9G">
    <property type="method" value="EM"/>
    <property type="resolution" value="3.20 A"/>
    <property type="chains" value="D=19-615"/>
</dbReference>
<dbReference type="PDB" id="8I9H">
    <property type="method" value="EM"/>
    <property type="resolution" value="3.60 A"/>
    <property type="chains" value="A=19-615"/>
</dbReference>
<dbReference type="PDB" id="8IF2">
    <property type="method" value="X-ray"/>
    <property type="resolution" value="2.78 A"/>
    <property type="chains" value="A=19-617"/>
</dbReference>
<dbReference type="PDB" id="8IOU">
    <property type="method" value="EM"/>
    <property type="resolution" value="3.18 A"/>
    <property type="chains" value="D=19-617"/>
</dbReference>
<dbReference type="PDB" id="8IOV">
    <property type="method" value="EM"/>
    <property type="resolution" value="3.29 A"/>
    <property type="chains" value="A=19-617"/>
</dbReference>
<dbReference type="PDB" id="8JJE">
    <property type="method" value="EM"/>
    <property type="resolution" value="3.40 A"/>
    <property type="chains" value="A=1-615"/>
</dbReference>
<dbReference type="PDB" id="8JWH">
    <property type="method" value="EM"/>
    <property type="resolution" value="3.34 A"/>
    <property type="chains" value="A=19-615"/>
</dbReference>
<dbReference type="PDB" id="8JYN">
    <property type="method" value="EM"/>
    <property type="resolution" value="3.04 A"/>
    <property type="chains" value="D=19-617"/>
</dbReference>
<dbReference type="PDB" id="8JYO">
    <property type="method" value="EM"/>
    <property type="resolution" value="3.20 A"/>
    <property type="chains" value="D/E=19-617"/>
</dbReference>
<dbReference type="PDB" id="8JYP">
    <property type="method" value="EM"/>
    <property type="resolution" value="3.38 A"/>
    <property type="chains" value="D=19-617"/>
</dbReference>
<dbReference type="PDB" id="8P2W">
    <property type="method" value="EM"/>
    <property type="resolution" value="3.76 A"/>
    <property type="chains" value="A=1-805"/>
</dbReference>
<dbReference type="PDB" id="8P2X">
    <property type="method" value="EM"/>
    <property type="resolution" value="3.59 A"/>
    <property type="chains" value="A/B=1-805"/>
</dbReference>
<dbReference type="PDB" id="8P2Y">
    <property type="method" value="EM"/>
    <property type="resolution" value="3.46 A"/>
    <property type="chains" value="A/B=1-805"/>
</dbReference>
<dbReference type="PDB" id="8P2Z">
    <property type="method" value="EM"/>
    <property type="resolution" value="3.50 A"/>
    <property type="chains" value="A=1-805"/>
</dbReference>
<dbReference type="PDB" id="8P30">
    <property type="method" value="EM"/>
    <property type="resolution" value="3.29 A"/>
    <property type="chains" value="A/B=1-805"/>
</dbReference>
<dbReference type="PDB" id="8P31">
    <property type="method" value="EM"/>
    <property type="resolution" value="3.24 A"/>
    <property type="chains" value="A/B=1-805"/>
</dbReference>
<dbReference type="PDB" id="8QSQ">
    <property type="method" value="EM"/>
    <property type="resolution" value="3.70 A"/>
    <property type="chains" value="B=19-615"/>
</dbReference>
<dbReference type="PDB" id="8S9G">
    <property type="method" value="EM"/>
    <property type="resolution" value="3.00 A"/>
    <property type="chains" value="A=19-615"/>
</dbReference>
<dbReference type="PDB" id="8SPH">
    <property type="method" value="X-ray"/>
    <property type="resolution" value="2.71 A"/>
    <property type="chains" value="A/B=19-615"/>
</dbReference>
<dbReference type="PDB" id="8SPI">
    <property type="method" value="X-ray"/>
    <property type="resolution" value="3.06 A"/>
    <property type="chains" value="A/B=19-615"/>
</dbReference>
<dbReference type="PDB" id="8TOQ">
    <property type="method" value="X-ray"/>
    <property type="resolution" value="2.30 A"/>
    <property type="chains" value="A=18-614"/>
</dbReference>
<dbReference type="PDB" id="8TOR">
    <property type="method" value="X-ray"/>
    <property type="resolution" value="2.20 A"/>
    <property type="chains" value="A=18-614"/>
</dbReference>
<dbReference type="PDB" id="8TOS">
    <property type="method" value="X-ray"/>
    <property type="resolution" value="2.35 A"/>
    <property type="chains" value="A=18-614"/>
</dbReference>
<dbReference type="PDB" id="8TOT">
    <property type="method" value="X-ray"/>
    <property type="resolution" value="2.80 A"/>
    <property type="chains" value="A/B=18-614"/>
</dbReference>
<dbReference type="PDB" id="8TOU">
    <property type="method" value="X-ray"/>
    <property type="resolution" value="3.10 A"/>
    <property type="chains" value="A=18-614"/>
</dbReference>
<dbReference type="PDB" id="8UZE">
    <property type="method" value="X-ray"/>
    <property type="resolution" value="3.03 A"/>
    <property type="chains" value="A/B=59-77, A/B=103-321, A/B=368-615"/>
</dbReference>
<dbReference type="PDB" id="8VKO">
    <property type="method" value="EM"/>
    <property type="resolution" value="2.68 A"/>
    <property type="chains" value="D/E/F=18-615"/>
</dbReference>
<dbReference type="PDB" id="8VKP">
    <property type="method" value="EM"/>
    <property type="resolution" value="2.77 A"/>
    <property type="chains" value="D=18-615"/>
</dbReference>
<dbReference type="PDB" id="8VQR">
    <property type="method" value="X-ray"/>
    <property type="resolution" value="2.56 A"/>
    <property type="chains" value="A/B=56-77, A/B=98-334, A/B=416-615"/>
</dbReference>
<dbReference type="PDB" id="8WBY">
    <property type="method" value="EM"/>
    <property type="resolution" value="3.18 A"/>
    <property type="chains" value="B/C=1-805"/>
</dbReference>
<dbReference type="PDB" id="8WBZ">
    <property type="method" value="EM"/>
    <property type="resolution" value="3.20 A"/>
    <property type="chains" value="B/C=1-805"/>
</dbReference>
<dbReference type="PDB" id="8WDR">
    <property type="method" value="X-ray"/>
    <property type="resolution" value="3.47 A"/>
    <property type="chains" value="A/C=1-805"/>
</dbReference>
<dbReference type="PDB" id="8WDS">
    <property type="method" value="X-ray"/>
    <property type="resolution" value="3.40 A"/>
    <property type="chains" value="A/C=1-805"/>
</dbReference>
<dbReference type="PDB" id="8WDY">
    <property type="method" value="EM"/>
    <property type="resolution" value="2.69 A"/>
    <property type="chains" value="A=1-805"/>
</dbReference>
<dbReference type="PDB" id="8WDZ">
    <property type="method" value="EM"/>
    <property type="resolution" value="2.71 A"/>
    <property type="chains" value="A=1-805"/>
</dbReference>
<dbReference type="PDB" id="8WE0">
    <property type="method" value="EM"/>
    <property type="resolution" value="2.80 A"/>
    <property type="chains" value="A=1-805"/>
</dbReference>
<dbReference type="PDB" id="8WE1">
    <property type="method" value="EM"/>
    <property type="resolution" value="2.47 A"/>
    <property type="chains" value="A=1-805"/>
</dbReference>
<dbReference type="PDB" id="8WE4">
    <property type="method" value="EM"/>
    <property type="resolution" value="2.91 A"/>
    <property type="chains" value="A=1-805"/>
</dbReference>
<dbReference type="PDB" id="8WGV">
    <property type="method" value="EM"/>
    <property type="resolution" value="2.92 A"/>
    <property type="chains" value="D/E/F=1-614"/>
</dbReference>
<dbReference type="PDB" id="8WGW">
    <property type="method" value="EM"/>
    <property type="resolution" value="2.90 A"/>
    <property type="chains" value="B=1-615"/>
</dbReference>
<dbReference type="PDB" id="8WHS">
    <property type="method" value="EM"/>
    <property type="resolution" value="3.33 A"/>
    <property type="chains" value="D=19-615"/>
</dbReference>
<dbReference type="PDB" id="8WHU">
    <property type="method" value="EM"/>
    <property type="resolution" value="3.30 A"/>
    <property type="chains" value="D/E=19-615"/>
</dbReference>
<dbReference type="PDB" id="8WHZ">
    <property type="method" value="EM"/>
    <property type="resolution" value="3.93 A"/>
    <property type="chains" value="A=19-615"/>
</dbReference>
<dbReference type="PDB" id="8WLZ">
    <property type="method" value="EM"/>
    <property type="resolution" value="4.45 A"/>
    <property type="chains" value="D/G=19-615"/>
</dbReference>
<dbReference type="PDB" id="8WM3">
    <property type="method" value="EM"/>
    <property type="resolution" value="3.34 A"/>
    <property type="chains" value="B/D=1-805"/>
</dbReference>
<dbReference type="PDB" id="8WP8">
    <property type="method" value="EM"/>
    <property type="resolution" value="2.89 A"/>
    <property type="chains" value="A=18-615"/>
</dbReference>
<dbReference type="PDB" id="8WRH">
    <property type="method" value="EM"/>
    <property type="resolution" value="3.08 A"/>
    <property type="chains" value="A=1-805"/>
</dbReference>
<dbReference type="PDB" id="8WRL">
    <property type="method" value="EM"/>
    <property type="resolution" value="3.36 A"/>
    <property type="chains" value="A=19-612"/>
</dbReference>
<dbReference type="PDB" id="8WRM">
    <property type="method" value="EM"/>
    <property type="resolution" value="4.34 A"/>
    <property type="chains" value="D=19-612"/>
</dbReference>
<dbReference type="PDB" id="8WRO">
    <property type="method" value="EM"/>
    <property type="resolution" value="3.90 A"/>
    <property type="chains" value="D=19-612"/>
</dbReference>
<dbReference type="PDB" id="8WSR">
    <property type="method" value="EM"/>
    <property type="resolution" value="2.99 A"/>
    <property type="chains" value="A=1-805"/>
</dbReference>
<dbReference type="PDB" id="8WTD">
    <property type="method" value="EM"/>
    <property type="resolution" value="3.06 A"/>
    <property type="chains" value="A=1-805"/>
</dbReference>
<dbReference type="PDB" id="8WTJ">
    <property type="method" value="EM"/>
    <property type="resolution" value="4.64 A"/>
    <property type="chains" value="E=19-612"/>
</dbReference>
<dbReference type="PDB" id="8WYH">
    <property type="method" value="EM"/>
    <property type="resolution" value="3.00 A"/>
    <property type="chains" value="T/X/Z=19-615"/>
</dbReference>
<dbReference type="PDB" id="8XAL">
    <property type="method" value="EM"/>
    <property type="resolution" value="3.20 A"/>
    <property type="chains" value="I/J=1-615"/>
</dbReference>
<dbReference type="PDB" id="8XLM">
    <property type="method" value="EM"/>
    <property type="resolution" value="3.22 A"/>
    <property type="chains" value="D=19-617"/>
</dbReference>
<dbReference type="PDB" id="8XLN">
    <property type="method" value="EM"/>
    <property type="resolution" value="3.78 A"/>
    <property type="chains" value="D=19-617"/>
</dbReference>
<dbReference type="PDB" id="8XN2">
    <property type="method" value="EM"/>
    <property type="resolution" value="2.79 A"/>
    <property type="chains" value="A=19-615"/>
</dbReference>
<dbReference type="PDB" id="8XN3">
    <property type="method" value="EM"/>
    <property type="resolution" value="2.64 A"/>
    <property type="chains" value="A=19-615"/>
</dbReference>
<dbReference type="PDB" id="8XN5">
    <property type="method" value="EM"/>
    <property type="resolution" value="2.87 A"/>
    <property type="chains" value="A=19-615"/>
</dbReference>
<dbReference type="PDB" id="8XNF">
    <property type="method" value="EM"/>
    <property type="resolution" value="3.26 A"/>
    <property type="chains" value="A=19-615"/>
</dbReference>
<dbReference type="PDB" id="8XNK">
    <property type="method" value="EM"/>
    <property type="resolution" value="2.78 A"/>
    <property type="chains" value="A=19-615"/>
</dbReference>
<dbReference type="PDB" id="8XSF">
    <property type="method" value="EM"/>
    <property type="resolution" value="2.16 A"/>
    <property type="chains" value="A=1-805"/>
</dbReference>
<dbReference type="PDB" id="8XSJ">
    <property type="method" value="EM"/>
    <property type="resolution" value="2.61 A"/>
    <property type="chains" value="A=1-805"/>
</dbReference>
<dbReference type="PDB" id="8XUY">
    <property type="method" value="EM"/>
    <property type="resolution" value="3.14 A"/>
    <property type="chains" value="D/O=19-617"/>
</dbReference>
<dbReference type="PDB" id="8XUZ">
    <property type="method" value="EM"/>
    <property type="resolution" value="3.05 A"/>
    <property type="chains" value="L=19-617"/>
</dbReference>
<dbReference type="PDB" id="8XV0">
    <property type="method" value="EM"/>
    <property type="resolution" value="3.00 A"/>
    <property type="chains" value="A=19-617"/>
</dbReference>
<dbReference type="PDB" id="8XV1">
    <property type="method" value="EM"/>
    <property type="resolution" value="3.05 A"/>
    <property type="chains" value="D=19-617"/>
</dbReference>
<dbReference type="PDB" id="8XVM">
    <property type="method" value="EM"/>
    <property type="resolution" value="2.77 A"/>
    <property type="chains" value="D=19-617"/>
</dbReference>
<dbReference type="PDB" id="8XXW">
    <property type="method" value="EM"/>
    <property type="resolution" value="3.03 A"/>
    <property type="chains" value="A=19-599"/>
</dbReference>
<dbReference type="PDB" id="8XY9">
    <property type="method" value="X-ray"/>
    <property type="resolution" value="3.64 A"/>
    <property type="chains" value="A/C=19-615"/>
</dbReference>
<dbReference type="PDB" id="8XYE">
    <property type="method" value="X-ray"/>
    <property type="resolution" value="3.32 A"/>
    <property type="chains" value="A/B=19-614"/>
</dbReference>
<dbReference type="PDB" id="8XYG">
    <property type="method" value="X-ray"/>
    <property type="resolution" value="3.64 A"/>
    <property type="chains" value="A/C=19-613"/>
</dbReference>
<dbReference type="PDB" id="8XYO">
    <property type="method" value="EM"/>
    <property type="resolution" value="3.04 A"/>
    <property type="chains" value="A=19-615"/>
</dbReference>
<dbReference type="PDB" id="8Y16">
    <property type="method" value="EM"/>
    <property type="resolution" value="2.98 A"/>
    <property type="chains" value="A/E/F=19-615"/>
</dbReference>
<dbReference type="PDB" id="8Y18">
    <property type="method" value="EM"/>
    <property type="resolution" value="3.04 A"/>
    <property type="chains" value="A=19-615"/>
</dbReference>
<dbReference type="PDB" id="8Y6A">
    <property type="method" value="EM"/>
    <property type="resolution" value="2.72 A"/>
    <property type="chains" value="A=19-615"/>
</dbReference>
<dbReference type="PDB" id="8YZB">
    <property type="method" value="EM"/>
    <property type="resolution" value="3.29 A"/>
    <property type="chains" value="B=1-732"/>
</dbReference>
<dbReference type="PDB" id="8YZC">
    <property type="method" value="EM"/>
    <property type="resolution" value="2.70 A"/>
    <property type="chains" value="G/H/I=1-732"/>
</dbReference>
<dbReference type="PDB" id="8YZD">
    <property type="method" value="EM"/>
    <property type="resolution" value="3.07 A"/>
    <property type="chains" value="B=1-732"/>
</dbReference>
<dbReference type="PDB" id="8YZE">
    <property type="method" value="EM"/>
    <property type="resolution" value="3.06 A"/>
    <property type="chains" value="G/H/I=1-732"/>
</dbReference>
<dbReference type="PDB" id="8Z3W">
    <property type="method" value="EM"/>
    <property type="resolution" value="3.45 A"/>
    <property type="chains" value="D=1-615"/>
</dbReference>
<dbReference type="PDB" id="8Z4X">
    <property type="method" value="EM"/>
    <property type="resolution" value="3.40 A"/>
    <property type="chains" value="D/E=1-615"/>
</dbReference>
<dbReference type="PDB" id="8Z64">
    <property type="method" value="EM"/>
    <property type="resolution" value="3.53 A"/>
    <property type="chains" value="D=1-615"/>
</dbReference>
<dbReference type="PDB" id="8Z6A">
    <property type="method" value="EM"/>
    <property type="resolution" value="2.99 A"/>
    <property type="chains" value="D/E/F=1-615"/>
</dbReference>
<dbReference type="PDB" id="8Z7B">
    <property type="method" value="EM"/>
    <property type="resolution" value="3.30 A"/>
    <property type="chains" value="D=1-615"/>
</dbReference>
<dbReference type="PDB" id="8Z7P">
    <property type="method" value="EM"/>
    <property type="resolution" value="3.45 A"/>
    <property type="chains" value="D/E/F=1-615"/>
</dbReference>
<dbReference type="PDB" id="8ZBQ">
    <property type="method" value="EM"/>
    <property type="resolution" value="3.03 A"/>
    <property type="chains" value="D=19-615"/>
</dbReference>
<dbReference type="PDB" id="9FMM">
    <property type="method" value="X-ray"/>
    <property type="resolution" value="2.50 A"/>
    <property type="chains" value="A/B=19-740"/>
</dbReference>
<dbReference type="PDB" id="9IU1">
    <property type="method" value="EM"/>
    <property type="resolution" value="4.30 A"/>
    <property type="chains" value="A=19-617"/>
</dbReference>
<dbReference type="PDB" id="9IUP">
    <property type="method" value="EM"/>
    <property type="resolution" value="3.30 A"/>
    <property type="chains" value="A=19-612"/>
</dbReference>
<dbReference type="PDB" id="9IUQ">
    <property type="method" value="EM"/>
    <property type="resolution" value="3.30 A"/>
    <property type="chains" value="A=19-612"/>
</dbReference>
<dbReference type="PDB" id="9IUU">
    <property type="method" value="EM"/>
    <property type="resolution" value="3.29 A"/>
    <property type="chains" value="A=19-615"/>
</dbReference>
<dbReference type="PDB" id="9JJ6">
    <property type="method" value="EM"/>
    <property type="resolution" value="2.94 A"/>
    <property type="chains" value="A=19-615"/>
</dbReference>
<dbReference type="PDBsum" id="1R42"/>
<dbReference type="PDBsum" id="1R4L"/>
<dbReference type="PDBsum" id="2AJF"/>
<dbReference type="PDBsum" id="3D0G"/>
<dbReference type="PDBsum" id="3D0H"/>
<dbReference type="PDBsum" id="3D0I"/>
<dbReference type="PDBsum" id="3KBH"/>
<dbReference type="PDBsum" id="3SCI"/>
<dbReference type="PDBsum" id="3SCJ"/>
<dbReference type="PDBsum" id="3SCK"/>
<dbReference type="PDBsum" id="3SCL"/>
<dbReference type="PDBsum" id="6ACG"/>
<dbReference type="PDBsum" id="6ACJ"/>
<dbReference type="PDBsum" id="6ACK"/>
<dbReference type="PDBsum" id="6CS2"/>
<dbReference type="PDBsum" id="6LZG"/>
<dbReference type="PDBsum" id="6M0J"/>
<dbReference type="PDBsum" id="6M17"/>
<dbReference type="PDBsum" id="6M18"/>
<dbReference type="PDBsum" id="6M1D"/>
<dbReference type="PDBsum" id="6VW1"/>
<dbReference type="PDBsum" id="7A91"/>
<dbReference type="PDBsum" id="7A92"/>
<dbReference type="PDBsum" id="7A94"/>
<dbReference type="PDBsum" id="7A95"/>
<dbReference type="PDBsum" id="7A96"/>
<dbReference type="PDBsum" id="7A97"/>
<dbReference type="PDBsum" id="7A98"/>
<dbReference type="PDBsum" id="7BH9"/>
<dbReference type="PDBsum" id="7CT5"/>
<dbReference type="PDBsum" id="7DDO"/>
<dbReference type="PDBsum" id="7DDP"/>
<dbReference type="PDBsum" id="7DF4"/>
<dbReference type="PDBsum" id="7DMU"/>
<dbReference type="PDBsum" id="7DQA"/>
<dbReference type="PDBsum" id="7DRV"/>
<dbReference type="PDBsum" id="7DWX"/>
<dbReference type="PDBsum" id="7DX4"/>
<dbReference type="PDBsum" id="7DX5"/>
<dbReference type="PDBsum" id="7DX6"/>
<dbReference type="PDBsum" id="7DX7"/>
<dbReference type="PDBsum" id="7DX8"/>
<dbReference type="PDBsum" id="7DX9"/>
<dbReference type="PDBsum" id="7E7E"/>
<dbReference type="PDBsum" id="7EDJ"/>
<dbReference type="PDBsum" id="7EFP"/>
<dbReference type="PDBsum" id="7EFR"/>
<dbReference type="PDBsum" id="7EKC"/>
<dbReference type="PDBsum" id="7EKE"/>
<dbReference type="PDBsum" id="7EKF"/>
<dbReference type="PDBsum" id="7EKG"/>
<dbReference type="PDBsum" id="7EKH"/>
<dbReference type="PDBsum" id="7FDG"/>
<dbReference type="PDBsum" id="7FDH"/>
<dbReference type="PDBsum" id="7FDI"/>
<dbReference type="PDBsum" id="7FEM"/>
<dbReference type="PDBsum" id="7JVO"/>
<dbReference type="PDBsum" id="7KJ2"/>
<dbReference type="PDBsum" id="7KJ3"/>
<dbReference type="PDBsum" id="7KJ4"/>
<dbReference type="PDBsum" id="7KMB"/>
<dbReference type="PDBsum" id="7KMS"/>
<dbReference type="PDBsum" id="7KMZ"/>
<dbReference type="PDBsum" id="7KNB"/>
<dbReference type="PDBsum" id="7KNE"/>
<dbReference type="PDBsum" id="7KNH"/>
<dbReference type="PDBsum" id="7KNI"/>
<dbReference type="PDBsum" id="7L0N"/>
<dbReference type="PDBsum" id="7L7F"/>
<dbReference type="PDBsum" id="7LO4"/>
<dbReference type="PDBsum" id="7MJM"/>
<dbReference type="PDBsum" id="7MJN"/>
<dbReference type="PDBsum" id="7NXC"/>
<dbReference type="PDBsum" id="7P19"/>
<dbReference type="PDBsum" id="7P55"/>
<dbReference type="PDBsum" id="7P8I"/>
<dbReference type="PDBsum" id="7P8J"/>
<dbReference type="PDBsum" id="7PKI"/>
<dbReference type="PDBsum" id="7R0Z"/>
<dbReference type="PDBsum" id="7R10"/>
<dbReference type="PDBsum" id="7R11"/>
<dbReference type="PDBsum" id="7R12"/>
<dbReference type="PDBsum" id="7R1A"/>
<dbReference type="PDBsum" id="7RPV"/>
<dbReference type="PDBsum" id="7SN0"/>
<dbReference type="PDBsum" id="7SXX"/>
<dbReference type="PDBsum" id="7SXY"/>
<dbReference type="PDBsum" id="7SXZ"/>
<dbReference type="PDBsum" id="7SY0"/>
<dbReference type="PDBsum" id="7SY1"/>
<dbReference type="PDBsum" id="7SY2"/>
<dbReference type="PDBsum" id="7SY3"/>
<dbReference type="PDBsum" id="7SY4"/>
<dbReference type="PDBsum" id="7SY5"/>
<dbReference type="PDBsum" id="7SY6"/>
<dbReference type="PDBsum" id="7SY7"/>
<dbReference type="PDBsum" id="7SY8"/>
<dbReference type="PDBsum" id="7T9K"/>
<dbReference type="PDBsum" id="7T9L"/>
<dbReference type="PDBsum" id="7TEW"/>
<dbReference type="PDBsum" id="7TEX"/>
<dbReference type="PDBsum" id="7TEZ"/>
<dbReference type="PDBsum" id="7TF0"/>
<dbReference type="PDBsum" id="7TN0"/>
<dbReference type="PDBsum" id="7U0N"/>
<dbReference type="PDBsum" id="7UFK"/>
<dbReference type="PDBsum" id="7UFL"/>
<dbReference type="PDBsum" id="7V61"/>
<dbReference type="PDBsum" id="7V7Z"/>
<dbReference type="PDBsum" id="7V80"/>
<dbReference type="PDBsum" id="7V81"/>
<dbReference type="PDBsum" id="7V82"/>
<dbReference type="PDBsum" id="7V83"/>
<dbReference type="PDBsum" id="7V84"/>
<dbReference type="PDBsum" id="7V85"/>
<dbReference type="PDBsum" id="7V86"/>
<dbReference type="PDBsum" id="7V87"/>
<dbReference type="PDBsum" id="7V88"/>
<dbReference type="PDBsum" id="7V89"/>
<dbReference type="PDBsum" id="7V8A"/>
<dbReference type="PDBsum" id="7V8B"/>
<dbReference type="PDBsum" id="7VIB"/>
<dbReference type="PDBsum" id="7VX4"/>
<dbReference type="PDBsum" id="7VX5"/>
<dbReference type="PDBsum" id="7VX9"/>
<dbReference type="PDBsum" id="7VXA"/>
<dbReference type="PDBsum" id="7VXB"/>
<dbReference type="PDBsum" id="7VXC"/>
<dbReference type="PDBsum" id="7VXD"/>
<dbReference type="PDBsum" id="7VXF"/>
<dbReference type="PDBsum" id="7VXK"/>
<dbReference type="PDBsum" id="7VXM"/>
<dbReference type="PDBsum" id="7W98"/>
<dbReference type="PDBsum" id="7W99"/>
<dbReference type="PDBsum" id="7W9B"/>
<dbReference type="PDBsum" id="7W9C"/>
<dbReference type="PDBsum" id="7W9I"/>
<dbReference type="PDBsum" id="7WBL"/>
<dbReference type="PDBsum" id="7WBP"/>
<dbReference type="PDBsum" id="7WBQ"/>
<dbReference type="PDBsum" id="7WGB"/>
<dbReference type="PDBsum" id="7WGC"/>
<dbReference type="PDBsum" id="7WHH"/>
<dbReference type="PDBsum" id="7WK4"/>
<dbReference type="PDBsum" id="7WK5"/>
<dbReference type="PDBsum" id="7WK6"/>
<dbReference type="PDBsum" id="7WNM"/>
<dbReference type="PDBsum" id="7WPA"/>
<dbReference type="PDBsum" id="7WPB"/>
<dbReference type="PDBsum" id="7WPC"/>
<dbReference type="PDBsum" id="7WS8"/>
<dbReference type="PDBsum" id="7WS9"/>
<dbReference type="PDBsum" id="7WSA"/>
<dbReference type="PDBsum" id="7WVP"/>
<dbReference type="PDBsum" id="7WVQ"/>
<dbReference type="PDBsum" id="7XAZ"/>
<dbReference type="PDBsum" id="7XB0"/>
<dbReference type="PDBsum" id="7XB1"/>
<dbReference type="PDBsum" id="7XBF"/>
<dbReference type="PDBsum" id="7XBG"/>
<dbReference type="PDBsum" id="7XBH"/>
<dbReference type="PDBsum" id="7XCH"/>
<dbReference type="PDBsum" id="7XCI"/>
<dbReference type="PDBsum" id="7XCP"/>
<dbReference type="PDBsum" id="7XID"/>
<dbReference type="PDBsum" id="7XO7"/>
<dbReference type="PDBsum" id="7XO8"/>
<dbReference type="PDBsum" id="7XO9"/>
<dbReference type="PDBsum" id="7XWA"/>
<dbReference type="PDBsum" id="7Y1Y"/>
<dbReference type="PDBsum" id="7Y1Z"/>
<dbReference type="PDBsum" id="7Y20"/>
<dbReference type="PDBsum" id="7Y21"/>
<dbReference type="PDBsum" id="7Y75"/>
<dbReference type="PDBsum" id="7Y76"/>
<dbReference type="PDBsum" id="7Y9Z"/>
<dbReference type="PDBsum" id="7YA0"/>
<dbReference type="PDBsum" id="7YA1"/>
<dbReference type="PDBsum" id="7YDI"/>
<dbReference type="PDBsum" id="7YEG"/>
<dbReference type="PDBsum" id="7YHW"/>
<dbReference type="PDBsum" id="7YJ3"/>
<dbReference type="PDBsum" id="7YR2"/>
<dbReference type="PDBsum" id="7YR3"/>
<dbReference type="PDBsum" id="7YR4"/>
<dbReference type="PDBsum" id="7ZDQ"/>
<dbReference type="PDBsum" id="7ZF7"/>
<dbReference type="PDBsum" id="8AQS"/>
<dbReference type="PDBsum" id="8ASY"/>
<dbReference type="PDBsum" id="8B9P"/>
<dbReference type="PDBsum" id="8BFW"/>
<dbReference type="PDBsum" id="8BN1"/>
<dbReference type="PDBsum" id="8BYJ"/>
<dbReference type="PDBsum" id="8DF5"/>
<dbReference type="PDBsum" id="8DLJ"/>
<dbReference type="PDBsum" id="8DLK"/>
<dbReference type="PDBsum" id="8DLM"/>
<dbReference type="PDBsum" id="8DLN"/>
<dbReference type="PDBsum" id="8DLP"/>
<dbReference type="PDBsum" id="8DLQ"/>
<dbReference type="PDBsum" id="8DLU"/>
<dbReference type="PDBsum" id="8DLV"/>
<dbReference type="PDBsum" id="8DM5"/>
<dbReference type="PDBsum" id="8DM6"/>
<dbReference type="PDBsum" id="8DV1"/>
<dbReference type="PDBsum" id="8DV2"/>
<dbReference type="PDBsum" id="8E7M"/>
<dbReference type="PDBsum" id="8FXB"/>
<dbReference type="PDBsum" id="8FXC"/>
<dbReference type="PDBsum" id="8H06"/>
<dbReference type="PDBsum" id="8H5C"/>
<dbReference type="PDBsum" id="8HRK"/>
<dbReference type="PDBsum" id="8HRL"/>
<dbReference type="PDBsum" id="8HRN"/>
<dbReference type="PDBsum" id="8HRU"/>
<dbReference type="PDBsum" id="8I91"/>
<dbReference type="PDBsum" id="8I92"/>
<dbReference type="PDBsum" id="8I93"/>
<dbReference type="PDBsum" id="8I9B"/>
<dbReference type="PDBsum" id="8I9C"/>
<dbReference type="PDBsum" id="8I9D"/>
<dbReference type="PDBsum" id="8I9E"/>
<dbReference type="PDBsum" id="8I9F"/>
<dbReference type="PDBsum" id="8I9G"/>
<dbReference type="PDBsum" id="8I9H"/>
<dbReference type="PDBsum" id="8IF2"/>
<dbReference type="PDBsum" id="8IOU"/>
<dbReference type="PDBsum" id="8IOV"/>
<dbReference type="PDBsum" id="8JJE"/>
<dbReference type="PDBsum" id="8JWH"/>
<dbReference type="PDBsum" id="8JYN"/>
<dbReference type="PDBsum" id="8JYO"/>
<dbReference type="PDBsum" id="8JYP"/>
<dbReference type="PDBsum" id="8P2W"/>
<dbReference type="PDBsum" id="8P2X"/>
<dbReference type="PDBsum" id="8P2Y"/>
<dbReference type="PDBsum" id="8P2Z"/>
<dbReference type="PDBsum" id="8P30"/>
<dbReference type="PDBsum" id="8P31"/>
<dbReference type="PDBsum" id="8QSQ"/>
<dbReference type="PDBsum" id="8S9G"/>
<dbReference type="PDBsum" id="8SPH"/>
<dbReference type="PDBsum" id="8SPI"/>
<dbReference type="PDBsum" id="8TOQ"/>
<dbReference type="PDBsum" id="8TOR"/>
<dbReference type="PDBsum" id="8TOS"/>
<dbReference type="PDBsum" id="8TOT"/>
<dbReference type="PDBsum" id="8TOU"/>
<dbReference type="PDBsum" id="8UZE"/>
<dbReference type="PDBsum" id="8VKO"/>
<dbReference type="PDBsum" id="8VKP"/>
<dbReference type="PDBsum" id="8VQR"/>
<dbReference type="PDBsum" id="8WBY"/>
<dbReference type="PDBsum" id="8WBZ"/>
<dbReference type="PDBsum" id="8WDR"/>
<dbReference type="PDBsum" id="8WDS"/>
<dbReference type="PDBsum" id="8WDY"/>
<dbReference type="PDBsum" id="8WDZ"/>
<dbReference type="PDBsum" id="8WE0"/>
<dbReference type="PDBsum" id="8WE1"/>
<dbReference type="PDBsum" id="8WE4"/>
<dbReference type="PDBsum" id="8WGV"/>
<dbReference type="PDBsum" id="8WGW"/>
<dbReference type="PDBsum" id="8WHS"/>
<dbReference type="PDBsum" id="8WHU"/>
<dbReference type="PDBsum" id="8WHZ"/>
<dbReference type="PDBsum" id="8WLZ"/>
<dbReference type="PDBsum" id="8WM3"/>
<dbReference type="PDBsum" id="8WP8"/>
<dbReference type="PDBsum" id="8WRH"/>
<dbReference type="PDBsum" id="8WRL"/>
<dbReference type="PDBsum" id="8WRM"/>
<dbReference type="PDBsum" id="8WRO"/>
<dbReference type="PDBsum" id="8WSR"/>
<dbReference type="PDBsum" id="8WTD"/>
<dbReference type="PDBsum" id="8WTJ"/>
<dbReference type="PDBsum" id="8WYH"/>
<dbReference type="PDBsum" id="8XAL"/>
<dbReference type="PDBsum" id="8XLM"/>
<dbReference type="PDBsum" id="8XLN"/>
<dbReference type="PDBsum" id="8XN2"/>
<dbReference type="PDBsum" id="8XN3"/>
<dbReference type="PDBsum" id="8XN5"/>
<dbReference type="PDBsum" id="8XNF"/>
<dbReference type="PDBsum" id="8XNK"/>
<dbReference type="PDBsum" id="8XSF"/>
<dbReference type="PDBsum" id="8XSJ"/>
<dbReference type="PDBsum" id="8XUY"/>
<dbReference type="PDBsum" id="8XUZ"/>
<dbReference type="PDBsum" id="8XV0"/>
<dbReference type="PDBsum" id="8XV1"/>
<dbReference type="PDBsum" id="8XVM"/>
<dbReference type="PDBsum" id="8XXW"/>
<dbReference type="PDBsum" id="8XY9"/>
<dbReference type="PDBsum" id="8XYE"/>
<dbReference type="PDBsum" id="8XYG"/>
<dbReference type="PDBsum" id="8XYO"/>
<dbReference type="PDBsum" id="8Y16"/>
<dbReference type="PDBsum" id="8Y18"/>
<dbReference type="PDBsum" id="8Y6A"/>
<dbReference type="PDBsum" id="8YZB"/>
<dbReference type="PDBsum" id="8YZC"/>
<dbReference type="PDBsum" id="8YZD"/>
<dbReference type="PDBsum" id="8YZE"/>
<dbReference type="PDBsum" id="8Z3W"/>
<dbReference type="PDBsum" id="8Z4X"/>
<dbReference type="PDBsum" id="8Z64"/>
<dbReference type="PDBsum" id="8Z6A"/>
<dbReference type="PDBsum" id="8Z7B"/>
<dbReference type="PDBsum" id="8Z7P"/>
<dbReference type="PDBsum" id="8ZBQ"/>
<dbReference type="PDBsum" id="9FMM"/>
<dbReference type="PDBsum" id="9IU1"/>
<dbReference type="PDBsum" id="9IUP"/>
<dbReference type="PDBsum" id="9IUQ"/>
<dbReference type="PDBsum" id="9IUU"/>
<dbReference type="PDBsum" id="9JJ6"/>
<dbReference type="EMDB" id="EMD-11681"/>
<dbReference type="EMDB" id="EMD-11682"/>
<dbReference type="EMDB" id="EMD-11684"/>
<dbReference type="EMDB" id="EMD-11685"/>
<dbReference type="EMDB" id="EMD-11686"/>
<dbReference type="EMDB" id="EMD-11687"/>
<dbReference type="EMDB" id="EMD-11688"/>
<dbReference type="EMDB" id="EMD-12187"/>
<dbReference type="EMDB" id="EMD-14225"/>
<dbReference type="EMDB" id="EMD-14226"/>
<dbReference type="EMDB" id="EMD-14227"/>
<dbReference type="EMDB" id="EMD-14228"/>
<dbReference type="EMDB" id="EMD-14236"/>
<dbReference type="EMDB" id="EMD-14666"/>
<dbReference type="EMDB" id="EMD-15588"/>
<dbReference type="EMDB" id="EMD-17377"/>
<dbReference type="EMDB" id="EMD-17378"/>
<dbReference type="EMDB" id="EMD-17379"/>
<dbReference type="EMDB" id="EMD-17380"/>
<dbReference type="EMDB" id="EMD-17381"/>
<dbReference type="EMDB" id="EMD-17382"/>
<dbReference type="EMDB" id="EMD-18639"/>
<dbReference type="EMDB" id="EMD-22891"/>
<dbReference type="EMDB" id="EMD-22892"/>
<dbReference type="EMDB" id="EMD-22893"/>
<dbReference type="EMDB" id="EMD-22922"/>
<dbReference type="EMDB" id="EMD-22927"/>
<dbReference type="EMDB" id="EMD-22932"/>
<dbReference type="EMDB" id="EMD-22941"/>
<dbReference type="EMDB" id="EMD-22943"/>
<dbReference type="EMDB" id="EMD-22949"/>
<dbReference type="EMDB" id="EMD-22950"/>
<dbReference type="EMDB" id="EMD-23211"/>
<dbReference type="EMDB" id="EMD-23878"/>
<dbReference type="EMDB" id="EMD-23879"/>
<dbReference type="EMDB" id="EMD-25509"/>
<dbReference type="EMDB" id="EMD-25510"/>
<dbReference type="EMDB" id="EMD-25511"/>
<dbReference type="EMDB" id="EMD-25512"/>
<dbReference type="EMDB" id="EMD-25513"/>
<dbReference type="EMDB" id="EMD-25514"/>
<dbReference type="EMDB" id="EMD-25515"/>
<dbReference type="EMDB" id="EMD-25516"/>
<dbReference type="EMDB" id="EMD-25517"/>
<dbReference type="EMDB" id="EMD-25518"/>
<dbReference type="EMDB" id="EMD-25519"/>
<dbReference type="EMDB" id="EMD-25520"/>
<dbReference type="EMDB" id="EMD-25760"/>
<dbReference type="EMDB" id="EMD-25761"/>
<dbReference type="EMDB" id="EMD-25853"/>
<dbReference type="EMDB" id="EMD-25854"/>
<dbReference type="EMDB" id="EMD-25856"/>
<dbReference type="EMDB" id="EMD-25857"/>
<dbReference type="EMDB" id="EMD-26679"/>
<dbReference type="EMDB" id="EMD-27503"/>
<dbReference type="EMDB" id="EMD-27504"/>
<dbReference type="EMDB" id="EMD-27506"/>
<dbReference type="EMDB" id="EMD-27507"/>
<dbReference type="EMDB" id="EMD-27509"/>
<dbReference type="EMDB" id="EMD-27510"/>
<dbReference type="EMDB" id="EMD-27516"/>
<dbReference type="EMDB" id="EMD-27517"/>
<dbReference type="EMDB" id="EMD-27527"/>
<dbReference type="EMDB" id="EMD-27528"/>
<dbReference type="EMDB" id="EMD-27939"/>
<dbReference type="EMDB" id="EMD-29530"/>
<dbReference type="EMDB" id="EMD-29531"/>
<dbReference type="EMDB" id="EMD-30039"/>
<dbReference type="EMDB" id="EMD-30040"/>
<dbReference type="EMDB" id="EMD-30041"/>
<dbReference type="EMDB" id="EMD-30460"/>
<dbReference type="EMDB" id="EMD-30653"/>
<dbReference type="EMDB" id="EMD-30655"/>
<dbReference type="EMDB" id="EMD-30661"/>
<dbReference type="EMDB" id="EMD-30816"/>
<dbReference type="EMDB" id="EMD-30888"/>
<dbReference type="EMDB" id="EMD-30895"/>
<dbReference type="EMDB" id="EMD-30896"/>
<dbReference type="EMDB" id="EMD-30897"/>
<dbReference type="EMDB" id="EMD-30898"/>
<dbReference type="EMDB" id="EMD-30899"/>
<dbReference type="EMDB" id="EMD-30900"/>
<dbReference type="EMDB" id="EMD-31542"/>
<dbReference type="EMDB" id="EMD-31543"/>
<dbReference type="EMDB" id="EMD-31544"/>
<dbReference type="EMDB" id="EMD-31557"/>
<dbReference type="EMDB" id="EMD-31732"/>
<dbReference type="EMDB" id="EMD-31784"/>
<dbReference type="EMDB" id="EMD-31785"/>
<dbReference type="EMDB" id="EMD-31786"/>
<dbReference type="EMDB" id="EMD-31787"/>
<dbReference type="EMDB" id="EMD-31788"/>
<dbReference type="EMDB" id="EMD-31789"/>
<dbReference type="EMDB" id="EMD-31790"/>
<dbReference type="EMDB" id="EMD-31791"/>
<dbReference type="EMDB" id="EMD-31792"/>
<dbReference type="EMDB" id="EMD-31793"/>
<dbReference type="EMDB" id="EMD-31794"/>
<dbReference type="EMDB" id="EMD-31795"/>
<dbReference type="EMDB" id="EMD-31796"/>
<dbReference type="EMDB" id="EMD-32168"/>
<dbReference type="EMDB" id="EMD-32169"/>
<dbReference type="EMDB" id="EMD-32172"/>
<dbReference type="EMDB" id="EMD-32173"/>
<dbReference type="EMDB" id="EMD-32174"/>
<dbReference type="EMDB" id="EMD-32175"/>
<dbReference type="EMDB" id="EMD-32176"/>
<dbReference type="EMDB" id="EMD-32178"/>
<dbReference type="EMDB" id="EMD-32182"/>
<dbReference type="EMDB" id="EMD-32184"/>
<dbReference type="EMDB" id="EMD-32361"/>
<dbReference type="EMDB" id="EMD-32362"/>
<dbReference type="EMDB" id="EMD-32363"/>
<dbReference type="EMDB" id="EMD-32364"/>
<dbReference type="EMDB" id="EMD-32367"/>
<dbReference type="EMDB" id="EMD-32405"/>
<dbReference type="EMDB" id="EMD-32482"/>
<dbReference type="EMDB" id="EMD-32483"/>
<dbReference type="EMDB" id="EMD-32558"/>
<dbReference type="EMDB" id="EMD-32559"/>
<dbReference type="EMDB" id="EMD-32560"/>
<dbReference type="EMDB" id="EMD-32680"/>
<dbReference type="EMDB" id="EMD-32681"/>
<dbReference type="EMDB" id="EMD-32682"/>
<dbReference type="EMDB" id="EMD-32750"/>
<dbReference type="EMDB" id="EMD-32751"/>
<dbReference type="EMDB" id="EMD-32752"/>
<dbReference type="EMDB" id="EMD-32856"/>
<dbReference type="EMDB" id="EMD-32857"/>
<dbReference type="EMDB" id="EMD-33120"/>
<dbReference type="EMDB" id="EMD-33121"/>
<dbReference type="EMDB" id="EMD-33125"/>
<dbReference type="EMDB" id="EMD-33203"/>
<dbReference type="EMDB" id="EMD-33339"/>
<dbReference type="EMDB" id="EMD-33340"/>
<dbReference type="EMDB" id="EMD-33341"/>
<dbReference type="EMDB" id="EMD-33575"/>
<dbReference type="EMDB" id="EMD-33576"/>
<dbReference type="EMDB" id="EMD-33577"/>
<dbReference type="EMDB" id="EMD-33578"/>
<dbReference type="EMDB" id="EMD-33652"/>
<dbReference type="EMDB" id="EMD-33653"/>
<dbReference type="EMDB" id="EMD-33697"/>
<dbReference type="EMDB" id="EMD-33698"/>
<dbReference type="EMDB" id="EMD-33699"/>
<dbReference type="EMDB" id="EMD-33748"/>
<dbReference type="EMDB" id="EMD-33772"/>
<dbReference type="EMDB" id="EMD-33841"/>
<dbReference type="EMDB" id="EMD-33870"/>
<dbReference type="EMDB" id="EMD-34043"/>
<dbReference type="EMDB" id="EMD-34044"/>
<dbReference type="EMDB" id="EMD-34045"/>
<dbReference type="EMDB" id="EMD-34224"/>
<dbReference type="EMDB" id="EMD-34409"/>
<dbReference type="EMDB" id="EMD-34976"/>
<dbReference type="EMDB" id="EMD-34977"/>
<dbReference type="EMDB" id="EMD-34979"/>
<dbReference type="EMDB" id="EMD-34980"/>
<dbReference type="EMDB" id="EMD-35254"/>
<dbReference type="EMDB" id="EMD-35255"/>
<dbReference type="EMDB" id="EMD-35256"/>
<dbReference type="EMDB" id="EMD-35264"/>
<dbReference type="EMDB" id="EMD-35266"/>
<dbReference type="EMDB" id="EMD-35267"/>
<dbReference type="EMDB" id="EMD-35268"/>
<dbReference type="EMDB" id="EMD-35269"/>
<dbReference type="EMDB" id="EMD-35270"/>
<dbReference type="EMDB" id="EMD-35272"/>
<dbReference type="EMDB" id="EMD-35624"/>
<dbReference type="EMDB" id="EMD-35625"/>
<dbReference type="EMDB" id="EMD-35626"/>
<dbReference type="EMDB" id="EMD-36345"/>
<dbReference type="EMDB" id="EMD-36683"/>
<dbReference type="EMDB" id="EMD-36727"/>
<dbReference type="EMDB" id="EMD-36728"/>
<dbReference type="EMDB" id="EMD-36729"/>
<dbReference type="EMDB" id="EMD-37427"/>
<dbReference type="EMDB" id="EMD-37428"/>
<dbReference type="EMDB" id="EMD-37467"/>
<dbReference type="EMDB" id="EMD-37468"/>
<dbReference type="EMDB" id="EMD-37469"/>
<dbReference type="EMDB" id="EMD-37470"/>
<dbReference type="EMDB" id="EMD-37471"/>
<dbReference type="EMDB" id="EMD-37516"/>
<dbReference type="EMDB" id="EMD-37517"/>
<dbReference type="EMDB" id="EMD-37546"/>
<dbReference type="EMDB" id="EMD-37548"/>
<dbReference type="EMDB" id="EMD-37553"/>
<dbReference type="EMDB" id="EMD-37636"/>
<dbReference type="EMDB" id="EMD-37639"/>
<dbReference type="EMDB" id="EMD-37711"/>
<dbReference type="EMDB" id="EMD-37776"/>
<dbReference type="EMDB" id="EMD-37779"/>
<dbReference type="EMDB" id="EMD-37781"/>
<dbReference type="EMDB" id="EMD-37784"/>
<dbReference type="EMDB" id="EMD-37822"/>
<dbReference type="EMDB" id="EMD-37832"/>
<dbReference type="EMDB" id="EMD-37835"/>
<dbReference type="EMDB" id="EMD-37928"/>
<dbReference type="EMDB" id="EMD-38453"/>
<dbReference type="EMDB" id="EMD-38454"/>
<dbReference type="EMDB" id="EMD-38495"/>
<dbReference type="EMDB" id="EMD-38496"/>
<dbReference type="EMDB" id="EMD-38498"/>
<dbReference type="EMDB" id="EMD-38502"/>
<dbReference type="EMDB" id="EMD-38505"/>
<dbReference type="EMDB" id="EMD-38618"/>
<dbReference type="EMDB" id="EMD-38620"/>
<dbReference type="EMDB" id="EMD-38686"/>
<dbReference type="EMDB" id="EMD-38687"/>
<dbReference type="EMDB" id="EMD-38688"/>
<dbReference type="EMDB" id="EMD-38689"/>
<dbReference type="EMDB" id="EMD-38690"/>
<dbReference type="EMDB" id="EMD-38763"/>
<dbReference type="EMDB" id="EMD-38779"/>
<dbReference type="EMDB" id="EMD-38826"/>
<dbReference type="EMDB" id="EMD-38827"/>
<dbReference type="EMDB" id="EMD-38983"/>
<dbReference type="EMDB" id="EMD-39688"/>
<dbReference type="EMDB" id="EMD-39689"/>
<dbReference type="EMDB" id="EMD-39690"/>
<dbReference type="EMDB" id="EMD-39691"/>
<dbReference type="EMDB" id="EMD-39756"/>
<dbReference type="EMDB" id="EMD-39771"/>
<dbReference type="EMDB" id="EMD-39791"/>
<dbReference type="EMDB" id="EMD-39796"/>
<dbReference type="EMDB" id="EMD-39811"/>
<dbReference type="EMDB" id="EMD-39822"/>
<dbReference type="EMDB" id="EMD-39907"/>
<dbReference type="EMDB" id="EMD-40240"/>
<dbReference type="EMDB" id="EMD-43324"/>
<dbReference type="EMDB" id="EMD-43325"/>
<dbReference type="EMDB" id="EMD-60886"/>
<dbReference type="EMDB" id="EMD-60911"/>
<dbReference type="EMDB" id="EMD-60912"/>
<dbReference type="EMDB" id="EMD-60914"/>
<dbReference type="EMDB" id="EMD-61517"/>
<dbReference type="EMDB" id="EMD-7582"/>
<dbReference type="EMDB" id="EMD-7586"/>
<dbReference type="EMDB" id="EMD-7601"/>
<dbReference type="EMDB" id="EMD-7602"/>
<dbReference type="EMDB" id="EMD-7603"/>
<dbReference type="EMDB" id="EMD-7604"/>
<dbReference type="EMDB" id="EMD-7605"/>
<dbReference type="EMDB" id="EMD-7606"/>
<dbReference type="EMDB" id="EMD-7607"/>
<dbReference type="EMDB" id="EMD-7608"/>
<dbReference type="EMDB" id="EMD-9591"/>
<dbReference type="EMDB" id="EMD-9593"/>
<dbReference type="EMDB" id="EMD-9594"/>
<dbReference type="SMR" id="Q9BYF1"/>
<dbReference type="BioGRID" id="121864">
    <property type="interactions" value="1120"/>
</dbReference>
<dbReference type="ComplexPortal" id="CPX-5683">
    <property type="entry name" value="SARS-CoV-2 Spike - human ACE2 receptor complex"/>
</dbReference>
<dbReference type="ComplexPortal" id="CPX-5684">
    <property type="entry name" value="SARS-CoV-2 Spike - human ACE2-SLC6A19 complex"/>
</dbReference>
<dbReference type="ComplexPortal" id="CPX-5695">
    <property type="entry name" value="SARS-CoV Spike - human ACE2 receptor complex"/>
</dbReference>
<dbReference type="ComplexPortal" id="CPX-8192">
    <property type="entry name" value="B(0)AT1-ACE2 heteromeric amino acid transporter complex"/>
</dbReference>
<dbReference type="CORUM" id="Q9BYF1"/>
<dbReference type="DIP" id="DIP-44689N"/>
<dbReference type="FunCoup" id="Q9BYF1">
    <property type="interactions" value="293"/>
</dbReference>
<dbReference type="IntAct" id="Q9BYF1">
    <property type="interactions" value="58"/>
</dbReference>
<dbReference type="MINT" id="Q9BYF1"/>
<dbReference type="STRING" id="9606.ENSP00000389326"/>
<dbReference type="BindingDB" id="Q9BYF1"/>
<dbReference type="ChEMBL" id="CHEMBL3736"/>
<dbReference type="DrugBank" id="DB09019">
    <property type="generic name" value="Bromhexine"/>
</dbReference>
<dbReference type="DrugBank" id="DB00608">
    <property type="generic name" value="Chloroquine"/>
</dbReference>
<dbReference type="DrugBank" id="DB01611">
    <property type="generic name" value="Hydroxychloroquine"/>
</dbReference>
<dbReference type="DrugBank" id="DB15643">
    <property type="generic name" value="N-(2-Aminoethyl)-1-aziridineethanamine"/>
</dbReference>
<dbReference type="DrugBank" id="DB12271">
    <property type="generic name" value="ORE-1001"/>
</dbReference>
<dbReference type="DrugBank" id="DB05203">
    <property type="generic name" value="SPP1148"/>
</dbReference>
<dbReference type="GuidetoPHARMACOLOGY" id="1614"/>
<dbReference type="MEROPS" id="M02.006"/>
<dbReference type="MoonProt" id="Q9BYF1"/>
<dbReference type="TCDB" id="2.A.22.6.3">
    <property type="family name" value="the neurotransmitter:sodium symporter (nss) family"/>
</dbReference>
<dbReference type="TCDB" id="8.A.139.1.1">
    <property type="family name" value="the angiotensin-converting enzyme 2 (ace2) family"/>
</dbReference>
<dbReference type="GlyConnect" id="1012">
    <property type="glycosylation" value="115 N-Linked glycans (3 sites), 1 O-Fuc glycan, 14 O-Linked glycans (1 site)"/>
</dbReference>
<dbReference type="GlyCosmos" id="Q9BYF1">
    <property type="glycosylation" value="8 sites, 161 glycans"/>
</dbReference>
<dbReference type="GlyGen" id="Q9BYF1">
    <property type="glycosylation" value="24 sites, 304 N-linked glycans (8 sites), 11 N-linked;o-linked glycans (7 sites), 35 O-linked glycans (11 sites)"/>
</dbReference>
<dbReference type="iPTMnet" id="Q9BYF1"/>
<dbReference type="PhosphoSitePlus" id="Q9BYF1"/>
<dbReference type="SwissPalm" id="Q9BYF1"/>
<dbReference type="BioMuta" id="ACE2"/>
<dbReference type="DMDM" id="71658783"/>
<dbReference type="jPOST" id="Q9BYF1"/>
<dbReference type="MassIVE" id="Q9BYF1"/>
<dbReference type="PaxDb" id="9606-ENSP00000389326"/>
<dbReference type="PeptideAtlas" id="Q9BYF1"/>
<dbReference type="ProteomicsDB" id="79634">
    <molecule id="Q9BYF1-1"/>
</dbReference>
<dbReference type="ABCD" id="Q9BYF1">
    <property type="antibodies" value="2 sequenced antibodies"/>
</dbReference>
<dbReference type="Antibodypedia" id="344">
    <property type="antibodies" value="1235 antibodies from 49 providers"/>
</dbReference>
<dbReference type="DNASU" id="59272"/>
<dbReference type="Ensembl" id="ENST00000252519.8">
    <molecule id="Q9BYF1-1"/>
    <property type="protein sequence ID" value="ENSP00000252519.3"/>
    <property type="gene ID" value="ENSG00000130234.13"/>
</dbReference>
<dbReference type="Ensembl" id="ENST00000427411.2">
    <molecule id="Q9BYF1-1"/>
    <property type="protein sequence ID" value="ENSP00000389326.1"/>
    <property type="gene ID" value="ENSG00000130234.13"/>
</dbReference>
<dbReference type="Ensembl" id="ENST00000677282.1">
    <molecule id="Q9BYF1-3"/>
    <property type="protein sequence ID" value="ENSP00000504747.1"/>
    <property type="gene ID" value="ENSG00000130234.13"/>
</dbReference>
<dbReference type="Ensembl" id="ENST00000678073.1">
    <molecule id="Q9BYF1-1"/>
    <property type="protein sequence ID" value="ENSP00000504103.1"/>
    <property type="gene ID" value="ENSG00000130234.13"/>
</dbReference>
<dbReference type="Ensembl" id="ENST00000680121.1">
    <molecule id="Q9BYF1-1"/>
    <property type="protein sequence ID" value="ENSP00000505992.1"/>
    <property type="gene ID" value="ENSG00000130234.13"/>
</dbReference>
<dbReference type="GeneID" id="59272"/>
<dbReference type="KEGG" id="hsa:59272"/>
<dbReference type="MANE-Select" id="ENST00000252519.8">
    <property type="protein sequence ID" value="ENSP00000252519.3"/>
    <property type="RefSeq nucleotide sequence ID" value="NM_001371415.1"/>
    <property type="RefSeq protein sequence ID" value="NP_001358344.1"/>
</dbReference>
<dbReference type="UCSC" id="uc004cxa.2">
    <molecule id="Q9BYF1-1"/>
    <property type="organism name" value="human"/>
</dbReference>
<dbReference type="AGR" id="HGNC:13557"/>
<dbReference type="CTD" id="59272"/>
<dbReference type="DisGeNET" id="59272"/>
<dbReference type="GeneCards" id="ACE2"/>
<dbReference type="HGNC" id="HGNC:13557">
    <property type="gene designation" value="ACE2"/>
</dbReference>
<dbReference type="HPA" id="ENSG00000130234">
    <property type="expression patterns" value="Tissue enhanced (gallbladder, intestine, kidney)"/>
</dbReference>
<dbReference type="MalaCards" id="ACE2"/>
<dbReference type="MIM" id="300335">
    <property type="type" value="gene"/>
</dbReference>
<dbReference type="neXtProt" id="NX_Q9BYF1"/>
<dbReference type="OpenTargets" id="ENSG00000130234"/>
<dbReference type="PharmGKB" id="PA425"/>
<dbReference type="VEuPathDB" id="HostDB:ENSG00000130234"/>
<dbReference type="eggNOG" id="KOG3690">
    <property type="taxonomic scope" value="Eukaryota"/>
</dbReference>
<dbReference type="GeneTree" id="ENSGT00940000158077"/>
<dbReference type="HOGENOM" id="CLU_014364_3_0_1"/>
<dbReference type="InParanoid" id="Q9BYF1"/>
<dbReference type="OMA" id="KWNERWW"/>
<dbReference type="OrthoDB" id="10029630at2759"/>
<dbReference type="PAN-GO" id="Q9BYF1">
    <property type="GO annotations" value="3 GO annotations based on evolutionary models"/>
</dbReference>
<dbReference type="PhylomeDB" id="Q9BYF1"/>
<dbReference type="TreeFam" id="TF312861"/>
<dbReference type="BioCyc" id="MetaCyc:ENSG00000130234-MONOMER"/>
<dbReference type="BRENDA" id="3.4.15.1">
    <property type="organism ID" value="2681"/>
</dbReference>
<dbReference type="BRENDA" id="3.4.17.23">
    <property type="organism ID" value="2681"/>
</dbReference>
<dbReference type="PathwayCommons" id="Q9BYF1"/>
<dbReference type="Reactome" id="R-HSA-2022377">
    <property type="pathway name" value="Metabolism of Angiotensinogen to Angiotensins"/>
</dbReference>
<dbReference type="Reactome" id="R-HSA-9678110">
    <property type="pathway name" value="Attachment and Entry"/>
</dbReference>
<dbReference type="Reactome" id="R-HSA-9679191">
    <property type="pathway name" value="Potential therapeutics for SARS"/>
</dbReference>
<dbReference type="Reactome" id="R-HSA-9694614">
    <property type="pathway name" value="Attachment and Entry"/>
</dbReference>
<dbReference type="Reactome" id="R-HSA-9733458">
    <property type="pathway name" value="Induction of Cell-Cell Fusion"/>
</dbReference>
<dbReference type="SABIO-RK" id="Q9BYF1"/>
<dbReference type="SignaLink" id="Q9BYF1"/>
<dbReference type="SIGNOR" id="Q9BYF1"/>
<dbReference type="BioGRID-ORCS" id="59272">
    <property type="hits" value="35 hits in 793 CRISPR screens"/>
</dbReference>
<dbReference type="ChiTaRS" id="ACE2">
    <property type="organism name" value="human"/>
</dbReference>
<dbReference type="EvolutionaryTrace" id="Q9BYF1"/>
<dbReference type="GeneWiki" id="Angiotensin-converting_enzyme_2"/>
<dbReference type="GenomeRNAi" id="59272"/>
<dbReference type="Pharos" id="Q9BYF1">
    <property type="development level" value="Tchem"/>
</dbReference>
<dbReference type="PRO" id="PR:Q9BYF1"/>
<dbReference type="Proteomes" id="UP000005640">
    <property type="component" value="Chromosome X"/>
</dbReference>
<dbReference type="RNAct" id="Q9BYF1">
    <property type="molecule type" value="protein"/>
</dbReference>
<dbReference type="Bgee" id="ENSG00000130234">
    <property type="expression patterns" value="Expressed in ileal mucosa and 96 other cell types or tissues"/>
</dbReference>
<dbReference type="ExpressionAtlas" id="Q9BYF1">
    <property type="expression patterns" value="baseline and differential"/>
</dbReference>
<dbReference type="GO" id="GO:0016324">
    <property type="term" value="C:apical plasma membrane"/>
    <property type="evidence" value="ECO:0000314"/>
    <property type="project" value="ARUK-UCL"/>
</dbReference>
<dbReference type="GO" id="GO:0031526">
    <property type="term" value="C:brush border membrane"/>
    <property type="evidence" value="ECO:0000314"/>
    <property type="project" value="ARUK-UCL"/>
</dbReference>
<dbReference type="GO" id="GO:0009986">
    <property type="term" value="C:cell surface"/>
    <property type="evidence" value="ECO:0000314"/>
    <property type="project" value="UniProtKB"/>
</dbReference>
<dbReference type="GO" id="GO:0005929">
    <property type="term" value="C:cilium"/>
    <property type="evidence" value="ECO:0007669"/>
    <property type="project" value="UniProtKB-SubCell"/>
</dbReference>
<dbReference type="GO" id="GO:0030666">
    <property type="term" value="C:endocytic vesicle membrane"/>
    <property type="evidence" value="ECO:0000304"/>
    <property type="project" value="Reactome"/>
</dbReference>
<dbReference type="GO" id="GO:0005788">
    <property type="term" value="C:endoplasmic reticulum lumen"/>
    <property type="evidence" value="ECO:0000304"/>
    <property type="project" value="Reactome"/>
</dbReference>
<dbReference type="GO" id="GO:0070062">
    <property type="term" value="C:extracellular exosome"/>
    <property type="evidence" value="ECO:0007005"/>
    <property type="project" value="UniProtKB"/>
</dbReference>
<dbReference type="GO" id="GO:0005576">
    <property type="term" value="C:extracellular region"/>
    <property type="evidence" value="ECO:0000314"/>
    <property type="project" value="UniProtKB"/>
</dbReference>
<dbReference type="GO" id="GO:0005615">
    <property type="term" value="C:extracellular space"/>
    <property type="evidence" value="ECO:0000314"/>
    <property type="project" value="BHF-UCL"/>
</dbReference>
<dbReference type="GO" id="GO:0016020">
    <property type="term" value="C:membrane"/>
    <property type="evidence" value="ECO:0000303"/>
    <property type="project" value="ComplexPortal"/>
</dbReference>
<dbReference type="GO" id="GO:0045121">
    <property type="term" value="C:membrane raft"/>
    <property type="evidence" value="ECO:0000304"/>
    <property type="project" value="BHF-UCL"/>
</dbReference>
<dbReference type="GO" id="GO:0005886">
    <property type="term" value="C:plasma membrane"/>
    <property type="evidence" value="ECO:0000314"/>
    <property type="project" value="UniProtKB"/>
</dbReference>
<dbReference type="GO" id="GO:0004180">
    <property type="term" value="F:carboxypeptidase activity"/>
    <property type="evidence" value="ECO:0000314"/>
    <property type="project" value="UniProtKB"/>
</dbReference>
<dbReference type="GO" id="GO:0004175">
    <property type="term" value="F:endopeptidase activity"/>
    <property type="evidence" value="ECO:0000314"/>
    <property type="project" value="UniProtKB"/>
</dbReference>
<dbReference type="GO" id="GO:0042802">
    <property type="term" value="F:identical protein binding"/>
    <property type="evidence" value="ECO:0000353"/>
    <property type="project" value="IntAct"/>
</dbReference>
<dbReference type="GO" id="GO:0004181">
    <property type="term" value="F:metallocarboxypeptidase activity"/>
    <property type="evidence" value="ECO:0007669"/>
    <property type="project" value="Ensembl"/>
</dbReference>
<dbReference type="GO" id="GO:0008237">
    <property type="term" value="F:metallopeptidase activity"/>
    <property type="evidence" value="ECO:0000314"/>
    <property type="project" value="UniProtKB"/>
</dbReference>
<dbReference type="GO" id="GO:0008241">
    <property type="term" value="F:peptidyl-dipeptidase activity"/>
    <property type="evidence" value="ECO:0000314"/>
    <property type="project" value="UniProtKB"/>
</dbReference>
<dbReference type="GO" id="GO:0141109">
    <property type="term" value="F:transporter activator activity"/>
    <property type="evidence" value="ECO:0000316"/>
    <property type="project" value="ARUK-UCL"/>
</dbReference>
<dbReference type="GO" id="GO:0001618">
    <property type="term" value="F:virus receptor activity"/>
    <property type="evidence" value="ECO:0000314"/>
    <property type="project" value="UniProtKB"/>
</dbReference>
<dbReference type="GO" id="GO:0008270">
    <property type="term" value="F:zinc ion binding"/>
    <property type="evidence" value="ECO:0000304"/>
    <property type="project" value="BHF-UCL"/>
</dbReference>
<dbReference type="GO" id="GO:0002003">
    <property type="term" value="P:angiotensin maturation"/>
    <property type="evidence" value="ECO:0000305"/>
    <property type="project" value="BHF-UCL"/>
</dbReference>
<dbReference type="GO" id="GO:0003051">
    <property type="term" value="P:angiotensin-mediated drinking behavior"/>
    <property type="evidence" value="ECO:0000315"/>
    <property type="project" value="BHF-UCL"/>
</dbReference>
<dbReference type="GO" id="GO:0097746">
    <property type="term" value="P:blood vessel diameter maintenance"/>
    <property type="evidence" value="ECO:0000305"/>
    <property type="project" value="BHF-UCL"/>
</dbReference>
<dbReference type="GO" id="GO:0098670">
    <property type="term" value="P:entry receptor-mediated virion attachment to host cell"/>
    <property type="evidence" value="ECO:0000314"/>
    <property type="project" value="UniProt"/>
</dbReference>
<dbReference type="GO" id="GO:0060135">
    <property type="term" value="P:maternal process involved in female pregnancy"/>
    <property type="evidence" value="ECO:0007669"/>
    <property type="project" value="Ensembl"/>
</dbReference>
<dbReference type="GO" id="GO:0061025">
    <property type="term" value="P:membrane fusion"/>
    <property type="evidence" value="ECO:0000303"/>
    <property type="project" value="ComplexPortal"/>
</dbReference>
<dbReference type="GO" id="GO:0070373">
    <property type="term" value="P:negative regulation of ERK1 and ERK2 cascade"/>
    <property type="evidence" value="ECO:0007669"/>
    <property type="project" value="Ensembl"/>
</dbReference>
<dbReference type="GO" id="GO:0048662">
    <property type="term" value="P:negative regulation of smooth muscle cell proliferation"/>
    <property type="evidence" value="ECO:0007669"/>
    <property type="project" value="Ensembl"/>
</dbReference>
<dbReference type="GO" id="GO:0000122">
    <property type="term" value="P:negative regulation of transcription by RNA polymerase II"/>
    <property type="evidence" value="ECO:0000314"/>
    <property type="project" value="BHF-UCL"/>
</dbReference>
<dbReference type="GO" id="GO:0051957">
    <property type="term" value="P:positive regulation of amino acid transport"/>
    <property type="evidence" value="ECO:0000315"/>
    <property type="project" value="UniProtKB"/>
</dbReference>
<dbReference type="GO" id="GO:0060452">
    <property type="term" value="P:positive regulation of cardiac muscle contraction"/>
    <property type="evidence" value="ECO:0007669"/>
    <property type="project" value="Ensembl"/>
</dbReference>
<dbReference type="GO" id="GO:1903598">
    <property type="term" value="P:positive regulation of gap junction assembly"/>
    <property type="evidence" value="ECO:0000315"/>
    <property type="project" value="BHF-UCL"/>
</dbReference>
<dbReference type="GO" id="GO:1905737">
    <property type="term" value="P:positive regulation of L-proline import across plasma membrane"/>
    <property type="evidence" value="ECO:0000316"/>
    <property type="project" value="ARUK-UCL"/>
</dbReference>
<dbReference type="GO" id="GO:2000379">
    <property type="term" value="P:positive regulation of reactive oxygen species metabolic process"/>
    <property type="evidence" value="ECO:0000305"/>
    <property type="project" value="BHF-UCL"/>
</dbReference>
<dbReference type="GO" id="GO:0019065">
    <property type="term" value="P:receptor-mediated endocytosis of virus by host cell"/>
    <property type="evidence" value="ECO:0000303"/>
    <property type="project" value="ComplexPortal"/>
</dbReference>
<dbReference type="GO" id="GO:0046813">
    <property type="term" value="P:receptor-mediated virion attachment to host cell"/>
    <property type="evidence" value="ECO:0000314"/>
    <property type="project" value="UniProtKB"/>
</dbReference>
<dbReference type="GO" id="GO:1903779">
    <property type="term" value="P:regulation of cardiac conduction"/>
    <property type="evidence" value="ECO:0000315"/>
    <property type="project" value="BHF-UCL"/>
</dbReference>
<dbReference type="GO" id="GO:0042127">
    <property type="term" value="P:regulation of cell population proliferation"/>
    <property type="evidence" value="ECO:0000304"/>
    <property type="project" value="BHF-UCL"/>
</dbReference>
<dbReference type="GO" id="GO:0001817">
    <property type="term" value="P:regulation of cytokine production"/>
    <property type="evidence" value="ECO:0000305"/>
    <property type="project" value="BHF-UCL"/>
</dbReference>
<dbReference type="GO" id="GO:0050727">
    <property type="term" value="P:regulation of inflammatory response"/>
    <property type="evidence" value="ECO:0000314"/>
    <property type="project" value="BHF-UCL"/>
</dbReference>
<dbReference type="GO" id="GO:0003081">
    <property type="term" value="P:regulation of systemic arterial blood pressure by renin-angiotensin"/>
    <property type="evidence" value="ECO:0000315"/>
    <property type="project" value="BHF-UCL"/>
</dbReference>
<dbReference type="GO" id="GO:0019229">
    <property type="term" value="P:regulation of vasoconstriction"/>
    <property type="evidence" value="ECO:0000305"/>
    <property type="project" value="BHF-UCL"/>
</dbReference>
<dbReference type="GO" id="GO:0046718">
    <property type="term" value="P:symbiont entry into host cell"/>
    <property type="evidence" value="ECO:0000314"/>
    <property type="project" value="UniProtKB"/>
</dbReference>
<dbReference type="GO" id="GO:0015827">
    <property type="term" value="P:tryptophan transport"/>
    <property type="evidence" value="ECO:0007669"/>
    <property type="project" value="Ensembl"/>
</dbReference>
<dbReference type="GO" id="GO:0019058">
    <property type="term" value="P:viral life cycle"/>
    <property type="evidence" value="ECO:0000303"/>
    <property type="project" value="ComplexPortal"/>
</dbReference>
<dbReference type="GO" id="GO:0019081">
    <property type="term" value="P:viral translation"/>
    <property type="evidence" value="ECO:0000304"/>
    <property type="project" value="UniProt"/>
</dbReference>
<dbReference type="CDD" id="cd06461">
    <property type="entry name" value="M2_ACE"/>
    <property type="match status" value="1"/>
</dbReference>
<dbReference type="DisProt" id="DP02854"/>
<dbReference type="FunFam" id="1.10.1370.30:FF:000001">
    <property type="entry name" value="Angiotensin-converting enzyme"/>
    <property type="match status" value="1"/>
</dbReference>
<dbReference type="Gene3D" id="1.10.1370.30">
    <property type="match status" value="1"/>
</dbReference>
<dbReference type="InterPro" id="IPR031588">
    <property type="entry name" value="Collectrin_dom"/>
</dbReference>
<dbReference type="InterPro" id="IPR001548">
    <property type="entry name" value="Peptidase_M2"/>
</dbReference>
<dbReference type="PANTHER" id="PTHR10514">
    <property type="entry name" value="ANGIOTENSIN-CONVERTING ENZYME"/>
    <property type="match status" value="1"/>
</dbReference>
<dbReference type="PANTHER" id="PTHR10514:SF24">
    <property type="entry name" value="ANGIOTENSIN-CONVERTING ENZYME 2"/>
    <property type="match status" value="1"/>
</dbReference>
<dbReference type="Pfam" id="PF16959">
    <property type="entry name" value="Collectrin"/>
    <property type="match status" value="1"/>
</dbReference>
<dbReference type="Pfam" id="PF01401">
    <property type="entry name" value="Peptidase_M2"/>
    <property type="match status" value="1"/>
</dbReference>
<dbReference type="PRINTS" id="PR00791">
    <property type="entry name" value="PEPDIPTASEA"/>
</dbReference>
<dbReference type="SUPFAM" id="SSF55486">
    <property type="entry name" value="Metalloproteases ('zincins'), catalytic domain"/>
    <property type="match status" value="1"/>
</dbReference>
<dbReference type="PROSITE" id="PS52010">
    <property type="entry name" value="COLLECTRIN_LIKE"/>
    <property type="match status" value="1"/>
</dbReference>
<dbReference type="PROSITE" id="PS52011">
    <property type="entry name" value="PEPTIDASE_M2"/>
    <property type="match status" value="1"/>
</dbReference>
<dbReference type="PROSITE" id="PS00142">
    <property type="entry name" value="ZINC_PROTEASE"/>
    <property type="match status" value="1"/>
</dbReference>
<keyword id="KW-0002">3D-structure</keyword>
<keyword id="KW-0025">Alternative splicing</keyword>
<keyword id="KW-0121">Carboxypeptidase</keyword>
<keyword id="KW-1003">Cell membrane</keyword>
<keyword id="KW-0966">Cell projection</keyword>
<keyword id="KW-0868">Chloride</keyword>
<keyword id="KW-0963">Cytoplasm</keyword>
<keyword id="KW-0903">Direct protein sequencing</keyword>
<keyword id="KW-1015">Disulfide bond</keyword>
<keyword id="KW-0325">Glycoprotein</keyword>
<keyword id="KW-1183">Host cell receptor for virus entry</keyword>
<keyword id="KW-0945">Host-virus interaction</keyword>
<keyword id="KW-0378">Hydrolase</keyword>
<keyword id="KW-1017">Isopeptide bond</keyword>
<keyword id="KW-0472">Membrane</keyword>
<keyword id="KW-0479">Metal-binding</keyword>
<keyword id="KW-0482">Metalloprotease</keyword>
<keyword id="KW-0597">Phosphoprotein</keyword>
<keyword id="KW-0645">Protease</keyword>
<keyword id="KW-1267">Proteomics identification</keyword>
<keyword id="KW-0675">Receptor</keyword>
<keyword id="KW-1185">Reference proteome</keyword>
<keyword id="KW-0964">Secreted</keyword>
<keyword id="KW-0732">Signal</keyword>
<keyword id="KW-0812">Transmembrane</keyword>
<keyword id="KW-1133">Transmembrane helix</keyword>
<keyword id="KW-0832">Ubl conjugation</keyword>
<keyword id="KW-0862">Zinc</keyword>
<sequence>MSSSSWLLLSLVAVTAAQSTIEEQAKTFLDKFNHEAEDLFYQSSLASWNYNTNITEENVQNMNNAGDKWSAFLKEQSTLAQMYPLQEIQNLTVKLQLQALQQNGSSVLSEDKSKRLNTILNTMSTIYSTGKVCNPDNPQECLLLEPGLNEIMANSLDYNERLWAWESWRSEVGKQLRPLYEEYVVLKNEMARANHYEDYGDYWRGDYEVNGVDGYDYSRGQLIEDVEHTFEEIKPLYEHLHAYVRAKLMNAYPSYISPIGCLPAHLLGDMWGRFWTNLYSLTVPFGQKPNIDVTDAMVDQAWDAQRIFKEAEKFFVSVGLPNMTQGFWENSMLTDPGNVQKAVCHPTAWDLGKGDFRILMCTKVTMDDFLTAHHEMGHIQYDMAYAAQPFLLRNGANEGFHEAVGEIMSLSAATPKHLKSIGLLSPDFQEDNETEINFLLKQALTIVGTLPFTYMLEKWRWMVFKGEIPKDQWMKKWWEMKREIVGVVEPVPHDETYCDPASLFHVSNDYSFIRYYTRTLYQFQFQEALCQAAKHEGPLHKCDISNSTEAGQKLFNMLRLGKSEPWTLALENVVGAKNMNVRPLLNYFEPLFTWLKDQNKNSFVGWSTDWSPYADQSIKVRISLKSALGDKAYEWNDNEMYLFRSSVAYAMRQYFLKVKNQMILFGEEDVRVANLKPRISFNFFVTAPKNVSDIIPRTEVEKAIRMSRSRINDAFRLNDNSLEFLGIQPTLGPPNQPPVSIWLIVFGVVMGVIVVGIVILIFTGIRDRKKKNKARSGENPYASIDISKGENNPGFQNTDDVQTSF</sequence>
<accession>Q9BYF1</accession>
<accession>A0A7D6JAD5</accession>
<accession>C7ECU1</accession>
<accession>Q6UWP0</accession>
<accession>Q86WT0</accession>
<accession>Q9NRA7</accession>
<accession>Q9UFZ6</accession>
<gene>
    <name evidence="83" type="primary">ACE2</name>
    <name type="ORF">UNQ868/PRO1885</name>
</gene>
<comment type="function">
    <text evidence="6 7 8 11 26 27 29 34">Essential counter-regulatory carboxypeptidase of the renin-angiotensin hormone system that is a critical regulator of blood volume, systemic vascular resistance, and thus cardiovascular homeostasis (PubMed:27217402). Converts angiotensin I to angiotensin 1-9, a nine-amino acid peptide with anti-hypertrophic effects in cardiomyocytes, and angiotensin II to angiotensin 1-7, which then acts as a beneficial vasodilator and anti-proliferation agent, counterbalancing the actions of the vasoconstrictor angiotensin II (PubMed:10924499, PubMed:10969042, PubMed:11815627, PubMed:14504186, PubMed:19021774). Also removes the C-terminal residue from three other vasoactive peptides, neurotensin, kinetensin, and des-Arg bradykinin, but is not active on bradykinin (PubMed:10969042, PubMed:11815627). Also cleaves other biological peptides, such as apelins (apelin-13, [Pyr1]apelin-13, apelin-17, apelin-36), casomorphins (beta-casomorphin-7, neocasomorphin) and dynorphin A with high efficiency (PubMed:11815627, PubMed:27217402, PubMed:28293165). In addition, ACE2 C-terminus is homologous to collectrin and is responsible for the trafficking of the neutral amino acid transporter SL6A19 to the plasma membrane of gut epithelial cells via direct interaction, regulating its expression on the cell surface and its catalytic activity (PubMed:18424768, PubMed:19185582).</text>
</comment>
<comment type="function">
    <text evidence="12 19 21 22 30 33 38 40 41 51 53 56">(Microbial infection) Acts as a receptor for human coronaviruses SARS-CoV and SARS-CoV-2, as well as human coronavirus NL63/HCoV-NL63.</text>
</comment>
<comment type="function">
    <molecule>Isoform 2</molecule>
    <text evidence="52">Non-functional as a carboxypeptidase.</text>
</comment>
<comment type="function">
    <molecule>Isoform 2</molecule>
    <text evidence="52 57">(Microbial infection) Non-functional as a receptor for human coronavirus SARS-CoV-2.</text>
</comment>
<comment type="catalytic activity">
    <reaction evidence="6 8 27 76">
        <text>angiotensin II + H2O = angiotensin-(1-7) + L-phenylalanine</text>
        <dbReference type="Rhea" id="RHEA:26554"/>
        <dbReference type="ChEBI" id="CHEBI:15377"/>
        <dbReference type="ChEBI" id="CHEBI:58095"/>
        <dbReference type="ChEBI" id="CHEBI:58506"/>
        <dbReference type="ChEBI" id="CHEBI:58922"/>
        <dbReference type="EC" id="3.4.17.23"/>
    </reaction>
    <physiologicalReaction direction="left-to-right" evidence="11">
        <dbReference type="Rhea" id="RHEA:26555"/>
    </physiologicalReaction>
</comment>
<comment type="catalytic activity">
    <reaction evidence="6 7 8 27">
        <text>angiotensin I + H2O = angiotensin-(1-9) + L-leucine</text>
        <dbReference type="Rhea" id="RHEA:63532"/>
        <dbReference type="ChEBI" id="CHEBI:15377"/>
        <dbReference type="ChEBI" id="CHEBI:57427"/>
        <dbReference type="ChEBI" id="CHEBI:147350"/>
        <dbReference type="ChEBI" id="CHEBI:147351"/>
    </reaction>
    <physiologicalReaction direction="left-to-right" evidence="73 74 75 78">
        <dbReference type="Rhea" id="RHEA:63533"/>
    </physiologicalReaction>
</comment>
<comment type="catalytic activity">
    <reaction evidence="7 8">
        <text>bradykinin(1-8) + H2O = bradykinin(1-7) + L-phenylalanine</text>
        <dbReference type="Rhea" id="RHEA:63536"/>
        <dbReference type="ChEBI" id="CHEBI:15377"/>
        <dbReference type="ChEBI" id="CHEBI:58095"/>
        <dbReference type="ChEBI" id="CHEBI:133069"/>
        <dbReference type="ChEBI" id="CHEBI:147352"/>
    </reaction>
    <physiologicalReaction direction="left-to-right" evidence="74 75">
        <dbReference type="Rhea" id="RHEA:63537"/>
    </physiologicalReaction>
</comment>
<comment type="catalytic activity">
    <reaction evidence="7">
        <text>neurotensin + H2O = neurotensin-(1-12) + L-leucine</text>
        <dbReference type="Rhea" id="RHEA:63540"/>
        <dbReference type="ChEBI" id="CHEBI:15377"/>
        <dbReference type="ChEBI" id="CHEBI:57427"/>
        <dbReference type="ChEBI" id="CHEBI:147362"/>
        <dbReference type="ChEBI" id="CHEBI:147363"/>
    </reaction>
    <physiologicalReaction direction="left-to-right" evidence="74">
        <dbReference type="Rhea" id="RHEA:63541"/>
    </physiologicalReaction>
</comment>
<comment type="catalytic activity">
    <reaction evidence="8">
        <text>neurotensin-(1-8) + H2O = neurotensin-(1-7) + L-arginine</text>
        <dbReference type="Rhea" id="RHEA:63572"/>
        <dbReference type="ChEBI" id="CHEBI:15377"/>
        <dbReference type="ChEBI" id="CHEBI:32682"/>
        <dbReference type="ChEBI" id="CHEBI:147393"/>
        <dbReference type="ChEBI" id="CHEBI:147394"/>
    </reaction>
    <physiologicalReaction direction="left-to-right" evidence="75">
        <dbReference type="Rhea" id="RHEA:63573"/>
    </physiologicalReaction>
</comment>
<comment type="catalytic activity">
    <reaction evidence="7">
        <text>kinetensin + H2O = kinetensin-(1-8) + L-leucine</text>
        <dbReference type="Rhea" id="RHEA:63544"/>
        <dbReference type="ChEBI" id="CHEBI:15377"/>
        <dbReference type="ChEBI" id="CHEBI:57427"/>
        <dbReference type="ChEBI" id="CHEBI:147364"/>
        <dbReference type="ChEBI" id="CHEBI:147365"/>
    </reaction>
    <physiologicalReaction direction="left-to-right" evidence="74">
        <dbReference type="Rhea" id="RHEA:63545"/>
    </physiologicalReaction>
</comment>
<comment type="catalytic activity">
    <reaction evidence="8">
        <text>dynorphin A-(1-13) + H2O = dynorphin A-(1-12) + L-lysine</text>
        <dbReference type="Rhea" id="RHEA:63556"/>
        <dbReference type="ChEBI" id="CHEBI:15377"/>
        <dbReference type="ChEBI" id="CHEBI:32551"/>
        <dbReference type="ChEBI" id="CHEBI:147381"/>
        <dbReference type="ChEBI" id="CHEBI:147383"/>
    </reaction>
    <physiologicalReaction direction="left-to-right" evidence="75">
        <dbReference type="Rhea" id="RHEA:63557"/>
    </physiologicalReaction>
</comment>
<comment type="catalytic activity">
    <reaction evidence="8">
        <text>apelin-13 + H2O = apelin-12 + L-phenylalanine</text>
        <dbReference type="Rhea" id="RHEA:63564"/>
        <dbReference type="ChEBI" id="CHEBI:15377"/>
        <dbReference type="ChEBI" id="CHEBI:58095"/>
        <dbReference type="ChEBI" id="CHEBI:147395"/>
        <dbReference type="ChEBI" id="CHEBI:147396"/>
    </reaction>
    <physiologicalReaction direction="left-to-right" evidence="75">
        <dbReference type="Rhea" id="RHEA:63565"/>
    </physiologicalReaction>
</comment>
<comment type="catalytic activity">
    <reaction evidence="34 35">
        <text>[Pyr1]apelin-13 + H2O = [Pyr1]apelin-12 + L-phenylalanine</text>
        <dbReference type="Rhea" id="RHEA:63604"/>
        <dbReference type="ChEBI" id="CHEBI:15377"/>
        <dbReference type="ChEBI" id="CHEBI:58095"/>
        <dbReference type="ChEBI" id="CHEBI:147415"/>
        <dbReference type="ChEBI" id="CHEBI:147416"/>
    </reaction>
    <physiologicalReaction direction="left-to-right" evidence="34">
        <dbReference type="Rhea" id="RHEA:63605"/>
    </physiologicalReaction>
</comment>
<comment type="catalytic activity">
    <reaction evidence="34">
        <text>apelin-17 + H2O = apelin-16 + L-phenylalanine</text>
        <dbReference type="Rhea" id="RHEA:63608"/>
        <dbReference type="ChEBI" id="CHEBI:15377"/>
        <dbReference type="ChEBI" id="CHEBI:58095"/>
        <dbReference type="ChEBI" id="CHEBI:147421"/>
        <dbReference type="ChEBI" id="CHEBI:147422"/>
    </reaction>
    <physiologicalReaction direction="left-to-right" evidence="34">
        <dbReference type="Rhea" id="RHEA:63609"/>
    </physiologicalReaction>
</comment>
<comment type="catalytic activity">
    <reaction evidence="8">
        <text>beta-casomorphin-7 + H2O = beta-casomorphin-6 + L-isoleucine</text>
        <dbReference type="Rhea" id="RHEA:63568"/>
        <dbReference type="ChEBI" id="CHEBI:15377"/>
        <dbReference type="ChEBI" id="CHEBI:58045"/>
        <dbReference type="ChEBI" id="CHEBI:147390"/>
        <dbReference type="ChEBI" id="CHEBI:147391"/>
    </reaction>
    <physiologicalReaction direction="left-to-right" evidence="75">
        <dbReference type="Rhea" id="RHEA:63569"/>
    </physiologicalReaction>
</comment>
<comment type="catalytic activity">
    <reaction evidence="8">
        <text>neocasomorphin + H2O = neocasomorphin-(1-5) + L-isoleucine</text>
        <dbReference type="Rhea" id="RHEA:63600"/>
        <dbReference type="ChEBI" id="CHEBI:15377"/>
        <dbReference type="ChEBI" id="CHEBI:58045"/>
        <dbReference type="ChEBI" id="CHEBI:147417"/>
        <dbReference type="ChEBI" id="CHEBI:147418"/>
    </reaction>
    <physiologicalReaction direction="left-to-right" evidence="75">
        <dbReference type="Rhea" id="RHEA:63601"/>
    </physiologicalReaction>
</comment>
<comment type="cofactor">
    <cofactor evidence="8">
        <name>Zn(2+)</name>
        <dbReference type="ChEBI" id="CHEBI:29105"/>
    </cofactor>
    <text evidence="8">Binds 1 zinc ion per subunit.</text>
</comment>
<comment type="cofactor">
    <cofactor evidence="8">
        <name>chloride</name>
        <dbReference type="ChEBI" id="CHEBI:17996"/>
    </cofactor>
    <text evidence="8">Binds 1 Cl(-) ion per subunit.</text>
</comment>
<comment type="activity regulation">
    <text evidence="6 7 8 9 17 27">Regulated by chloride and fluoride, but not bromide (PubMed:11815627). Chloride increases angiotensin I and decreases angiotensin II cleavage (PubMed:19021774). Inhibited by MLN-4760, cFP_Leu, and EDTA (PubMed:15231706, PubMed:10924499), but not by the ACE inhibitors lisinopril, captopril and enalaprilat (PubMed:10924499, PubMed:10969042). Highly potent and selective in vitro ACE2 inhibitors were identified (PubMed:12358520).</text>
</comment>
<comment type="biophysicochemical properties">
    <kinetics>
        <KM evidence="8">6.9 uM for angiotensin I</KM>
        <KM evidence="8">2 uM for angiotensin II</KM>
        <KM evidence="8">6.8 uM for apelin-13</KM>
        <KM evidence="8">290 uM for [des-Arg(9)]-bradykinin</KM>
        <KM evidence="8">130 uM for Lys-[des-Arg(9)]-bradykinin</KM>
        <KM evidence="8">31 uM for beta-casomorphin</KM>
        <KM evidence="8">5.5 uM for dynorphin A-(1-13)</KM>
        <KM evidence="8">300 uM for neurotensin-(1-8)</KM>
        <KM evidence="27">58.6 uM for angiotensin II</KM>
        <KM evidence="34">12 uM for [Pyr1]apelin-13</KM>
        <KM evidence="34">19 uM for apelin-17</KM>
        <Vmax evidence="27">28.7 nmol/min/mg enzyme with angiotensin II as substrate</Vmax>
        <text evidence="8 34">kcat is 0.034 sec(-1) with angiotensin I as substrate. kcat is 3.5 sec(-1) with angiotensin II as substrate. kcat is 13 sec(-1) with apelin-13 as substrate. kcat is 62 sec(-1) with [des-Arg(9)]-bradykinin as substrate. kcat is 26 sec(-1) with Lys-[des-Arg(9)]-bradykinin as substrate. kcat is 6.8 sec(-1) with beta-casomorphin as substrate. kcat is 16 sec(-1) with dynorphin A-(1-13) as substrate. kcat is 57 sec(-1) with neurotensin-(1-8) as substrate (PubMed:11815627). kcat is 19.1 sec(-1) with [Pyr1]apelin-13 as substrate. kcat is 7.7 sec(-1) with apelin-17 as substrate (PubMed:27217402).</text>
    </kinetics>
    <phDependence>
        <text evidence="8">Optimum pH is 6.5 in the presence of 1 M NaCl. Active from pH 6 to 9.</text>
    </phDependence>
</comment>
<comment type="subunit">
    <text evidence="1 18 31 37 54 58 60">Homodimer (PubMed:32132184). Interacts with the catalytically active form of TMPRSS2 (PubMed:21068237). Interacts with SLC6A19; this interaction is essential for expression and function of SLC6A19 in intestine (By similarity). Interacts with ITGA5:ITGB1 (PubMed:15276642, PubMed:33102950). Probably interacts (via endocytic sorting signal motif) with AP2M1; the interaction is inhibited by phosphorylation of Tyr-781 (PubMed:33436498). Interacts (via PDZ-binding motif) with NHERF1 (via PDZ domains); the interaction may enhance ACE2 membrane residence (PubMed:34189428).</text>
</comment>
<comment type="subunit">
    <text evidence="12 19 21 41">(Microbial infection) Interacts with SARS coronavirus/SARS-CoV spike protein.</text>
</comment>
<comment type="subunit">
    <text evidence="36 37 41 50 54 56 61 62 63">(Microbial infection) Interacts with SARS coronavirus-2/SARS-CoV-2 spike protein (via RBD domain).</text>
</comment>
<comment type="subunit">
    <text evidence="30">(Microbial infection) Interacts with human coronavirus NL63 spike protein.</text>
</comment>
<comment type="subunit">
    <text evidence="22">(Microbial infection) Interacts with human coronavirus NL63/HCoV-NL63 spike glycoprotein.</text>
</comment>
<comment type="subunit">
    <molecule>Processed angiotensin-converting enzyme 2</molecule>
    <text evidence="59">(Microbial infection) Interacts with SARS coronavirus-2/SARS-CoV-2 spike protein; the interaction is increased by AVP/Arg-vasopressin with which they may form a complex.</text>
</comment>
<comment type="interaction">
    <interactant intactId="EBI-7730807">
        <id>Q9BYF1</id>
    </interactant>
    <interactant intactId="EBI-7730807">
        <id>Q9BYF1</id>
        <label>ACE2</label>
    </interactant>
    <organismsDiffer>false</organismsDiffer>
    <experiments>5</experiments>
</comment>
<comment type="interaction">
    <interactant intactId="EBI-7730807">
        <id>Q9BYF1</id>
    </interactant>
    <interactant intactId="EBI-25493366">
        <id>PRO_0000032457</id>
        <label>AGT</label>
        <dbReference type="UniProtKB" id="P01019"/>
    </interactant>
    <organismsDiffer>false</organismsDiffer>
    <experiments>2</experiments>
</comment>
<comment type="interaction">
    <interactant intactId="EBI-7730807">
        <id>Q9BYF1</id>
    </interactant>
    <interactant intactId="EBI-6622938">
        <id>PRO_0000032458</id>
        <label>AGT</label>
        <dbReference type="UniProtKB" id="P01019"/>
    </interactant>
    <organismsDiffer>false</organismsDiffer>
    <experiments>5</experiments>
</comment>
<comment type="interaction">
    <interactant intactId="EBI-7730807">
        <id>Q9BYF1</id>
    </interactant>
    <interactant intactId="EBI-297683">
        <id>Q96CW1</id>
        <label>AP2M1</label>
    </interactant>
    <organismsDiffer>false</organismsDiffer>
    <experiments>2</experiments>
</comment>
<comment type="interaction">
    <interactant intactId="EBI-7730807">
        <id>Q9BYF1</id>
    </interactant>
    <interactant intactId="EBI-821758">
        <id>PRO_0000000092</id>
        <label>APP</label>
        <dbReference type="UniProtKB" id="P05067"/>
    </interactant>
    <organismsDiffer>false</organismsDiffer>
    <experiments>3</experiments>
</comment>
<comment type="interaction">
    <interactant intactId="EBI-7730807">
        <id>Q9BYF1</id>
    </interactant>
    <interactant intactId="EBI-1391211">
        <id>Q9H2X3</id>
        <label>CLEC4M</label>
    </interactant>
    <organismsDiffer>false</organismsDiffer>
    <experiments>3</experiments>
</comment>
<comment type="interaction">
    <interactant intactId="EBI-7730807">
        <id>Q9BYF1</id>
    </interactant>
    <interactant intactId="EBI-25634589">
        <id>PRO_0000417390</id>
        <label>DEFA5</label>
        <dbReference type="UniProtKB" id="Q01523"/>
    </interactant>
    <organismsDiffer>false</organismsDiffer>
    <experiments>2</experiments>
</comment>
<comment type="interaction">
    <interactant intactId="EBI-7730807">
        <id>Q9BYF1</id>
    </interactant>
    <interactant intactId="EBI-10232876">
        <id>Q14416</id>
        <label>GRM2</label>
    </interactant>
    <organismsDiffer>false</organismsDiffer>
    <experiments>2</experiments>
</comment>
<comment type="interaction">
    <interactant intactId="EBI-7730807">
        <id>Q9BYF1</id>
    </interactant>
    <interactant intactId="EBI-354921">
        <id>P11021</id>
        <label>HSPA5</label>
    </interactant>
    <organismsDiffer>false</organismsDiffer>
    <experiments>6</experiments>
</comment>
<comment type="interaction">
    <interactant intactId="EBI-7730807">
        <id>Q9BYF1</id>
    </interactant>
    <interactant intactId="EBI-703066">
        <id>P05556</id>
        <label>ITGB1</label>
    </interactant>
    <organismsDiffer>false</organismsDiffer>
    <experiments>4</experiments>
</comment>
<comment type="interaction">
    <interactant intactId="EBI-7730807">
        <id>Q9BYF1</id>
    </interactant>
    <interactant intactId="EBI-710124">
        <id>O60341</id>
        <label>KDM1A</label>
    </interactant>
    <organismsDiffer>false</organismsDiffer>
    <experiments>19</experiments>
</comment>
<comment type="interaction">
    <interactant intactId="EBI-7730807">
        <id>Q9BYF1</id>
    </interactant>
    <interactant intactId="EBI-6623273">
        <id>PRO_0000006688</id>
        <label>KNG1</label>
        <dbReference type="UniProtKB" id="P01042"/>
    </interactant>
    <organismsDiffer>false</organismsDiffer>
    <experiments>5</experiments>
</comment>
<comment type="interaction">
    <interactant intactId="EBI-7730807">
        <id>Q9BYF1</id>
    </interactant>
    <interactant intactId="EBI-349787">
        <id>O14745</id>
        <label>NHERF1</label>
    </interactant>
    <organismsDiffer>false</organismsDiffer>
    <experiments>7</experiments>
</comment>
<comment type="interaction">
    <interactant intactId="EBI-7730807">
        <id>Q9BYF1</id>
    </interactant>
    <interactant intactId="EBI-6655817">
        <id>PRO_0000019524</id>
        <label>NTS</label>
        <dbReference type="UniProtKB" id="P30990"/>
    </interactant>
    <organismsDiffer>false</organismsDiffer>
    <experiments>2</experiments>
</comment>
<comment type="interaction">
    <interactant intactId="EBI-7730807">
        <id>Q9BYF1</id>
    </interactant>
    <interactant intactId="EBI-349819">
        <id>Q5T2W1</id>
        <label>PDZK1</label>
    </interactant>
    <organismsDiffer>false</organismsDiffer>
    <experiments>3</experiments>
</comment>
<comment type="interaction">
    <interactant intactId="EBI-7730807">
        <id>Q9BYF1</id>
    </interactant>
    <interactant intactId="EBI-11316157">
        <id>P35247</id>
        <label>SFTPD</label>
    </interactant>
    <organismsDiffer>false</organismsDiffer>
    <experiments>2</experiments>
</comment>
<comment type="interaction">
    <interactant intactId="EBI-7730807">
        <id>Q9BYF1</id>
    </interactant>
    <interactant intactId="EBI-3442234">
        <id>Q9Y566</id>
        <label>SHANK1</label>
    </interactant>
    <organismsDiffer>false</organismsDiffer>
    <experiments>2</experiments>
</comment>
<comment type="interaction">
    <interactant intactId="EBI-7730807">
        <id>Q9BYF1</id>
    </interactant>
    <interactant intactId="EBI-25475705">
        <id>Q695T7</id>
        <label>SLC6A19</label>
    </interactant>
    <organismsDiffer>false</organismsDiffer>
    <experiments>4</experiments>
</comment>
<comment type="interaction">
    <interactant intactId="EBI-7730807">
        <id>Q9BYF1</id>
    </interactant>
    <interactant intactId="EBI-2514865">
        <id>Q96L92</id>
        <label>SNX27</label>
    </interactant>
    <organismsDiffer>false</organismsDiffer>
    <experiments>2</experiments>
</comment>
<comment type="interaction">
    <interactant intactId="EBI-7730807">
        <id>Q9BYF1</id>
    </interactant>
    <interactant intactId="EBI-12549863">
        <id>O15393</id>
        <label>TMPRSS2</label>
    </interactant>
    <organismsDiffer>false</organismsDiffer>
    <experiments>3</experiments>
</comment>
<comment type="interaction">
    <interactant intactId="EBI-7730807">
        <id>Q9BYF1</id>
    </interactant>
    <interactant intactId="EBI-353844">
        <id>P08670</id>
        <label>VIM</label>
    </interactant>
    <organismsDiffer>false</organismsDiffer>
    <experiments>4</experiments>
</comment>
<comment type="interaction">
    <interactant intactId="EBI-7730807">
        <id>Q9BYF1</id>
    </interactant>
    <interactant intactId="EBI-3043908">
        <id>P52293</id>
        <label>Kpna2</label>
    </interactant>
    <organismsDiffer>true</organismsDiffer>
    <experiments>4</experiments>
</comment>
<comment type="interaction">
    <interactant intactId="EBI-7730807">
        <id>Q9BYF1</id>
    </interactant>
    <interactant intactId="EBI-26997256">
        <id>A0A6G6A1M4</id>
        <label>S</label>
    </interactant>
    <organismsDiffer>true</organismsDiffer>
    <experiments>4</experiments>
</comment>
<comment type="interaction">
    <interactant intactId="EBI-7730807">
        <id>Q9BYF1</id>
    </interactant>
    <interactant intactId="EBI-26997195">
        <id>A0A6M3G9R1</id>
        <label>S</label>
    </interactant>
    <organismsDiffer>true</organismsDiffer>
    <experiments>4</experiments>
</comment>
<comment type="interaction">
    <interactant intactId="EBI-7730807">
        <id>Q9BYF1</id>
    </interactant>
    <interactant intactId="EBI-25474821">
        <id>P0DTC2</id>
        <label>S</label>
    </interactant>
    <organismsDiffer>true</organismsDiffer>
    <experiments>242</experiments>
</comment>
<comment type="interaction">
    <interactant intactId="EBI-7730807">
        <id>Q9BYF1</id>
    </interactant>
    <interactant intactId="EBI-25490323">
        <id>PRO_0000449647</id>
        <label>S</label>
        <dbReference type="UniProtKB" id="P0DTC2"/>
    </interactant>
    <organismsDiffer>true</organismsDiffer>
    <experiments>2</experiments>
</comment>
<comment type="interaction">
    <interactant intactId="EBI-7730807">
        <id>Q9BYF1</id>
    </interactant>
    <interactant intactId="EBI-15582614">
        <id>P59594</id>
        <label>S</label>
    </interactant>
    <organismsDiffer>true</organismsDiffer>
    <experiments>56</experiments>
</comment>
<comment type="interaction">
    <interactant intactId="EBI-7730807">
        <id>Q9BYF1</id>
    </interactant>
    <interactant intactId="EBI-25475261">
        <id>PRO_0000037209</id>
        <label>S</label>
        <dbReference type="UniProtKB" id="P59594"/>
    </interactant>
    <organismsDiffer>true</organismsDiffer>
    <experiments>3</experiments>
</comment>
<comment type="interaction">
    <interactant intactId="EBI-7730807">
        <id>Q9BYF1</id>
    </interactant>
    <interactant intactId="EBI-25566398">
        <id>Q5GDB5</id>
        <label>S</label>
    </interactant>
    <organismsDiffer>true</organismsDiffer>
    <experiments>2</experiments>
</comment>
<comment type="interaction">
    <interactant intactId="EBI-7730807">
        <id>Q9BYF1</id>
    </interactant>
    <interactant intactId="EBI-15814420">
        <id>Q6Q1S2</id>
        <label>S</label>
    </interactant>
    <organismsDiffer>true</organismsDiffer>
    <experiments>9</experiments>
</comment>
<comment type="subcellular location">
    <molecule>Processed angiotensin-converting enzyme 2</molecule>
    <subcellularLocation>
        <location evidence="24 59">Secreted</location>
    </subcellularLocation>
</comment>
<comment type="subcellular location">
    <subcellularLocation>
        <location evidence="26">Cell membrane</location>
        <topology evidence="2">Single-pass type I membrane protein</topology>
    </subcellularLocation>
    <subcellularLocation>
        <location evidence="1">Cytoplasm</location>
    </subcellularLocation>
    <subcellularLocation>
        <location evidence="57">Cell projection</location>
        <location evidence="57">Cilium</location>
    </subcellularLocation>
    <subcellularLocation>
        <location evidence="57">Apical cell membrane</location>
    </subcellularLocation>
    <text evidence="1">Detected in both cell membrane and cytoplasm in neurons.</text>
</comment>
<comment type="subcellular location">
    <molecule>Isoform 2</molecule>
    <subcellularLocation>
        <location evidence="57">Apical cell membrane</location>
    </subcellularLocation>
</comment>
<comment type="alternative products">
    <event type="alternative splicing"/>
    <isoform>
        <id>Q9BYF1-1</id>
        <name>1</name>
        <name evidence="70">long</name>
        <sequence type="displayed"/>
    </isoform>
    <isoform>
        <id>Q9BYF1-3</id>
        <name>2</name>
        <name evidence="69">delta</name>
        <name evidence="69">dACE2</name>
        <name evidence="70">short</name>
        <sequence type="described" ref="VSP_060903"/>
    </isoform>
</comment>
<comment type="tissue specificity">
    <text evidence="6 7 10 15 17 20 26 39 42 43 44 45 46 47 49 57">Expressed in endothelial cells from small and large arteries, and in arterial smooth muscle cells (at protein level) (PubMed:15141377). Expressed in enterocytes of the small intestine, Leydig cells and Sertoli cells (at protein level) (PubMed:15141377). Expressed in the renal proximal tubule and the small intestine (at protein level) (PubMed:18424768). Expressed in heart, kidney, testis, and gastrointestinal system (at protein level) (PubMed:10924499, PubMed:10969042, PubMed:12459472, PubMed:15231706, PubMed:15671045, PubMed:32170560, PubMed:32715618). In lung, expressed at low levels in some alveolar type 2 cells, the expression seems to be individual-specific (at protein level) (PubMed:15141377, PubMed:32170560, PubMed:32425701, PubMed:32715618, PubMed:33432184). Expressed in nasal epithelial cells (at protein level) (PubMed:32333915, PubMed:33432184). Coexpressed with TMPRSS2 within some lung alveolar type 2 cells, ileal absorptive enterocytes, intestinal epithelial cells, cornea, gallbladder and nasal goblet secretory cells (PubMed:32327758, PubMed:32358202, PubMed:32413319). Coexpressed with TMPRSS4 within mature enterocytes (PubMed:32404436).</text>
</comment>
<comment type="tissue specificity">
    <molecule>Isoform 2</molecule>
    <text evidence="57">Expressed in nasal and bronchial epithelial cells (at protein level).</text>
</comment>
<comment type="induction">
    <text evidence="11 16 20 43 46 47">Up-regulated in failing heart (PubMed:14504186, PubMed:15151696, PubMed:15671045). Expression is induced by IFNA and IFNG (PubMed:32413319, PubMed:32425701). Exposure to cigarette smoke increases expression in lungs (PubMed:32425701). Expression is decreased in nasal and bronchial epithelium of individuals with allergy after allergen challenge (PubMed:32333915). IL13 stimulation decreases expression in nasal and bronchial epithelium (PubMed:32333915).</text>
</comment>
<comment type="induction">
    <molecule>Isoform 1</molecule>
    <text evidence="52">Not induced by interferons such as IFNA, IFNB and IFNG.</text>
</comment>
<comment type="induction">
    <molecule>Isoform 2</molecule>
    <text evidence="52">Expression is induced by interferons such as IFNA, IFNB and IFNG. It seems that isoform 2 is an interferon-stimulated gene (ISG) but not isoform 1.</text>
</comment>
<comment type="induction">
    <text evidence="46">(Microbial infection) In airway epithelial cells, expression is increased upon influenza A virus infection (PubMed:32413319).</text>
</comment>
<comment type="induction">
    <molecule>Isoform 2</molecule>
    <text evidence="52 57">(Microbial infection) In airway epithelial cells, expression is induced by viruses such rhinoviruses and influenza virus.</text>
</comment>
<comment type="induction">
    <molecule>Isoform 2</molecule>
    <text evidence="52">(Microbial infection) Induced by human coronavirus SARS-CoV-2.</text>
</comment>
<comment type="domain">
    <text evidence="13">The extracellular region of the ACE2 enzyme is composed of two domains. The first is a zinc metallopeptidase domain (residues 19-611). The second domain is located at the C-terminus (residues 612-740) and is 48% identical to human collectrin.</text>
</comment>
<comment type="domain">
    <text evidence="80 81">The cytoplasmic tail contains several linear motifs such as LIR, PDZ-binding, PTB and endocytic sorting signal motifs that would allow interaction with proteins that mediate endocytic trafficking and autophagy.</text>
</comment>
<comment type="PTM">
    <text evidence="6 12 13 14 28">N-glycosylation on Asn-90 may limit SARS infectivity.</text>
</comment>
<comment type="PTM">
    <text evidence="24 31 32 33 37 59">Proteolytic cleavage by ADAM17 generates a secreted form (PubMed:15983030, PubMed:33713620). Also cleaved by serine proteases: TMPRSS2, TMPRSS11D and HPN/TMPRSS1.</text>
</comment>
<comment type="PTM">
    <text evidence="80 81">Phosphorylated. Phosphorylation at Tyr-781 probably inhibits interaction with AP2M1 and enables interactions with proteins containing SH2 domains.</text>
</comment>
<comment type="PTM">
    <text evidence="64">Ubiquitinated. Ubiquitinated on Lys-788 via 'Lys-48'-linked ubiquitin (PubMed:36876523). 'Lys-48'-linked deubiquitinated by USP50 on the Lys-788; leading to its stabilization (PubMed:36876523).</text>
</comment>
<comment type="biotechnology">
    <text evidence="50">An engeneered stable, dimeric and secreted receptor with combined mutations that increase the affinity for human coronavirus SARS-CoV-2 spike protein shows potent SARS-CoV and SARS-CoV-2 neutralization in vitro.</text>
</comment>
<comment type="similarity">
    <text evidence="72">Belongs to the peptidase M2 family.</text>
</comment>
<comment type="sequence caution" evidence="72">
    <conflict type="miscellaneous discrepancy">
        <sequence resource="EMBL-CDS" id="AAQ89076"/>
    </conflict>
</comment>
<comment type="online information" name="Protein Spotlight">
    <link uri="https://www.proteinspotlight.org/back_issues/223/"/>
    <text>A way in - Issue 223 of March 2020</text>
</comment>
<feature type="signal peptide" evidence="2">
    <location>
        <begin position="1"/>
        <end position="17"/>
    </location>
</feature>
<feature type="chain" id="PRO_0000028570" description="Angiotensin-converting enzyme 2">
    <location>
        <begin position="18"/>
        <end position="805"/>
    </location>
</feature>
<feature type="chain" id="PRO_0000292268" description="Processed angiotensin-converting enzyme 2">
    <location>
        <begin position="18"/>
        <end position="708"/>
    </location>
</feature>
<feature type="topological domain" description="Extracellular" evidence="2">
    <location>
        <begin position="18"/>
        <end position="740"/>
    </location>
</feature>
<feature type="transmembrane region" description="Helical" evidence="3">
    <location>
        <begin position="741"/>
        <end position="761"/>
    </location>
</feature>
<feature type="topological domain" description="Cytoplasmic" evidence="2">
    <location>
        <begin position="762"/>
        <end position="805"/>
    </location>
</feature>
<feature type="domain" description="Peptidase M2" evidence="4">
    <location>
        <begin position="19"/>
        <end position="607"/>
    </location>
</feature>
<feature type="domain" description="Collectrin-like" evidence="3">
    <location>
        <begin position="614"/>
        <end position="805"/>
    </location>
</feature>
<feature type="region of interest" description="Interaction with SARS-CoV spike glycoprotein" evidence="21">
    <location>
        <begin position="30"/>
        <end position="41"/>
    </location>
</feature>
<feature type="region of interest" description="Interaction with SARS-CoV spike glycoprotein" evidence="21">
    <location>
        <begin position="82"/>
        <end position="84"/>
    </location>
</feature>
<feature type="region of interest" description="Interaction with SARS-CoV spike glycoprotein" evidence="21">
    <location>
        <begin position="353"/>
        <end position="357"/>
    </location>
</feature>
<feature type="region of interest" description="Essential for cleavage by ADAM17" evidence="33">
    <location>
        <begin position="652"/>
        <end position="659"/>
    </location>
</feature>
<feature type="region of interest" description="Essential for cleavage by TMPRSS11D and TMPRSS2" evidence="33">
    <location>
        <begin position="697"/>
        <end position="716"/>
    </location>
</feature>
<feature type="region of interest" description="Disordered" evidence="5">
    <location>
        <begin position="772"/>
        <end position="805"/>
    </location>
</feature>
<feature type="short sequence motif" description="LIR" evidence="80 81">
    <location>
        <begin position="778"/>
        <end position="786"/>
    </location>
</feature>
<feature type="short sequence motif" description="SH2-binding" evidence="80 81">
    <location>
        <begin position="781"/>
        <end position="785"/>
    </location>
</feature>
<feature type="short sequence motif" description="Endocytic sorting signal" evidence="80 81">
    <location>
        <begin position="781"/>
        <end position="784"/>
    </location>
</feature>
<feature type="short sequence motif" description="PTB" evidence="80 81">
    <location>
        <begin position="792"/>
        <end position="795"/>
    </location>
</feature>
<feature type="short sequence motif" description="PDZ-binding" evidence="80 81">
    <location>
        <begin position="803"/>
        <end position="805"/>
    </location>
</feature>
<feature type="compositionally biased region" description="Polar residues" evidence="5">
    <location>
        <begin position="789"/>
        <end position="805"/>
    </location>
</feature>
<feature type="active site" description="Proton acceptor" evidence="4 77 79">
    <location>
        <position position="375"/>
    </location>
</feature>
<feature type="active site" description="Proton donor" evidence="4 77">
    <location>
        <position position="505"/>
    </location>
</feature>
<feature type="binding site" evidence="4 13 78">
    <location>
        <position position="169"/>
    </location>
    <ligand>
        <name>chloride</name>
        <dbReference type="ChEBI" id="CHEBI:17996"/>
    </ligand>
</feature>
<feature type="binding site" evidence="77">
    <location>
        <position position="273"/>
    </location>
    <ligand>
        <name>substrate</name>
    </ligand>
</feature>
<feature type="binding site" evidence="77">
    <location>
        <begin position="345"/>
        <end position="346"/>
    </location>
    <ligand>
        <name>substrate</name>
    </ligand>
</feature>
<feature type="binding site" evidence="4 13">
    <location>
        <position position="374"/>
    </location>
    <ligand>
        <name>Zn(2+)</name>
        <dbReference type="ChEBI" id="CHEBI:29105"/>
        <note>catalytic</note>
    </ligand>
</feature>
<feature type="binding site" evidence="4 13">
    <location>
        <position position="378"/>
    </location>
    <ligand>
        <name>Zn(2+)</name>
        <dbReference type="ChEBI" id="CHEBI:29105"/>
        <note>catalytic</note>
    </ligand>
</feature>
<feature type="binding site" evidence="4 13">
    <location>
        <position position="402"/>
    </location>
    <ligand>
        <name>Zn(2+)</name>
        <dbReference type="ChEBI" id="CHEBI:29105"/>
        <note>catalytic</note>
    </ligand>
</feature>
<feature type="binding site" evidence="4 13 78">
    <location>
        <position position="477"/>
    </location>
    <ligand>
        <name>chloride</name>
        <dbReference type="ChEBI" id="CHEBI:17996"/>
    </ligand>
</feature>
<feature type="binding site" evidence="4 13 78">
    <location>
        <position position="481"/>
    </location>
    <ligand>
        <name>chloride</name>
        <dbReference type="ChEBI" id="CHEBI:17996"/>
    </ligand>
</feature>
<feature type="binding site" evidence="77">
    <location>
        <position position="515"/>
    </location>
    <ligand>
        <name>substrate</name>
    </ligand>
</feature>
<feature type="modified residue" description="Phosphotyrosine" evidence="80 81">
    <location>
        <position position="781"/>
    </location>
</feature>
<feature type="modified residue" description="Phosphoserine" evidence="80 81">
    <location>
        <position position="783"/>
    </location>
</feature>
<feature type="glycosylation site" description="N-linked (GlcNAc...) asparagine" evidence="77">
    <location>
        <position position="53"/>
    </location>
</feature>
<feature type="glycosylation site" description="N-linked (GlcNAc...) asparagine" evidence="13 14 30">
    <location>
        <position position="90"/>
    </location>
</feature>
<feature type="glycosylation site" description="N-linked (GlcNAc...) asparagine" evidence="13">
    <location>
        <position position="103"/>
    </location>
</feature>
<feature type="glycosylation site" description="N-linked (GlcNAc...) asparagine" evidence="77">
    <location>
        <position position="322"/>
    </location>
</feature>
<feature type="glycosylation site" description="N-linked (GlcNAc...) asparagine" evidence="13">
    <location>
        <position position="432"/>
    </location>
</feature>
<feature type="glycosylation site" description="N-linked (GlcNAc...) asparagine" evidence="13 28 30">
    <location>
        <position position="546"/>
    </location>
</feature>
<feature type="glycosylation site" description="N-linked (GlcNAc...) asparagine" evidence="2">
    <location>
        <position position="690"/>
    </location>
</feature>
<feature type="disulfide bond" evidence="4 13">
    <location>
        <begin position="133"/>
        <end position="141"/>
    </location>
</feature>
<feature type="disulfide bond" evidence="4 13">
    <location>
        <begin position="344"/>
        <end position="361"/>
    </location>
</feature>
<feature type="disulfide bond" evidence="4 13">
    <location>
        <begin position="530"/>
        <end position="542"/>
    </location>
</feature>
<feature type="cross-link" description="Glycyl lysine isopeptide (Lys-Gly) (interchain with G-Cter in ubiquitin)" evidence="64">
    <location>
        <position position="788"/>
    </location>
</feature>
<feature type="splice variant" id="VSP_060903" description="In isoform 2.">
    <original>MSSSSWLLLSLVAVTAAQSTIEEQAKTFLDKFNHEAEDLFYQSSLASWNYNTNITEENVQNMNNAGDKWSAFLKEQSTLAQMYPLQEIQNLTVKLQLQALQQNGSSVLSEDKSKRLNTILNTMSTIYSTGKVCNPDNPQECLLLEPGLNEIMANSLDYNERLWAWESWRSEVGKQLRPLYEEYVVLKNEMARANHYEDYGDYWRGDYEVNGVDGYDYSRGQLIEDVEHTFEEIKPLYEHLHAYVRAKLMNAYPSYISPIGCLPAHLLGDMWGRFWTNLYSLTVPFGQKPNIDVTDAMVDQAWDAQRIFKEAEKFFVSVGLPNMTQGFWENSMLTDPGNVQKAVCHPTAWDLGKGDF</original>
    <variation>MREAGWDKGG</variation>
    <location>
        <begin position="1"/>
        <end position="356"/>
    </location>
</feature>
<feature type="sequence variant" id="VAR_023082" description="In dbSNP:rs4646116." evidence="48 65">
    <original>K</original>
    <variation>R</variation>
    <location>
        <position position="26"/>
    </location>
</feature>
<feature type="sequence variant" id="VAR_083726" evidence="48">
    <original>I</original>
    <variation>V</variation>
    <location>
        <position position="468"/>
    </location>
</feature>
<feature type="sequence variant" id="VAR_023083" description="In dbSNP:rs183135788." evidence="23 48">
    <original>N</original>
    <variation>S</variation>
    <location>
        <position position="638"/>
    </location>
</feature>
<feature type="sequence variant" id="VAR_083727" evidence="48 55">
    <original>N</original>
    <variation>D</variation>
    <location>
        <position position="720"/>
    </location>
</feature>
<feature type="mutagenesis site" description="Increases slightly the interaction with RBD domain of SARS-CoV-2 spike protein." evidence="50">
    <original>S</original>
    <variation>P</variation>
    <location>
        <position position="19"/>
    </location>
</feature>
<feature type="mutagenesis site" description="Slightly inhibits interaction with SARS-CoV spike glycoprotein." evidence="21">
    <original>QAK</original>
    <variation>KAE</variation>
    <location>
        <begin position="24"/>
        <end position="26"/>
    </location>
</feature>
<feature type="mutagenesis site" description="Increases slightly the interaction with RBD domain of SARS-CoV-2 spike protein." evidence="50">
    <original>Q</original>
    <variation>T</variation>
    <location>
        <position position="24"/>
    </location>
</feature>
<feature type="mutagenesis site" description="Increases slightly the interaction with RBD domain of SARS-CoV-2 spike protein." evidence="50">
    <original>A</original>
    <variation>V</variation>
    <location>
        <position position="25"/>
    </location>
</feature>
<feature type="mutagenesis site" description="Increases slightly the interaction with RBD domain of SARS-CoV-2 spike protein. In sACE2.v2.2; increases interaction with RBD domain of SARS-CoV-2 spike protein; when associated with Y-330 and L-386." evidence="50">
    <original>T</original>
    <variation>Y</variation>
    <location>
        <position position="27"/>
    </location>
</feature>
<feature type="mutagenesis site" description="Increases slightly the interaction with RBD domain of SARS-CoV-2 spike protein." evidence="50">
    <original>L</original>
    <variation>F</variation>
    <location>
        <position position="29"/>
    </location>
</feature>
<feature type="mutagenesis site" description="Abolishes interaction with SARS-CoV spike glycoprotein." evidence="21">
    <original>K</original>
    <variation>D</variation>
    <location>
        <position position="31"/>
    </location>
</feature>
<feature type="mutagenesis site" description="Increases slightly the interaction with RBD domain of SARS-CoV-2 spike protein." evidence="50">
    <original>K</original>
    <variation>Y</variation>
    <location>
        <position position="31"/>
    </location>
</feature>
<feature type="mutagenesis site" description="Increases slightly the interaction with RBD domain of SARS-CoV-2 spike protein." evidence="50">
    <original>N</original>
    <variation>D</variation>
    <location>
        <position position="33"/>
    </location>
</feature>
<feature type="mutagenesis site" description="Increases slightly the interaction with RBD domain of SARS-CoV-2 spike protein." evidence="50">
    <original>H</original>
    <variation>A</variation>
    <location>
        <position position="34"/>
    </location>
</feature>
<feature type="mutagenesis site" description="No effect on interaction with SARS-CoV spike glycoprotein." evidence="21">
    <original>E</original>
    <variation>A</variation>
    <location>
        <position position="37"/>
    </location>
</feature>
<feature type="mutagenesis site" description="No effect on interaction with SARS-CoV spike glycoprotein." evidence="21">
    <original>D</original>
    <variation>A</variation>
    <location>
        <position position="38"/>
    </location>
</feature>
<feature type="mutagenesis site" description="Increases slightly the interaction with RBD domain of SARS-CoV-2 spike protein." evidence="50">
    <original>L</original>
    <variation>R</variation>
    <location>
        <position position="39"/>
    </location>
</feature>
<feature type="mutagenesis site" description="Increases slightly the interaction with RBD domain of SARS-CoV-2 spike protein." evidence="50">
    <original>F</original>
    <variation>D</variation>
    <location>
        <position position="40"/>
    </location>
</feature>
<feature type="mutagenesis site" description="Strongly inhibits interaction with SARS-CoV spike glycoprotein." evidence="21">
    <original>Y</original>
    <variation>A</variation>
    <location>
        <position position="41"/>
    </location>
</feature>
<feature type="mutagenesis site" description="Increases slightly the interaction with RBD domain of SARS-CoV-2 spike protein." evidence="50">
    <original>Y</original>
    <variation>R</variation>
    <location>
        <position position="41"/>
    </location>
</feature>
<feature type="mutagenesis site" description="Increases slightly the interaction with RBD domain of SARS-CoV-2 spike protein." evidence="50">
    <original>Q</original>
    <variation>L</variation>
    <location>
        <position position="42"/>
    </location>
</feature>
<feature type="mutagenesis site" description="Slightly inhibits interaction with SARS-CoV spike glycoprotein." evidence="21">
    <original>K</original>
    <variation>D</variation>
    <location>
        <position position="68"/>
    </location>
</feature>
<feature type="mutagenesis site" description="Increases slightly the interaction with RBD domain of SARS-CoV-2 spike protein." evidence="50">
    <original>W</original>
    <variation>V</variation>
    <location>
        <position position="69"/>
    </location>
</feature>
<feature type="mutagenesis site" description="Increases slightly the interaction with RBD domain of SARS-CoV-2 spike protein." evidence="50">
    <original>F</original>
    <variation>Y</variation>
    <location>
        <position position="72"/>
    </location>
</feature>
<feature type="mutagenesis site" description="Increases slightly the interaction with RBD domain of SARS-CoV-2 spike protein." evidence="50">
    <original>E</original>
    <variation>K</variation>
    <location>
        <position position="75"/>
    </location>
</feature>
<feature type="mutagenesis site" description="Increases slightly the interaction with RBD domain of SARS-CoV-2 spike protein." evidence="50">
    <original>Q</original>
    <variation>T</variation>
    <location>
        <position position="76"/>
    </location>
</feature>
<feature type="mutagenesis site" description="Increases slightly the interaction with RBD domain of SARS-CoV-2 spike protein." evidence="50">
    <original>L</original>
    <variation>T</variation>
    <location>
        <position position="79"/>
    </location>
</feature>
<feature type="mutagenesis site" description="Inhibits interaction with SARS-CoV spike glycoprotein." evidence="21">
    <original>MYP</original>
    <variation>NFS</variation>
    <location>
        <begin position="82"/>
        <end position="84"/>
    </location>
</feature>
<feature type="mutagenesis site" description="Increases slightly the interaction with RBD domain of SARS-CoV-2 spike protein." evidence="50">
    <original>Q</original>
    <variation>P</variation>
    <location>
        <position position="89"/>
    </location>
</feature>
<feature type="mutagenesis site" description="Increases slightly the interaction with RBD domain of SARS-CoV-2 spike protein." evidence="50">
    <original>N</original>
    <variation>Q</variation>
    <location>
        <position position="90"/>
    </location>
</feature>
<feature type="mutagenesis site" description="Increases slightly the interaction with RBD domain of SARS-CoV-2 spike protein." evidence="50">
    <original>L</original>
    <variation>P</variation>
    <location>
        <position position="91"/>
    </location>
</feature>
<feature type="mutagenesis site" description="Increases slightly the interaction with RBD domain of SARS-CoV-2 spike protein." evidence="50">
    <original>T</original>
    <variation>Q</variation>
    <location>
        <position position="92"/>
    </location>
</feature>
<feature type="mutagenesis site" description="No effect on interaction with SARS-CoV spike glycoprotein." evidence="21">
    <original>E</original>
    <variation>P</variation>
    <location>
        <position position="110"/>
    </location>
</feature>
<feature type="mutagenesis site" description="No effect on interaction with SARS-CoV spike glycoprotein." evidence="21">
    <original>PD</original>
    <variation>SM</variation>
    <location>
        <begin position="135"/>
        <end position="136"/>
    </location>
</feature>
<feature type="mutagenesis site" description="No effect on interaction with SARS-CoV spike glycoprotein." evidence="21">
    <original>E</original>
    <variation>R</variation>
    <location>
        <position position="160"/>
    </location>
</feature>
<feature type="mutagenesis site" description="About 95% loss of angiotensin I cleavage." evidence="27">
    <original>R</original>
    <variation>Q</variation>
    <location>
        <position position="169"/>
    </location>
</feature>
<feature type="mutagenesis site" description="No effect on interaction with SARS-CoV spike glycoprotein." evidence="21">
    <original>R</original>
    <variation>D</variation>
    <location>
        <position position="192"/>
    </location>
</feature>
<feature type="mutagenesis site" description="No effect on interaction with SARS-CoV spike glycoprotein." evidence="21">
    <original>R</original>
    <variation>D</variation>
    <location>
        <position position="219"/>
    </location>
</feature>
<feature type="mutagenesis site" description="No effect on interaction with SARS-CoV spike glycoprotein." evidence="21">
    <original>H</original>
    <variation>Q</variation>
    <location>
        <position position="239"/>
    </location>
</feature>
<feature type="mutagenesis site" description="About 95% loss of angiotensin I cleavage." evidence="27">
    <original>W</original>
    <variation>Q</variation>
    <location>
        <position position="271"/>
    </location>
</feature>
<feature type="mutagenesis site" description="Complete loss of enzyme activity. Does not affect amino acid transport activity of SLC6A19." evidence="25 29">
    <original>R</original>
    <variation>Q</variation>
    <location>
        <position position="273"/>
    </location>
</feature>
<feature type="mutagenesis site" description="No effect on interaction with SARS-CoV spike glycoprotein." evidence="21">
    <original>K</original>
    <variation>D</variation>
    <location>
        <position position="309"/>
    </location>
</feature>
<feature type="mutagenesis site" description="No effect on interaction with SARS-CoV spike glycoprotein." evidence="21">
    <original>E</original>
    <variation>A</variation>
    <location>
        <position position="312"/>
    </location>
</feature>
<feature type="mutagenesis site" description="No effect on interaction with SARS-CoV spike glycoprotein." evidence="21">
    <original>T</original>
    <variation>A</variation>
    <location>
        <position position="324"/>
    </location>
</feature>
<feature type="mutagenesis site" description="Increases slightly the interaction with RBD domain of SARS-CoV-2 spike protein." evidence="50">
    <original>T</original>
    <variation>P</variation>
    <location>
        <position position="324"/>
    </location>
</feature>
<feature type="mutagenesis site" description="Increases slightly the interaction with RBD domain of SARS-CoV-2 spike protein." evidence="50">
    <original>Q</original>
    <variation>P</variation>
    <location>
        <position position="325"/>
    </location>
</feature>
<feature type="mutagenesis site" description="Increases slightly the interaction with RBD domain of SARS-CoV-2 spike protein. In sACE2.v2.2; increases interaction with RBD domain of SARS-CoV-2 spike protein; when associated with Y-27 and L-386." evidence="50">
    <original>N</original>
    <variation>Y</variation>
    <location>
        <position position="330"/>
    </location>
</feature>
<feature type="mutagenesis site" description="No effect on interaction with SARS-CoV spike glycoprotein." evidence="21">
    <original>NVQ</original>
    <variation>DDR</variation>
    <location>
        <begin position="338"/>
        <end position="340"/>
    </location>
</feature>
<feature type="mutagenesis site" description="Complete loss of enzyme activity." evidence="25">
    <original>H</original>
    <variation>A</variation>
    <location>
        <position position="345"/>
    </location>
</feature>
<feature type="mutagenesis site" description="No effect on interaction with SARS-CoV spike glycoprotein." evidence="21">
    <original>D</original>
    <variation>A</variation>
    <location>
        <position position="350"/>
    </location>
</feature>
<feature type="mutagenesis site" description="Increases slightly the interaction with RBD domain of SARS-CoV-2 spike protein." evidence="50">
    <original>L</original>
    <variation>F</variation>
    <location>
        <position position="351"/>
    </location>
</feature>
<feature type="mutagenesis site" description="Abolishes interaction with SARS-CoV spike glycoprotein." evidence="21">
    <original>K</original>
    <variation>H</variation>
    <variation>A</variation>
    <variation>D</variation>
    <location>
        <position position="353"/>
    </location>
</feature>
<feature type="mutagenesis site" description="Strongly inhibits interaction with SARS-CoV spike glycoprotein." evidence="21">
    <original>D</original>
    <variation>A</variation>
    <location>
        <position position="355"/>
    </location>
</feature>
<feature type="mutagenesis site" description="Strongly inhibits interaction with SARS-CoV spike glycoprotein." evidence="21">
    <original>R</original>
    <variation>A</variation>
    <location>
        <position position="357"/>
    </location>
</feature>
<feature type="mutagenesis site" description="No effect on interaction with SARS-CoV spike glycoprotein." evidence="21">
    <original>L</original>
    <variation>K</variation>
    <variation>A</variation>
    <location>
        <position position="359"/>
    </location>
</feature>
<feature type="mutagenesis site" description="Slightly inhibits interaction with SARS-CoV spike glycoprotein." evidence="21">
    <original>M</original>
    <variation>A</variation>
    <location>
        <position position="383"/>
    </location>
</feature>
<feature type="mutagenesis site" description="Increases slightly the interaction with RBD domain of SARS-CoV-2 spike protein. In sACE2.v2.2; increases interaction with RBD domain of SARS-CoV-2 spike protein; when associated with Y-27 and Y-330." evidence="50">
    <original>A</original>
    <variation>L</variation>
    <location>
        <position position="386"/>
    </location>
</feature>
<feature type="mutagenesis site" description="Slightly inhibits interaction with SARS-CoV spike glycoprotein." evidence="21">
    <original>P</original>
    <variation>A</variation>
    <location>
        <position position="389"/>
    </location>
</feature>
<feature type="mutagenesis site" description="Increases very slightly the interaction with RBD domain of SARS-CoV-2 spike protein." evidence="50">
    <original>P</original>
    <variation>D</variation>
    <location>
        <position position="389"/>
    </location>
</feature>
<feature type="mutagenesis site" description="Slightly inhibits interaction with SARS-CoV spike glycoprotein." evidence="21">
    <original>R</original>
    <variation>A</variation>
    <location>
        <position position="393"/>
    </location>
</feature>
<feature type="mutagenesis site" description="Increases very slightly the interaction with RBD domain of SARS-CoV-2 spike protein." evidence="50">
    <original>R</original>
    <variation>K</variation>
    <location>
        <position position="393"/>
    </location>
</feature>
<feature type="mutagenesis site" description="Slightly inhibits interaction with SARS-CoV spike glycoprotein." evidence="21">
    <original>SPD</original>
    <variation>PSN</variation>
    <location>
        <begin position="425"/>
        <end position="427"/>
    </location>
</feature>
<feature type="mutagenesis site" description="No effect on interaction with SARS-CoV spike glycoprotein." evidence="21">
    <original>KGE</original>
    <variation>QDK</variation>
    <location>
        <begin position="465"/>
        <end position="467"/>
    </location>
</feature>
<feature type="mutagenesis site" description="About 80% loss of angiotensin I cleavage." evidence="27">
    <original>K</original>
    <variation>Q</variation>
    <location>
        <position position="481"/>
    </location>
</feature>
<feature type="mutagenesis site" description="Complete loss of enzyme activity." evidence="25">
    <original>H</original>
    <variation>A</variation>
    <location>
        <position position="505"/>
    </location>
</feature>
<feature type="mutagenesis site" description="About 50% loss of angiotensin I cleavage but two-fold greater activity with angiotensin II." evidence="27">
    <original>R</original>
    <variation>Q</variation>
    <location>
        <position position="514"/>
    </location>
</feature>
<feature type="mutagenesis site" description="Increases very slightly the interaction with RBD domain of SARS-CoV-2 spike protein." evidence="50">
    <original>R</original>
    <variation>G</variation>
    <location>
        <position position="518"/>
    </location>
</feature>
<feature type="mutagenesis site" description="Slightly inhibits interaction with SARS-CoV spike glycoprotein." evidence="21">
    <original>R</original>
    <variation>S</variation>
    <location>
        <position position="559"/>
    </location>
</feature>
<feature type="mutagenesis site" description="No effect on interaction with SARS-CoV spike glycoprotein." evidence="21">
    <original>F</original>
    <variation>T</variation>
    <location>
        <position position="603"/>
    </location>
</feature>
<feature type="mutagenesis site" description="Increases ACE2 protein stability." evidence="64">
    <original>K</original>
    <variation>R</variation>
    <location>
        <position position="788"/>
    </location>
</feature>
<feature type="mutagenesis site" description="Loss of interaction with NHERF1." evidence="60">
    <original>QTSF</original>
    <variation>AAAA</variation>
    <location>
        <begin position="802"/>
        <end position="805"/>
    </location>
</feature>
<feature type="sequence conflict" description="In Ref. 13; CAB53682." evidence="72" ref="13">
    <original>Q</original>
    <variation>H</variation>
    <location>
        <position position="18"/>
    </location>
</feature>
<feature type="sequence conflict" description="In Ref. 9; AAQ89076." evidence="72" ref="9">
    <original>N</original>
    <variation>D</variation>
    <location>
        <position position="508"/>
    </location>
</feature>
<feature type="sequence conflict" description="In Ref. 5; BAB40370." evidence="72" ref="5">
    <original>K</original>
    <variation>R</variation>
    <location>
        <position position="631"/>
    </location>
</feature>
<feature type="helix" evidence="107">
    <location>
        <begin position="21"/>
        <end position="52"/>
    </location>
</feature>
<feature type="helix" evidence="107">
    <location>
        <begin position="56"/>
        <end position="79"/>
    </location>
</feature>
<feature type="helix" evidence="107">
    <location>
        <begin position="80"/>
        <end position="82"/>
    </location>
</feature>
<feature type="helix" evidence="107">
    <location>
        <begin position="85"/>
        <end position="87"/>
    </location>
</feature>
<feature type="helix" evidence="107">
    <location>
        <begin position="91"/>
        <end position="102"/>
    </location>
</feature>
<feature type="turn" evidence="111">
    <location>
        <begin position="104"/>
        <end position="107"/>
    </location>
</feature>
<feature type="helix" evidence="107">
    <location>
        <begin position="110"/>
        <end position="129"/>
    </location>
</feature>
<feature type="strand" evidence="107">
    <location>
        <begin position="131"/>
        <end position="133"/>
    </location>
</feature>
<feature type="strand" evidence="107">
    <location>
        <begin position="135"/>
        <end position="139"/>
    </location>
</feature>
<feature type="strand" evidence="107">
    <location>
        <begin position="141"/>
        <end position="143"/>
    </location>
</feature>
<feature type="turn" evidence="107">
    <location>
        <begin position="144"/>
        <end position="146"/>
    </location>
</feature>
<feature type="helix" evidence="107">
    <location>
        <begin position="147"/>
        <end position="154"/>
    </location>
</feature>
<feature type="helix" evidence="107">
    <location>
        <begin position="158"/>
        <end position="171"/>
    </location>
</feature>
<feature type="helix" evidence="107">
    <location>
        <begin position="173"/>
        <end position="192"/>
    </location>
</feature>
<feature type="turn" evidence="107">
    <location>
        <begin position="193"/>
        <end position="195"/>
    </location>
</feature>
<feature type="strand" evidence="110">
    <location>
        <begin position="196"/>
        <end position="198"/>
    </location>
</feature>
<feature type="helix" evidence="107">
    <location>
        <begin position="199"/>
        <end position="204"/>
    </location>
</feature>
<feature type="helix" evidence="107">
    <location>
        <begin position="205"/>
        <end position="207"/>
    </location>
</feature>
<feature type="turn" evidence="97">
    <location>
        <begin position="213"/>
        <end position="215"/>
    </location>
</feature>
<feature type="helix" evidence="107">
    <location>
        <begin position="219"/>
        <end position="251"/>
    </location>
</feature>
<feature type="turn" evidence="105">
    <location>
        <begin position="253"/>
        <end position="255"/>
    </location>
</feature>
<feature type="strand" evidence="111">
    <location>
        <begin position="258"/>
        <end position="260"/>
    </location>
</feature>
<feature type="helix" evidence="107">
    <location>
        <begin position="264"/>
        <end position="266"/>
    </location>
</feature>
<feature type="strand" evidence="107">
    <location>
        <begin position="267"/>
        <end position="273"/>
    </location>
</feature>
<feature type="helix" evidence="107">
    <location>
        <begin position="276"/>
        <end position="278"/>
    </location>
</feature>
<feature type="helix" evidence="107">
    <location>
        <begin position="279"/>
        <end position="282"/>
    </location>
</feature>
<feature type="turn" evidence="105">
    <location>
        <begin position="284"/>
        <end position="287"/>
    </location>
</feature>
<feature type="helix" evidence="107">
    <location>
        <begin position="294"/>
        <end position="299"/>
    </location>
</feature>
<feature type="helix" evidence="107">
    <location>
        <begin position="304"/>
        <end position="317"/>
    </location>
</feature>
<feature type="helix" evidence="107">
    <location>
        <begin position="325"/>
        <end position="330"/>
    </location>
</feature>
<feature type="strand" evidence="108">
    <location>
        <begin position="332"/>
        <end position="334"/>
    </location>
</feature>
<feature type="strand" evidence="107">
    <location>
        <begin position="338"/>
        <end position="340"/>
    </location>
</feature>
<feature type="strand" evidence="107">
    <location>
        <begin position="347"/>
        <end position="352"/>
    </location>
</feature>
<feature type="strand" evidence="107">
    <location>
        <begin position="355"/>
        <end position="359"/>
    </location>
</feature>
<feature type="helix" evidence="107">
    <location>
        <begin position="366"/>
        <end position="384"/>
    </location>
</feature>
<feature type="helix" evidence="107">
    <location>
        <begin position="385"/>
        <end position="387"/>
    </location>
</feature>
<feature type="helix" evidence="107">
    <location>
        <begin position="390"/>
        <end position="392"/>
    </location>
</feature>
<feature type="strand" evidence="103">
    <location>
        <begin position="396"/>
        <end position="399"/>
    </location>
</feature>
<feature type="helix" evidence="107">
    <location>
        <begin position="400"/>
        <end position="412"/>
    </location>
</feature>
<feature type="helix" evidence="107">
    <location>
        <begin position="415"/>
        <end position="420"/>
    </location>
</feature>
<feature type="strand" evidence="106">
    <location>
        <begin position="422"/>
        <end position="424"/>
    </location>
</feature>
<feature type="turn" evidence="104">
    <location>
        <begin position="426"/>
        <end position="428"/>
    </location>
</feature>
<feature type="helix" evidence="107">
    <location>
        <begin position="432"/>
        <end position="465"/>
    </location>
</feature>
<feature type="strand" evidence="109">
    <location>
        <begin position="466"/>
        <end position="468"/>
    </location>
</feature>
<feature type="helix" evidence="107">
    <location>
        <begin position="470"/>
        <end position="472"/>
    </location>
</feature>
<feature type="helix" evidence="107">
    <location>
        <begin position="473"/>
        <end position="483"/>
    </location>
</feature>
<feature type="strand" evidence="98">
    <location>
        <begin position="486"/>
        <end position="488"/>
    </location>
</feature>
<feature type="strand" evidence="101">
    <location>
        <begin position="494"/>
        <end position="496"/>
    </location>
</feature>
<feature type="helix" evidence="107">
    <location>
        <begin position="500"/>
        <end position="502"/>
    </location>
</feature>
<feature type="helix" evidence="107">
    <location>
        <begin position="504"/>
        <end position="507"/>
    </location>
</feature>
<feature type="helix" evidence="107">
    <location>
        <begin position="514"/>
        <end position="532"/>
    </location>
</feature>
<feature type="strand" evidence="102">
    <location>
        <begin position="534"/>
        <end position="537"/>
    </location>
</feature>
<feature type="helix" evidence="107">
    <location>
        <begin position="539"/>
        <end position="541"/>
    </location>
</feature>
<feature type="helix" evidence="107">
    <location>
        <begin position="548"/>
        <end position="558"/>
    </location>
</feature>
<feature type="turn" evidence="107">
    <location>
        <begin position="559"/>
        <end position="562"/>
    </location>
</feature>
<feature type="helix" evidence="107">
    <location>
        <begin position="566"/>
        <end position="574"/>
    </location>
</feature>
<feature type="strand" evidence="97">
    <location>
        <begin position="575"/>
        <end position="578"/>
    </location>
</feature>
<feature type="helix" evidence="107">
    <location>
        <begin position="582"/>
        <end position="587"/>
    </location>
</feature>
<feature type="helix" evidence="107">
    <location>
        <begin position="589"/>
        <end position="598"/>
    </location>
</feature>
<feature type="helix" evidence="107">
    <location>
        <begin position="599"/>
        <end position="601"/>
    </location>
</feature>
<feature type="strand" evidence="111">
    <location>
        <begin position="607"/>
        <end position="609"/>
    </location>
</feature>
<feature type="turn" evidence="99">
    <location>
        <begin position="612"/>
        <end position="615"/>
    </location>
</feature>
<feature type="strand" evidence="99">
    <location>
        <begin position="618"/>
        <end position="622"/>
    </location>
</feature>
<feature type="helix" evidence="99">
    <location>
        <begin position="624"/>
        <end position="627"/>
    </location>
</feature>
<feature type="strand" evidence="100">
    <location>
        <begin position="629"/>
        <end position="631"/>
    </location>
</feature>
<feature type="helix" evidence="99">
    <location>
        <begin position="637"/>
        <end position="657"/>
    </location>
</feature>
<feature type="helix" evidence="99">
    <location>
        <begin position="667"/>
        <end position="669"/>
    </location>
</feature>
<feature type="strand" evidence="99">
    <location>
        <begin position="670"/>
        <end position="673"/>
    </location>
</feature>
<feature type="strand" evidence="99">
    <location>
        <begin position="677"/>
        <end position="686"/>
    </location>
</feature>
<feature type="strand" evidence="100">
    <location>
        <begin position="690"/>
        <end position="694"/>
    </location>
</feature>
<feature type="helix" evidence="99">
    <location>
        <begin position="697"/>
        <end position="706"/>
    </location>
</feature>
<feature type="helix" evidence="99">
    <location>
        <begin position="708"/>
        <end position="715"/>
    </location>
</feature>
<feature type="strand" evidence="99">
    <location>
        <begin position="719"/>
        <end position="724"/>
    </location>
</feature>
<feature type="helix" evidence="99">
    <location>
        <begin position="741"/>
        <end position="765"/>
    </location>
</feature>
<organism>
    <name type="scientific">Homo sapiens</name>
    <name type="common">Human</name>
    <dbReference type="NCBI Taxonomy" id="9606"/>
    <lineage>
        <taxon>Eukaryota</taxon>
        <taxon>Metazoa</taxon>
        <taxon>Chordata</taxon>
        <taxon>Craniata</taxon>
        <taxon>Vertebrata</taxon>
        <taxon>Euteleostomi</taxon>
        <taxon>Mammalia</taxon>
        <taxon>Eutheria</taxon>
        <taxon>Euarchontoglires</taxon>
        <taxon>Primates</taxon>
        <taxon>Haplorrhini</taxon>
        <taxon>Catarrhini</taxon>
        <taxon>Hominidae</taxon>
        <taxon>Homo</taxon>
    </lineage>
</organism>
<name>ACE2_HUMAN</name>
<protein>
    <recommendedName>
        <fullName>Angiotensin-converting enzyme 2</fullName>
        <ecNumber evidence="6 8 27">3.4.17.23</ecNumber>
    </recommendedName>
    <alternativeName>
        <fullName evidence="66">Angiotensin-converting enzyme homolog</fullName>
        <shortName evidence="66">ACEH</shortName>
    </alternativeName>
    <alternativeName>
        <fullName evidence="67">Angiotensin-converting enzyme-related carboxypeptidase</fullName>
        <shortName>ACE-related carboxypeptidase</shortName>
        <ecNumber evidence="6 7 8 27 34 35 52">3.4.17.-</ecNumber>
    </alternativeName>
    <alternativeName>
        <fullName evidence="71">Metalloprotease MPROT15</fullName>
    </alternativeName>
    <component>
        <recommendedName>
            <fullName evidence="68">Processed angiotensin-converting enzyme 2</fullName>
        </recommendedName>
    </component>
</protein>